<comment type="function">
    <text evidence="3 4 9 14 23 25 26 27">Repair polymerase that plays a key role in base-excision repair (PubMed:10556592, PubMed:9207062, PubMed:9572863). During this process, the damaged base is excised by specific DNA glycosylases, the DNA backbone is nicked at the abasic site by an apurinic/apyrimidic (AP) endonuclease, and POLB removes 5'-deoxyribose-phosphate from the preincised AP site acting as a 5'-deoxyribose-phosphate lyase (5'-dRP lyase); through its DNA polymerase activity, it adds one nucleotide to the 3' end of the arising single-nucleotide gap (PubMed:10556592, PubMed:17526740, PubMed:9556598, PubMed:9572863, PubMed:9614142). Conducts 'gap-filling' DNA synthesis in a stepwise distributive fashion rather than in a processive fashion as for other DNA polymerases. It is also able to cleave sugar-phosphate bonds 3' to an intact AP site, acting as an AP lyase (PubMed:9614142).</text>
</comment>
<comment type="catalytic activity">
    <reaction>
        <text>DNA(n) + a 2'-deoxyribonucleoside 5'-triphosphate = DNA(n+1) + diphosphate</text>
        <dbReference type="Rhea" id="RHEA:22508"/>
        <dbReference type="Rhea" id="RHEA-COMP:17339"/>
        <dbReference type="Rhea" id="RHEA-COMP:17340"/>
        <dbReference type="ChEBI" id="CHEBI:33019"/>
        <dbReference type="ChEBI" id="CHEBI:61560"/>
        <dbReference type="ChEBI" id="CHEBI:173112"/>
        <dbReference type="EC" id="2.7.7.7"/>
    </reaction>
</comment>
<comment type="catalytic activity">
    <reaction evidence="26 27">
        <text>a 5'-end 2'-deoxyribose-2'-deoxyribonucleotide-DNA = (2E,4S)-4-hydroxypenten-2-al-5-phosphate + a 5'-end 5'-phospho-2'-deoxyribonucleoside-DNA + H(+)</text>
        <dbReference type="Rhea" id="RHEA:76255"/>
        <dbReference type="Rhea" id="RHEA-COMP:13180"/>
        <dbReference type="Rhea" id="RHEA-COMP:18657"/>
        <dbReference type="ChEBI" id="CHEBI:15378"/>
        <dbReference type="ChEBI" id="CHEBI:136412"/>
        <dbReference type="ChEBI" id="CHEBI:195194"/>
        <dbReference type="ChEBI" id="CHEBI:195195"/>
    </reaction>
</comment>
<comment type="catalytic activity">
    <reaction evidence="27">
        <text>2'-deoxyribonucleotide-(2'-deoxyribose 5'-phosphate)-2'-deoxyribonucleotide-DNA = a 3'-end 2'-deoxyribonucleotide-(2,3-dehydro-2,3-deoxyribose 5'-phosphate)-DNA + a 5'-end 5'-phospho-2'-deoxyribonucleoside-DNA + H(+)</text>
        <dbReference type="Rhea" id="RHEA:66592"/>
        <dbReference type="Rhea" id="RHEA-COMP:13180"/>
        <dbReference type="Rhea" id="RHEA-COMP:16897"/>
        <dbReference type="Rhea" id="RHEA-COMP:17067"/>
        <dbReference type="ChEBI" id="CHEBI:15378"/>
        <dbReference type="ChEBI" id="CHEBI:136412"/>
        <dbReference type="ChEBI" id="CHEBI:157695"/>
        <dbReference type="ChEBI" id="CHEBI:167181"/>
        <dbReference type="EC" id="4.2.99.18"/>
    </reaction>
</comment>
<comment type="cofactor">
    <cofactor evidence="24">
        <name>Mg(2+)</name>
        <dbReference type="ChEBI" id="CHEBI:18420"/>
    </cofactor>
    <text evidence="24">Binds 2 magnesium ions per subunit.</text>
</comment>
<comment type="biophysicochemical properties">
    <kinetics>
        <KM evidence="27">0.3 uM for DNA with an intact AP site</KM>
        <KM evidence="27">0.5 uM for DNA with a preincised AP site</KM>
        <text evidence="27">kcat is 0.075 sec(-1) for 5'-deoxyribose-phosphate lyase activity (at pH 7.0 and 37 degrees Celsius) (PubMed:9614142). kcat is 0.004 sec(-1) for AP lyase activity (at pH 7.0 and 37 degrees Celsius) (PubMed:9614142).</text>
    </kinetics>
    <phDependence>
        <text evidence="27">Optimum pH is 7-9 for 5'-deoxyribose-phosphate lyase activity.</text>
    </phDependence>
</comment>
<comment type="subunit">
    <text evidence="5 12 14 16 17 21 22 23 24 25">Monomer. Binds single-stranded DNA (ssDNA) (PubMed:9556598). Interacts with APEX1, LIG1, LIG3, FEN1, PCNA and XRCC1 (PubMed:19336415, PubMed:26760506, PubMed:9207062). Interacts with HUWE1/ARF-BP1, STUB1/CHIP and USP47. Interacts with FAM168A (PubMed:19336415, PubMed:25260657, PubMed:26760506).</text>
</comment>
<comment type="interaction">
    <interactant intactId="EBI-713836">
        <id>P06746</id>
    </interactant>
    <interactant intactId="EBI-716128">
        <id>Q9H5J8</id>
        <label>TAF1D</label>
    </interactant>
    <organismsDiffer>false</organismsDiffer>
    <experiments>4</experiments>
</comment>
<comment type="interaction">
    <interactant intactId="EBI-713836">
        <id>P06746</id>
    </interactant>
    <interactant intactId="EBI-1044672">
        <id>P29144</id>
        <label>TPP2</label>
    </interactant>
    <organismsDiffer>false</organismsDiffer>
    <experiments>8</experiments>
</comment>
<comment type="interaction">
    <interactant intactId="EBI-713836">
        <id>P06746</id>
    </interactant>
    <interactant intactId="EBI-720609">
        <id>O76024</id>
        <label>WFS1</label>
    </interactant>
    <organismsDiffer>false</organismsDiffer>
    <experiments>3</experiments>
</comment>
<comment type="interaction">
    <interactant intactId="EBI-713836">
        <id>P06746</id>
    </interactant>
    <interactant intactId="EBI-947466">
        <id>P18887</id>
        <label>XRCC1</label>
    </interactant>
    <organismsDiffer>false</organismsDiffer>
    <experiments>5</experiments>
</comment>
<comment type="subcellular location">
    <subcellularLocation>
        <location>Nucleus</location>
    </subcellularLocation>
    <subcellularLocation>
        <location>Cytoplasm</location>
    </subcellularLocation>
    <text>Cytoplasmic in normal conditions. Translocates to the nucleus following DNA damage.</text>
</comment>
<comment type="domain">
    <text evidence="1">Residues 239-252 form a flexible loop which appears to affect the polymerase fidelity.</text>
</comment>
<comment type="PTM">
    <text evidence="8">Methylation by PRMT6 stimulates the polymerase activity by enhancing DNA binding and processivity.</text>
</comment>
<comment type="PTM">
    <text evidence="13 14">Ubiquitinated at Lys-41, Lys-61 and Lys-81: monoubiquitinated by HUWE1/ARF-BP1. Monoubiquitinated protein is then the target of STUB1/CHIP, which catalyzes polyubiquitination from monoubiquitin, leading to degradation by the proteasome. USP47 mediates the deubiquitination of monoubiquitinated protein, preventing polyubiquitination by STUB1/CHIP and its subsequent degradation.</text>
</comment>
<comment type="similarity">
    <text evidence="30">Belongs to the DNA polymerase type-X family.</text>
</comment>
<organism>
    <name type="scientific">Homo sapiens</name>
    <name type="common">Human</name>
    <dbReference type="NCBI Taxonomy" id="9606"/>
    <lineage>
        <taxon>Eukaryota</taxon>
        <taxon>Metazoa</taxon>
        <taxon>Chordata</taxon>
        <taxon>Craniata</taxon>
        <taxon>Vertebrata</taxon>
        <taxon>Euteleostomi</taxon>
        <taxon>Mammalia</taxon>
        <taxon>Eutheria</taxon>
        <taxon>Euarchontoglires</taxon>
        <taxon>Primates</taxon>
        <taxon>Haplorrhini</taxon>
        <taxon>Catarrhini</taxon>
        <taxon>Hominidae</taxon>
        <taxon>Homo</taxon>
    </lineage>
</organism>
<reference key="1">
    <citation type="journal article" date="2000" name="Protein Expr. Purif.">
        <title>Molecular cloning and high-level expression of human polymerase beta cDNA and comparison of the purified recombinant human and rat enzymes.</title>
        <authorList>
            <person name="Patterson T.A."/>
            <person name="Little W."/>
            <person name="Cheng X."/>
            <person name="Widen S.G."/>
            <person name="Kumar A."/>
            <person name="Beard W.A."/>
            <person name="Wilson S.H."/>
        </authorList>
    </citation>
    <scope>NUCLEOTIDE SEQUENCE [MRNA]</scope>
</reference>
<reference key="2">
    <citation type="journal article" date="1995" name="Hum. Genet.">
        <title>Polymorphisms in the human DNA polymerase beta gene.</title>
        <authorList>
            <person name="Dobashi Y."/>
            <person name="Kubota Y."/>
            <person name="Shuin T."/>
            <person name="Torigoe S."/>
            <person name="Yao M."/>
            <person name="Hosaka M."/>
        </authorList>
    </citation>
    <scope>NUCLEOTIDE SEQUENCE [MRNA]</scope>
</reference>
<reference key="3">
    <citation type="journal article" date="1994" name="Nucleic Acids Res.">
        <title>The human DNA polymerase beta gene structure. Evidence of alternative splicing in gene expression.</title>
        <authorList>
            <person name="Chyan Y.-J."/>
            <person name="Ackerman S."/>
            <person name="Shepherd N.S."/>
            <person name="McBride O.W."/>
            <person name="Widen S.G."/>
            <person name="Wilson S.H."/>
            <person name="Wood T.G."/>
        </authorList>
    </citation>
    <scope>NUCLEOTIDE SEQUENCE [GENOMIC DNA]</scope>
    <source>
        <tissue>Skin</tissue>
    </source>
</reference>
<reference key="4">
    <citation type="journal article" date="2004" name="Nat. Genet.">
        <title>Complete sequencing and characterization of 21,243 full-length human cDNAs.</title>
        <authorList>
            <person name="Ota T."/>
            <person name="Suzuki Y."/>
            <person name="Nishikawa T."/>
            <person name="Otsuki T."/>
            <person name="Sugiyama T."/>
            <person name="Irie R."/>
            <person name="Wakamatsu A."/>
            <person name="Hayashi K."/>
            <person name="Sato H."/>
            <person name="Nagai K."/>
            <person name="Kimura K."/>
            <person name="Makita H."/>
            <person name="Sekine M."/>
            <person name="Obayashi M."/>
            <person name="Nishi T."/>
            <person name="Shibahara T."/>
            <person name="Tanaka T."/>
            <person name="Ishii S."/>
            <person name="Yamamoto J."/>
            <person name="Saito K."/>
            <person name="Kawai Y."/>
            <person name="Isono Y."/>
            <person name="Nakamura Y."/>
            <person name="Nagahari K."/>
            <person name="Murakami K."/>
            <person name="Yasuda T."/>
            <person name="Iwayanagi T."/>
            <person name="Wagatsuma M."/>
            <person name="Shiratori A."/>
            <person name="Sudo H."/>
            <person name="Hosoiri T."/>
            <person name="Kaku Y."/>
            <person name="Kodaira H."/>
            <person name="Kondo H."/>
            <person name="Sugawara M."/>
            <person name="Takahashi M."/>
            <person name="Kanda K."/>
            <person name="Yokoi T."/>
            <person name="Furuya T."/>
            <person name="Kikkawa E."/>
            <person name="Omura Y."/>
            <person name="Abe K."/>
            <person name="Kamihara K."/>
            <person name="Katsuta N."/>
            <person name="Sato K."/>
            <person name="Tanikawa M."/>
            <person name="Yamazaki M."/>
            <person name="Ninomiya K."/>
            <person name="Ishibashi T."/>
            <person name="Yamashita H."/>
            <person name="Murakawa K."/>
            <person name="Fujimori K."/>
            <person name="Tanai H."/>
            <person name="Kimata M."/>
            <person name="Watanabe M."/>
            <person name="Hiraoka S."/>
            <person name="Chiba Y."/>
            <person name="Ishida S."/>
            <person name="Ono Y."/>
            <person name="Takiguchi S."/>
            <person name="Watanabe S."/>
            <person name="Yosida M."/>
            <person name="Hotuta T."/>
            <person name="Kusano J."/>
            <person name="Kanehori K."/>
            <person name="Takahashi-Fujii A."/>
            <person name="Hara H."/>
            <person name="Tanase T.-O."/>
            <person name="Nomura Y."/>
            <person name="Togiya S."/>
            <person name="Komai F."/>
            <person name="Hara R."/>
            <person name="Takeuchi K."/>
            <person name="Arita M."/>
            <person name="Imose N."/>
            <person name="Musashino K."/>
            <person name="Yuuki H."/>
            <person name="Oshima A."/>
            <person name="Sasaki N."/>
            <person name="Aotsuka S."/>
            <person name="Yoshikawa Y."/>
            <person name="Matsunawa H."/>
            <person name="Ichihara T."/>
            <person name="Shiohata N."/>
            <person name="Sano S."/>
            <person name="Moriya S."/>
            <person name="Momiyama H."/>
            <person name="Satoh N."/>
            <person name="Takami S."/>
            <person name="Terashima Y."/>
            <person name="Suzuki O."/>
            <person name="Nakagawa S."/>
            <person name="Senoh A."/>
            <person name="Mizoguchi H."/>
            <person name="Goto Y."/>
            <person name="Shimizu F."/>
            <person name="Wakebe H."/>
            <person name="Hishigaki H."/>
            <person name="Watanabe T."/>
            <person name="Sugiyama A."/>
            <person name="Takemoto M."/>
            <person name="Kawakami B."/>
            <person name="Yamazaki M."/>
            <person name="Watanabe K."/>
            <person name="Kumagai A."/>
            <person name="Itakura S."/>
            <person name="Fukuzumi Y."/>
            <person name="Fujimori Y."/>
            <person name="Komiyama M."/>
            <person name="Tashiro H."/>
            <person name="Tanigami A."/>
            <person name="Fujiwara T."/>
            <person name="Ono T."/>
            <person name="Yamada K."/>
            <person name="Fujii Y."/>
            <person name="Ozaki K."/>
            <person name="Hirao M."/>
            <person name="Ohmori Y."/>
            <person name="Kawabata A."/>
            <person name="Hikiji T."/>
            <person name="Kobatake N."/>
            <person name="Inagaki H."/>
            <person name="Ikema Y."/>
            <person name="Okamoto S."/>
            <person name="Okitani R."/>
            <person name="Kawakami T."/>
            <person name="Noguchi S."/>
            <person name="Itoh T."/>
            <person name="Shigeta K."/>
            <person name="Senba T."/>
            <person name="Matsumura K."/>
            <person name="Nakajima Y."/>
            <person name="Mizuno T."/>
            <person name="Morinaga M."/>
            <person name="Sasaki M."/>
            <person name="Togashi T."/>
            <person name="Oyama M."/>
            <person name="Hata H."/>
            <person name="Watanabe M."/>
            <person name="Komatsu T."/>
            <person name="Mizushima-Sugano J."/>
            <person name="Satoh T."/>
            <person name="Shirai Y."/>
            <person name="Takahashi Y."/>
            <person name="Nakagawa K."/>
            <person name="Okumura K."/>
            <person name="Nagase T."/>
            <person name="Nomura N."/>
            <person name="Kikuchi H."/>
            <person name="Masuho Y."/>
            <person name="Yamashita R."/>
            <person name="Nakai K."/>
            <person name="Yada T."/>
            <person name="Nakamura Y."/>
            <person name="Ohara O."/>
            <person name="Isogai T."/>
            <person name="Sugano S."/>
        </authorList>
    </citation>
    <scope>NUCLEOTIDE SEQUENCE [LARGE SCALE MRNA]</scope>
    <source>
        <tissue>Testis</tissue>
    </source>
</reference>
<reference key="5">
    <citation type="submission" date="2004-06" db="EMBL/GenBank/DDBJ databases">
        <title>Cloning of human full open reading frames in Gateway(TM) system entry vector (pDONR201).</title>
        <authorList>
            <person name="Halleck A."/>
            <person name="Ebert L."/>
            <person name="Mkoundinya M."/>
            <person name="Schick M."/>
            <person name="Eisenstein S."/>
            <person name="Neubert P."/>
            <person name="Kstrang K."/>
            <person name="Schatten R."/>
            <person name="Shen B."/>
            <person name="Henze S."/>
            <person name="Mar W."/>
            <person name="Korn B."/>
            <person name="Zuo D."/>
            <person name="Hu Y."/>
            <person name="LaBaer J."/>
        </authorList>
    </citation>
    <scope>NUCLEOTIDE SEQUENCE [LARGE SCALE MRNA]</scope>
</reference>
<reference key="6">
    <citation type="submission" date="2002-03" db="EMBL/GenBank/DDBJ databases">
        <authorList>
            <consortium name="NIEHS SNPs program"/>
        </authorList>
    </citation>
    <scope>NUCLEOTIDE SEQUENCE [GENOMIC DNA]</scope>
    <scope>VARIANT ARG-242</scope>
</reference>
<reference key="7">
    <citation type="journal article" date="2004" name="Genome Res.">
        <title>The status, quality, and expansion of the NIH full-length cDNA project: the Mammalian Gene Collection (MGC).</title>
        <authorList>
            <consortium name="The MGC Project Team"/>
        </authorList>
    </citation>
    <scope>NUCLEOTIDE SEQUENCE [LARGE SCALE MRNA]</scope>
    <source>
        <tissue>Skin</tissue>
    </source>
</reference>
<reference key="8">
    <citation type="journal article" date="1988" name="J. Biol. Chem.">
        <title>Human beta-polymerase gene. Structure of the 5'-flanking region and active promoter.</title>
        <authorList>
            <person name="Widen S.G."/>
            <person name="Kedar P."/>
            <person name="Wilson S.H."/>
        </authorList>
    </citation>
    <scope>NUCLEOTIDE SEQUENCE [GENOMIC DNA] OF 1-39</scope>
</reference>
<reference key="9">
    <citation type="journal article" date="1988" name="Biochemistry">
        <title>Expression of human DNA polymerase beta in Escherichia coli and characterization of the recombinant enzyme.</title>
        <authorList>
            <person name="Abbotts J."/>
            <person name="Sengupta D.N."/>
            <person name="Zmudzka B."/>
            <person name="Widen S.G."/>
            <person name="Notario V."/>
            <person name="Wilson S.H."/>
        </authorList>
    </citation>
    <scope>NUCLEOTIDE SEQUENCE [MRNA] OF 1-32</scope>
</reference>
<reference key="10">
    <citation type="journal article" date="1986" name="Biochem. Biophys. Res. Commun.">
        <title>Sequence of human DNA polymerase beta mRNA obtained through cDNA cloning.</title>
        <authorList>
            <person name="Sengupta D.N."/>
            <person name="Zmudzka B.Z."/>
            <person name="Kumar P."/>
            <person name="Cobianchi F."/>
            <person name="Skowronski J."/>
            <person name="Wilson S.H."/>
        </authorList>
    </citation>
    <scope>NUCLEOTIDE SEQUENCE [MRNA] OF 18-335</scope>
</reference>
<reference key="11">
    <citation type="journal article" date="1997" name="Proc. Natl. Acad. Sci. U.S.A.">
        <title>Interaction of human apurinic endonuclease and DNA polymerase beta in the base excision repair pathway.</title>
        <authorList>
            <person name="Bennett R.A."/>
            <person name="Wilson D.M. III"/>
            <person name="Wong D."/>
            <person name="Demple B."/>
        </authorList>
    </citation>
    <scope>FUNCTION</scope>
    <scope>INTERACTION WITH APEX1</scope>
</reference>
<reference key="12">
    <citation type="journal article" date="1998" name="Biochemistry">
        <title>Catalytic center of DNA polymerase beta for excision of deoxyribose phosphate groups.</title>
        <authorList>
            <person name="Matsumoto Y."/>
            <person name="Kim K."/>
            <person name="Katz D.S."/>
            <person name="Feng J.-A."/>
        </authorList>
    </citation>
    <scope>FUNCTION</scope>
    <scope>CATALYTIC ACTIVITY</scope>
    <scope>ACTIVE SITE</scope>
    <scope>MUTAGENESIS OF LYS-35; TYR-39; LYS-68; LYS-72 AND LYS-84</scope>
</reference>
<reference key="13">
    <citation type="journal article" date="1998" name="J. Biol. Chem.">
        <title>Functional analysis of the amino-terminal 8-kDa domain of DNA polymerase beta as revealed by site-directed mutagenesis. DNA binding and 5'-deoxyribose phosphate lyase activities.</title>
        <authorList>
            <person name="Prasad R."/>
            <person name="Beard W.A."/>
            <person name="Chyan J.Y."/>
            <person name="Maciejewski M.W."/>
            <person name="Mullen G.P."/>
            <person name="Wilson S.H."/>
        </authorList>
    </citation>
    <scope>FUNCTION</scope>
    <scope>SUBUNIT</scope>
    <scope>MUTAGENESIS OF PHE-25; HIS-34; LYS-35; LYS-60; LYS-68; GLU-71; LYS-72; GLU-75 AND LYS-84</scope>
</reference>
<reference key="14">
    <citation type="journal article" date="1998" name="J. Biol. Chem.">
        <title>Human DNA polymerase beta deoxyribose phosphate lyase. Substrate specificity and catalytic mechanism.</title>
        <authorList>
            <person name="Prasad R."/>
            <person name="Beard W.A."/>
            <person name="Strauss P.R."/>
            <person name="Wilson S.H."/>
        </authorList>
    </citation>
    <scope>FUNCTION</scope>
    <scope>BIOPHYSICOCHEMICAL PROPERTIES</scope>
    <scope>CATALYTIC ACTIVITY</scope>
</reference>
<reference key="15">
    <citation type="journal article" date="2002" name="J. Biol. Chem.">
        <title>Covalent trapping of human DNA polymerase beta by the oxidative DNA lesion 2-deoxyribonolactone.</title>
        <authorList>
            <person name="DeMott M.S."/>
            <person name="Beyret E."/>
            <person name="Wong D."/>
            <person name="Bales B.C."/>
            <person name="Hwang J.-T."/>
            <person name="Greenberg M.M."/>
            <person name="Demple B."/>
        </authorList>
    </citation>
    <scope>FUNCTION</scope>
</reference>
<reference key="16">
    <citation type="journal article" date="2006" name="Mol. Cell">
        <title>Arginine methylation regulates DNA polymerase beta.</title>
        <authorList>
            <person name="El-Andaloussi N."/>
            <person name="Valovka T."/>
            <person name="Toueille M."/>
            <person name="Steinacher R."/>
            <person name="Focke F."/>
            <person name="Gehrig P."/>
            <person name="Covic M."/>
            <person name="Hassa P.O."/>
            <person name="Schaer P."/>
            <person name="Huebscher U."/>
            <person name="Hottiger M.O."/>
        </authorList>
    </citation>
    <scope>METHYLATION AT ARG-83 AND ARG-152 BY PRMT6</scope>
    <scope>MUTAGENESIS OF ARG-83 AND ARG-152</scope>
</reference>
<reference key="17">
    <citation type="journal article" date="2008" name="Biochemistry">
        <title>The Asp285 variant of DNA polymerase beta extends mispaired primer termini via increased nucleotide binding.</title>
        <authorList>
            <person name="Murphy D.L."/>
            <person name="Kosa J."/>
            <person name="Jaeger J."/>
            <person name="Sweasy J.B."/>
        </authorList>
    </citation>
    <scope>MUTAGENESIS OF HIS-285</scope>
</reference>
<reference key="18">
    <citation type="journal article" date="2009" name="EMBO J.">
        <title>Ubiquitin ligase ARF-BP1/Mule modulates base excision repair.</title>
        <authorList>
            <person name="Parsons J.L."/>
            <person name="Tait P.S."/>
            <person name="Finch D."/>
            <person name="Dianova I.I."/>
            <person name="Edelmann M.J."/>
            <person name="Khoronenkova S.V."/>
            <person name="Kessler B.M."/>
            <person name="Sharma R.A."/>
            <person name="McKenna W.G."/>
            <person name="Dianov G.L."/>
        </authorList>
    </citation>
    <scope>SUBCELLULAR LOCATION</scope>
    <scope>UBIQUITINATION AT LYS-41; LYS-61 AND LYS-81</scope>
    <scope>MUTAGENESIS OF LYS-41; LYS-61 AND LYS-81</scope>
</reference>
<reference key="19">
    <citation type="journal article" date="2011" name="Mol. Cell">
        <title>USP47 is a deubiquitylating enzyme that regulates base excision repair by controlling steady-state levels of DNA Polymerase beta.</title>
        <authorList>
            <person name="Parsons J.L."/>
            <person name="Dianova I.I."/>
            <person name="Khoronenkova S.V."/>
            <person name="Edelmann M.J."/>
            <person name="Kessler B.M."/>
            <person name="Dianov G.L."/>
        </authorList>
    </citation>
    <scope>FUNCTION</scope>
    <scope>SUBCELLULAR LOCATION</scope>
    <scope>UBIQUITINATION AT LYS-41; LYS-61 AND LYS-81</scope>
    <scope>DEUBIQUITINATION BY USP47</scope>
    <scope>INTERACTION WITH USP47</scope>
</reference>
<reference key="20">
    <citation type="journal article" date="2012" name="Biochemistry">
        <title>The E288K colon tumor variant of DNA polymerase beta is a sequence specific mutator.</title>
        <authorList>
            <person name="Murphy D.L."/>
            <person name="Donigan K.A."/>
            <person name="Jaeger J."/>
            <person name="Sweasy J.B."/>
        </authorList>
    </citation>
    <scope>MUTAGENESIS OF GLU-288</scope>
</reference>
<reference key="21">
    <citation type="journal article" date="2015" name="Mol. Cell. Biochem.">
        <title>TCRP1 contributes to cisplatin resistance by preventing Pol beta degradation in lung cancer cells.</title>
        <authorList>
            <person name="Liu X."/>
            <person name="Wang C."/>
            <person name="Gu Y."/>
            <person name="Zhang Z."/>
            <person name="Zheng G."/>
            <person name="He Z."/>
        </authorList>
    </citation>
    <scope>INTERACTS WITH FAM168A</scope>
</reference>
<reference key="22">
    <citation type="journal article" date="2016" name="Oncotarget">
        <title>R152C DNA Pol beta mutation impairs base excision repair and induces cellular transformation.</title>
        <authorList>
            <person name="Zhou T."/>
            <person name="Pan F."/>
            <person name="Cao Y."/>
            <person name="Han Y."/>
            <person name="Zhao J."/>
            <person name="Sun H."/>
            <person name="Zhou X."/>
            <person name="Wu X."/>
            <person name="He L."/>
            <person name="Hu Z."/>
            <person name="Chen H."/>
            <person name="Shen B."/>
            <person name="Guo Z."/>
        </authorList>
    </citation>
    <scope>INTERACTION WITH APEX1; FEN1 AND PCNA</scope>
    <scope>MUTAGENESIS OF ARG-152</scope>
</reference>
<reference key="23">
    <citation type="journal article" date="2017" name="Biochemistry">
        <title>Defective nucleotide release by DNA polymerase beta mutator variant E288K is the basis of its low fidelity.</title>
        <authorList>
            <person name="Mahmoud M.M."/>
            <person name="Schechter A."/>
            <person name="Alnajjar K.S."/>
            <person name="Huang J."/>
            <person name="Towle-Weicksel J."/>
            <person name="Eckenroth B.E."/>
            <person name="Doublie S."/>
            <person name="Sweasy J.B."/>
        </authorList>
    </citation>
    <scope>MUTAGENESIS OF GLU-288</scope>
</reference>
<reference evidence="55 56 57" key="24">
    <citation type="journal article" date="1996" name="Biochemistry">
        <title>A structural basis for metal ion mutagenicity and nucleotide selectivity in human DNA polymerase beta.</title>
        <authorList>
            <person name="Pelletier H."/>
            <person name="Sawaya M.R."/>
            <person name="Wolfle W."/>
            <person name="Wilson S.H."/>
            <person name="Kraut J."/>
        </authorList>
    </citation>
    <scope>X-RAY CRYSTALLOGRAPHY (2.70 ANGSTROMS) IN COMPLEXES WITH DNA; ATP; CU(2+); ZN(2+); DATP; DCTP; DGTP AND DTTP</scope>
</reference>
<reference evidence="36 37 38 39 40 52" key="25">
    <citation type="journal article" date="1996" name="Biochemistry">
        <title>Characterization of the metal ion binding helix-hairpin-helix motifs in human DNA polymerase beta by X-ray structural analysis.</title>
        <authorList>
            <person name="Pelletier H."/>
            <person name="Sawaya M.R."/>
        </authorList>
    </citation>
    <scope>X-RAY CRYSTALLOGRAPHY (2.70 ANGSTROMS) IN COMPLEXES WITH DNA; CA(2+); ZN(2+); NA(+); K(+); DATP; DCTP AND DGTP</scope>
</reference>
<reference evidence="31 32 33" key="26">
    <citation type="journal article" date="1997" name="Biochemistry">
        <title>Crystal structures of human DNA polymerase beta complexed with gapped and nicked DNA: evidence for an induced fit mechanism.</title>
        <authorList>
            <person name="Sawaya M.R."/>
            <person name="Prasad R."/>
            <person name="Wilson S.H."/>
            <person name="Kraut J."/>
            <person name="Pelletier H."/>
        </authorList>
    </citation>
    <scope>X-RAY CRYSTALLOGRAPHY (2.20 ANGSTROMS) IN COMPLEX WITH DNA; DDCTP; MG(2+) AND NA(+)</scope>
    <scope>COFACTOR</scope>
</reference>
<reference evidence="34 35" key="27">
    <citation type="journal article" date="2003" name="Structure">
        <title>Structure of DNA polymerase beta with the mutagenic DNA lesion 8-oxodeoxyguanine reveals structural insights into its coding potential.</title>
        <authorList>
            <person name="Krahn J.M."/>
            <person name="Beard W.A."/>
            <person name="Miller H."/>
            <person name="Grollman A.P."/>
            <person name="Wilson S.H."/>
        </authorList>
    </citation>
    <scope>X-RAY CRYSTALLOGRAPHY (2.8 ANGSTROMS) IN COMPLEX WITH DNA; DCTP; MG(2+) AND NA(+)</scope>
</reference>
<reference evidence="41" key="28">
    <citation type="journal article" date="2005" name="DNA Repair">
        <title>Structural insight into the DNA polymerase beta deoxyribose phosphate lyase mechanism.</title>
        <authorList>
            <person name="Prasad R."/>
            <person name="Batra V.K."/>
            <person name="Yang X.P."/>
            <person name="Krahn J.M."/>
            <person name="Pedersen L.C."/>
            <person name="Beard W.A."/>
            <person name="Wilson S.H."/>
        </authorList>
    </citation>
    <scope>X-RAY CRYSTALLOGRAPHY (2.50 ANGSTROMS) IN COMPLEX WITH ABASIC SITE DNA</scope>
    <scope>MUTAGENESIS OF LYS-35; TYR-39; LYS-68 AND LYS-72</scope>
</reference>
<reference evidence="42 43 44 45 46 47 48 49 50 51" key="29">
    <citation type="journal article" date="2020" name="Biochemistry">
        <title>Revealing an internal stabilization deficiency in the DNA polymerase beta K289M cancer variant through the combined use of chemical biology and X-ray crystallography.</title>
        <authorList>
            <person name="Batra V.K."/>
            <person name="Alnajjar K.S."/>
            <person name="Sweasy J.B."/>
            <person name="McKenna C.E."/>
            <person name="Goodman M.F."/>
            <person name="Wilson S.H."/>
        </authorList>
    </citation>
    <scope>X-RAY CRYSTALLOGRAPHY (1.85 ANGSTROMS) OF WILD-TYPE AND VARIANT MET-289 IN COMPLEX WITH DNA AND DGTP</scope>
    <scope>CHARACTERIZATION OF VARIANT MET-289</scope>
</reference>
<reference key="30">
    <citation type="journal article" date="1999" name="Mutat. Res.">
        <title>Functional mutation of DNA polymerase beta found in human gastric cancer--inability of the base excision repair in vitro.</title>
        <authorList>
            <person name="Iwanaga A."/>
            <person name="Ouchida M."/>
            <person name="Miyazaki K."/>
            <person name="Hori K."/>
            <person name="Mukai T."/>
        </authorList>
    </citation>
    <scope>VARIANTS PRO-22; CYS-39; ASN-160; ARG-239; ASP-294 AND LYS-295</scope>
    <scope>CHARACTERIZATION OF VARIANT LYS-295</scope>
    <scope>FUNCTION</scope>
</reference>
<reference key="31">
    <citation type="journal article" date="2004" name="Proc. Natl. Acad. Sci. U.S.A.">
        <title>A DNA polymerase beta mutant from colon cancer cells induces mutations.</title>
        <authorList>
            <person name="Lang T."/>
            <person name="Maitra M."/>
            <person name="Starcevic D."/>
            <person name="Li S.X."/>
            <person name="Sweasy J.B."/>
        </authorList>
    </citation>
    <scope>VARIANT MET-289</scope>
    <scope>CHARACTERIZATION OF VARIANT MET-289</scope>
</reference>
<reference key="32">
    <citation type="journal article" date="2007" name="Mol. Cell. Biol.">
        <title>The E295K DNA polymerase beta gastric cancer-associated variant interferes with base excision repair and induces cellular transformation.</title>
        <authorList>
            <person name="Lang T."/>
            <person name="Dalal S."/>
            <person name="Chikova A."/>
            <person name="DiMaio D."/>
            <person name="Sweasy J.B."/>
        </authorList>
    </citation>
    <scope>CHARACTERIZATION OF VARIANT LYS-295</scope>
    <scope>FUNCTION</scope>
</reference>
<reference key="33">
    <citation type="journal article" date="2008" name="Nucleic Acids Res.">
        <title>The Leu22Pro tumor-associated variant of DNA polymerase beta is dRP lyase deficient.</title>
        <authorList>
            <person name="Dalal S."/>
            <person name="Chikova A."/>
            <person name="Jaeger J."/>
            <person name="Sweasy J.B."/>
        </authorList>
    </citation>
    <scope>CHARACTERIZATION OF VARIANT PRO-22</scope>
</reference>
<reference key="34">
    <citation type="journal article" date="2009" name="Nucleic Acids Res.">
        <title>Human DNA polymerase beta polymorphism, Arg137Gln, impairs its polymerase activity and interaction with PCNA and the cellular base excision repair capacity.</title>
        <authorList>
            <person name="Guo Z."/>
            <person name="Zheng L."/>
            <person name="Dai H."/>
            <person name="Zhou M."/>
            <person name="Xu H."/>
            <person name="Shen B."/>
        </authorList>
    </citation>
    <scope>VARIANT GLN-137</scope>
    <scope>CHARACTERIZATION OF VARIANT GLN-137</scope>
    <scope>INTERACTION WITH APEX1; FEN1; LIG1; LIG3; PCNA AND XRCC1</scope>
</reference>
<reference key="35">
    <citation type="journal article" date="2023" name="Int. J. Mol. Sci.">
        <title>Human Polbeta natural polymorphic variants G118V and R149I affects substrate binding and catalysis.</title>
        <authorList>
            <person name="Kladova O.A."/>
            <person name="Tyugashev T.E."/>
            <person name="Mikushina E.S."/>
            <person name="Soloviev N.O."/>
            <person name="Kuznetsov N.A."/>
            <person name="Novopashina D.S."/>
            <person name="Kuznetsova A.A."/>
        </authorList>
    </citation>
    <scope>VARIANTS VAL-118 AND ILE-149</scope>
    <scope>CHARACTERIZATION OF VARIANTS VAL-118 AND ILE-149</scope>
</reference>
<sequence>MSKRKAPQETLNGGITDMLTELANFEKNVSQAIHKYNAYRKAASVIAKYPHKIKSGAEAKKLPGVGTKIAEKIDEFLATGKLRKLEKIRQDDTSSSINFLTRVSGIGPSAARKFVDEGIKTLEDLRKNEDKLNHHQRIGLKYFGDFEKRIPREEMLQMQDIVLNEVKKVDSEYIATVCGSFRRGAESSGDMDVLLTHPSFTSESTKQPKLLHQVVEQLQKVHFITDTLSKGETKFMGVCQLPSKNDEKEYPHRRIDIRLIPKDQYYCGVLYFTGSDIFNKNMRAHALEKGFTINEYTIRPLGVTGVAGEPLPVDSEKDIFDYIQWKYREPKDRSE</sequence>
<proteinExistence type="evidence at protein level"/>
<evidence type="ECO:0000250" key="1"/>
<evidence type="ECO:0000250" key="2">
    <source>
        <dbReference type="UniProtKB" id="Q8K409"/>
    </source>
</evidence>
<evidence type="ECO:0000269" key="3">
    <source>
    </source>
</evidence>
<evidence type="ECO:0000269" key="4">
    <source>
    </source>
</evidence>
<evidence type="ECO:0000269" key="5">
    <source>
    </source>
</evidence>
<evidence type="ECO:0000269" key="6">
    <source>
    </source>
</evidence>
<evidence type="ECO:0000269" key="7">
    <source>
    </source>
</evidence>
<evidence type="ECO:0000269" key="8">
    <source>
    </source>
</evidence>
<evidence type="ECO:0000269" key="9">
    <source>
    </source>
</evidence>
<evidence type="ECO:0000269" key="10">
    <source>
    </source>
</evidence>
<evidence type="ECO:0000269" key="11">
    <source>
    </source>
</evidence>
<evidence type="ECO:0000269" key="12">
    <source>
    </source>
</evidence>
<evidence type="ECO:0000269" key="13">
    <source>
    </source>
</evidence>
<evidence type="ECO:0000269" key="14">
    <source>
    </source>
</evidence>
<evidence type="ECO:0000269" key="15">
    <source>
    </source>
</evidence>
<evidence type="ECO:0000269" key="16">
    <source>
    </source>
</evidence>
<evidence type="ECO:0000269" key="17">
    <source>
    </source>
</evidence>
<evidence type="ECO:0000269" key="18">
    <source>
    </source>
</evidence>
<evidence type="ECO:0000269" key="19">
    <source>
    </source>
</evidence>
<evidence type="ECO:0000269" key="20">
    <source>
    </source>
</evidence>
<evidence type="ECO:0000269" key="21">
    <source>
    </source>
</evidence>
<evidence type="ECO:0000269" key="22">
    <source>
    </source>
</evidence>
<evidence type="ECO:0000269" key="23">
    <source>
    </source>
</evidence>
<evidence type="ECO:0000269" key="24">
    <source>
    </source>
</evidence>
<evidence type="ECO:0000269" key="25">
    <source>
    </source>
</evidence>
<evidence type="ECO:0000269" key="26">
    <source>
    </source>
</evidence>
<evidence type="ECO:0000269" key="27">
    <source>
    </source>
</evidence>
<evidence type="ECO:0000269" key="28">
    <source ref="6"/>
</evidence>
<evidence type="ECO:0000303" key="29">
    <source>
    </source>
</evidence>
<evidence type="ECO:0000305" key="30"/>
<evidence type="ECO:0007744" key="31">
    <source>
        <dbReference type="PDB" id="1BPX"/>
    </source>
</evidence>
<evidence type="ECO:0007744" key="32">
    <source>
        <dbReference type="PDB" id="1BPY"/>
    </source>
</evidence>
<evidence type="ECO:0007744" key="33">
    <source>
        <dbReference type="PDB" id="1BPZ"/>
    </source>
</evidence>
<evidence type="ECO:0007744" key="34">
    <source>
        <dbReference type="PDB" id="1MQ2"/>
    </source>
</evidence>
<evidence type="ECO:0007744" key="35">
    <source>
        <dbReference type="PDB" id="1MQ3"/>
    </source>
</evidence>
<evidence type="ECO:0007744" key="36">
    <source>
        <dbReference type="PDB" id="1ZQA"/>
    </source>
</evidence>
<evidence type="ECO:0007744" key="37">
    <source>
        <dbReference type="PDB" id="1ZQI"/>
    </source>
</evidence>
<evidence type="ECO:0007744" key="38">
    <source>
        <dbReference type="PDB" id="1ZQO"/>
    </source>
</evidence>
<evidence type="ECO:0007744" key="39">
    <source>
        <dbReference type="PDB" id="1ZQP"/>
    </source>
</evidence>
<evidence type="ECO:0007744" key="40">
    <source>
        <dbReference type="PDB" id="1ZQQ"/>
    </source>
</evidence>
<evidence type="ECO:0007744" key="41">
    <source>
        <dbReference type="PDB" id="2P66"/>
    </source>
</evidence>
<evidence type="ECO:0007744" key="42">
    <source>
        <dbReference type="PDB" id="6NKR"/>
    </source>
</evidence>
<evidence type="ECO:0007744" key="43">
    <source>
        <dbReference type="PDB" id="6NKS"/>
    </source>
</evidence>
<evidence type="ECO:0007744" key="44">
    <source>
        <dbReference type="PDB" id="6NKT"/>
    </source>
</evidence>
<evidence type="ECO:0007744" key="45">
    <source>
        <dbReference type="PDB" id="6NKU"/>
    </source>
</evidence>
<evidence type="ECO:0007744" key="46">
    <source>
        <dbReference type="PDB" id="6NKV"/>
    </source>
</evidence>
<evidence type="ECO:0007744" key="47">
    <source>
        <dbReference type="PDB" id="6NKW"/>
    </source>
</evidence>
<evidence type="ECO:0007744" key="48">
    <source>
        <dbReference type="PDB" id="6NKX"/>
    </source>
</evidence>
<evidence type="ECO:0007744" key="49">
    <source>
        <dbReference type="PDB" id="6NKY"/>
    </source>
</evidence>
<evidence type="ECO:0007744" key="50">
    <source>
        <dbReference type="PDB" id="6NKZ"/>
    </source>
</evidence>
<evidence type="ECO:0007744" key="51">
    <source>
        <dbReference type="PDB" id="6NL0"/>
    </source>
</evidence>
<evidence type="ECO:0007744" key="52">
    <source>
        <dbReference type="PDB" id="8ICF"/>
    </source>
</evidence>
<evidence type="ECO:0007744" key="53">
    <source>
        <dbReference type="PDB" id="8ICK"/>
    </source>
</evidence>
<evidence type="ECO:0007744" key="54">
    <source>
        <dbReference type="PDB" id="8ICP"/>
    </source>
</evidence>
<evidence type="ECO:0007744" key="55">
    <source>
        <dbReference type="PDB" id="8ICS"/>
    </source>
</evidence>
<evidence type="ECO:0007744" key="56">
    <source>
        <dbReference type="PDB" id="8ICT"/>
    </source>
</evidence>
<evidence type="ECO:0007744" key="57">
    <source>
        <dbReference type="PDB" id="8ICV"/>
    </source>
</evidence>
<evidence type="ECO:0007744" key="58">
    <source>
        <dbReference type="PDB" id="8ICW"/>
    </source>
</evidence>
<evidence type="ECO:0007744" key="59">
    <source>
        <dbReference type="PDB" id="8ICX"/>
    </source>
</evidence>
<evidence type="ECO:0007744" key="60">
    <source>
        <dbReference type="PDB" id="8ICY"/>
    </source>
</evidence>
<evidence type="ECO:0007744" key="61">
    <source>
        <dbReference type="PDB" id="9ICH"/>
    </source>
</evidence>
<evidence type="ECO:0007744" key="62">
    <source>
        <dbReference type="PDB" id="9ICR"/>
    </source>
</evidence>
<evidence type="ECO:0007744" key="63">
    <source>
        <dbReference type="PDB" id="9ICT"/>
    </source>
</evidence>
<evidence type="ECO:0007744" key="64">
    <source>
        <dbReference type="PDB" id="9ICV"/>
    </source>
</evidence>
<evidence type="ECO:0007829" key="65">
    <source>
        <dbReference type="PDB" id="1BPY"/>
    </source>
</evidence>
<evidence type="ECO:0007829" key="66">
    <source>
        <dbReference type="PDB" id="1ZQD"/>
    </source>
</evidence>
<evidence type="ECO:0007829" key="67">
    <source>
        <dbReference type="PDB" id="3OGU"/>
    </source>
</evidence>
<evidence type="ECO:0007829" key="68">
    <source>
        <dbReference type="PDB" id="4KLI"/>
    </source>
</evidence>
<evidence type="ECO:0007829" key="69">
    <source>
        <dbReference type="PDB" id="4KLL"/>
    </source>
</evidence>
<evidence type="ECO:0007829" key="70">
    <source>
        <dbReference type="PDB" id="6U6B"/>
    </source>
</evidence>
<evidence type="ECO:0007829" key="71">
    <source>
        <dbReference type="PDB" id="7S9N"/>
    </source>
</evidence>
<evidence type="ECO:0007829" key="72">
    <source>
        <dbReference type="PDB" id="8VFA"/>
    </source>
</evidence>
<evidence type="ECO:0007829" key="73">
    <source>
        <dbReference type="PDB" id="8VFG"/>
    </source>
</evidence>
<gene>
    <name type="primary">POLB</name>
</gene>
<protein>
    <recommendedName>
        <fullName>DNA polymerase beta</fullName>
        <ecNumber>2.7.7.7</ecNumber>
    </recommendedName>
    <alternativeName>
        <fullName evidence="29">5'-deoxyribose-phosphate lyase</fullName>
        <shortName evidence="29">5'-dRP lyase</shortName>
        <ecNumber evidence="26 27">4.2.99.-</ecNumber>
    </alternativeName>
    <alternativeName>
        <fullName evidence="29">AP lyase</fullName>
        <ecNumber evidence="27">4.2.99.18</ecNumber>
    </alternativeName>
</protein>
<feature type="chain" id="PRO_0000218778" description="DNA polymerase beta">
    <location>
        <begin position="1"/>
        <end position="335"/>
    </location>
</feature>
<feature type="region of interest" description="DNA-binding">
    <location>
        <begin position="183"/>
        <end position="192"/>
    </location>
</feature>
<feature type="active site" description="Nucleophile; Schiff-base intermediate with DNA; for 5'-dRP lyase activity" evidence="26">
    <location>
        <position position="72"/>
    </location>
</feature>
<feature type="binding site" evidence="22 36 37 39">
    <location>
        <position position="60"/>
    </location>
    <ligand>
        <name>K(+)</name>
        <dbReference type="ChEBI" id="CHEBI:29103"/>
        <label>1</label>
    </ligand>
</feature>
<feature type="binding site" evidence="5 22 24 31 33 35 38 40">
    <location>
        <position position="60"/>
    </location>
    <ligand>
        <name>Na(+)</name>
        <dbReference type="ChEBI" id="CHEBI:29101"/>
        <label>1</label>
    </ligand>
</feature>
<feature type="binding site" evidence="22 36 37 39">
    <location>
        <position position="62"/>
    </location>
    <ligand>
        <name>K(+)</name>
        <dbReference type="ChEBI" id="CHEBI:29103"/>
        <label>1</label>
    </ligand>
</feature>
<feature type="binding site" evidence="5 22 24 31 33 35 38 40">
    <location>
        <position position="62"/>
    </location>
    <ligand>
        <name>Na(+)</name>
        <dbReference type="ChEBI" id="CHEBI:29101"/>
        <label>1</label>
    </ligand>
</feature>
<feature type="binding site" evidence="22 36 37 39">
    <location>
        <position position="65"/>
    </location>
    <ligand>
        <name>K(+)</name>
        <dbReference type="ChEBI" id="CHEBI:29103"/>
        <label>1</label>
    </ligand>
</feature>
<feature type="binding site" evidence="5 22 24 31 33 35 38 40">
    <location>
        <position position="65"/>
    </location>
    <ligand>
        <name>Na(+)</name>
        <dbReference type="ChEBI" id="CHEBI:29101"/>
        <label>1</label>
    </ligand>
</feature>
<feature type="binding site" evidence="22 36 37 39">
    <location>
        <position position="101"/>
    </location>
    <ligand>
        <name>K(+)</name>
        <dbReference type="ChEBI" id="CHEBI:29103"/>
        <label>2</label>
    </ligand>
</feature>
<feature type="binding site" evidence="5 22 24 31 33 35 38 40">
    <location>
        <position position="101"/>
    </location>
    <ligand>
        <name>Na(+)</name>
        <dbReference type="ChEBI" id="CHEBI:29101"/>
        <label>2</label>
    </ligand>
</feature>
<feature type="binding site" evidence="22 36 37 39">
    <location>
        <position position="103"/>
    </location>
    <ligand>
        <name>K(+)</name>
        <dbReference type="ChEBI" id="CHEBI:29103"/>
        <label>2</label>
    </ligand>
</feature>
<feature type="binding site" evidence="5 22 24 31 33 35 38 40">
    <location>
        <position position="103"/>
    </location>
    <ligand>
        <name>Na(+)</name>
        <dbReference type="ChEBI" id="CHEBI:29101"/>
        <label>2</label>
    </ligand>
</feature>
<feature type="binding site" evidence="22 36 37 39">
    <location>
        <position position="106"/>
    </location>
    <ligand>
        <name>K(+)</name>
        <dbReference type="ChEBI" id="CHEBI:29103"/>
        <label>2</label>
    </ligand>
</feature>
<feature type="binding site" evidence="5 22 24 31 33 35 38 40">
    <location>
        <position position="106"/>
    </location>
    <ligand>
        <name>Na(+)</name>
        <dbReference type="ChEBI" id="CHEBI:29101"/>
        <label>2</label>
    </ligand>
</feature>
<feature type="binding site" evidence="21 53 54 64">
    <location>
        <position position="149"/>
    </location>
    <ligand>
        <name>dATP</name>
        <dbReference type="ChEBI" id="CHEBI:61404"/>
    </ligand>
</feature>
<feature type="binding site" evidence="5 21 35 55 56 62">
    <location>
        <position position="149"/>
    </location>
    <ligand>
        <name>dCTP</name>
        <dbReference type="ChEBI" id="CHEBI:61481"/>
    </ligand>
</feature>
<feature type="binding site" evidence="21 57 63">
    <location>
        <position position="149"/>
    </location>
    <ligand>
        <name>dGTP</name>
        <dbReference type="ChEBI" id="CHEBI:61429"/>
    </ligand>
</feature>
<feature type="binding site" evidence="21 58 59 60">
    <location>
        <position position="149"/>
    </location>
    <ligand>
        <name>dTTP</name>
        <dbReference type="ChEBI" id="CHEBI:37568"/>
    </ligand>
</feature>
<feature type="binding site" evidence="21 22 52 53 54 64">
    <location>
        <position position="180"/>
    </location>
    <ligand>
        <name>dATP</name>
        <dbReference type="ChEBI" id="CHEBI:61404"/>
    </ligand>
</feature>
<feature type="binding site" evidence="5 21 35 55 56 62">
    <location>
        <position position="180"/>
    </location>
    <ligand>
        <name>dCTP</name>
        <dbReference type="ChEBI" id="CHEBI:61481"/>
    </ligand>
</feature>
<feature type="binding site" evidence="19 21 22 42 45 57 61 63">
    <location>
        <position position="180"/>
    </location>
    <ligand>
        <name>dGTP</name>
        <dbReference type="ChEBI" id="CHEBI:61429"/>
    </ligand>
</feature>
<feature type="binding site" evidence="21 58 59 60">
    <location>
        <position position="180"/>
    </location>
    <ligand>
        <name>dTTP</name>
        <dbReference type="ChEBI" id="CHEBI:37568"/>
    </ligand>
</feature>
<feature type="binding site" evidence="21 22 52 53 54 64">
    <location>
        <position position="183"/>
    </location>
    <ligand>
        <name>dATP</name>
        <dbReference type="ChEBI" id="CHEBI:61404"/>
    </ligand>
</feature>
<feature type="binding site" evidence="5 21 35 55">
    <location>
        <position position="183"/>
    </location>
    <ligand>
        <name>dCTP</name>
        <dbReference type="ChEBI" id="CHEBI:61481"/>
    </ligand>
</feature>
<feature type="binding site" evidence="19 42 45">
    <location>
        <position position="183"/>
    </location>
    <ligand>
        <name>dGTP</name>
        <dbReference type="ChEBI" id="CHEBI:61429"/>
    </ligand>
</feature>
<feature type="binding site" evidence="21 59">
    <location>
        <position position="183"/>
    </location>
    <ligand>
        <name>dTTP</name>
        <dbReference type="ChEBI" id="CHEBI:37568"/>
    </ligand>
</feature>
<feature type="binding site" evidence="21 22 52 53 54 64">
    <location>
        <position position="189"/>
    </location>
    <ligand>
        <name>dATP</name>
        <dbReference type="ChEBI" id="CHEBI:61404"/>
    </ligand>
</feature>
<feature type="binding site" evidence="5 21 35 55 56 62">
    <location>
        <position position="189"/>
    </location>
    <ligand>
        <name>dCTP</name>
        <dbReference type="ChEBI" id="CHEBI:61481"/>
    </ligand>
</feature>
<feature type="binding site" evidence="19 21 22 42 45 57 61 63">
    <location>
        <position position="189"/>
    </location>
    <ligand>
        <name>dGTP</name>
        <dbReference type="ChEBI" id="CHEBI:61429"/>
    </ligand>
</feature>
<feature type="binding site" evidence="21 58 59 60">
    <location>
        <position position="189"/>
    </location>
    <ligand>
        <name>dTTP</name>
        <dbReference type="ChEBI" id="CHEBI:37568"/>
    </ligand>
</feature>
<feature type="binding site" evidence="21 22 52 53 54">
    <location>
        <position position="190"/>
    </location>
    <ligand>
        <name>dATP</name>
        <dbReference type="ChEBI" id="CHEBI:61404"/>
    </ligand>
</feature>
<feature type="binding site" evidence="5 21 35 62">
    <location>
        <position position="190"/>
    </location>
    <ligand>
        <name>dCTP</name>
        <dbReference type="ChEBI" id="CHEBI:61481"/>
    </ligand>
</feature>
<feature type="binding site" evidence="19 42">
    <location>
        <position position="190"/>
    </location>
    <ligand>
        <name>dGTP</name>
        <dbReference type="ChEBI" id="CHEBI:61429"/>
    </ligand>
</feature>
<feature type="binding site" evidence="21 60">
    <location>
        <position position="190"/>
    </location>
    <ligand>
        <name>dTTP</name>
        <dbReference type="ChEBI" id="CHEBI:37568"/>
    </ligand>
</feature>
<feature type="binding site" evidence="5 24 32 35">
    <location>
        <position position="190"/>
    </location>
    <ligand>
        <name>Mg(2+)</name>
        <dbReference type="ChEBI" id="CHEBI:18420"/>
        <label>1</label>
    </ligand>
</feature>
<feature type="binding site" evidence="24 32">
    <location>
        <position position="190"/>
    </location>
    <ligand>
        <name>Mg(2+)</name>
        <dbReference type="ChEBI" id="CHEBI:18420"/>
        <label>2</label>
    </ligand>
</feature>
<feature type="binding site" evidence="21 22 57 61">
    <location>
        <position position="192"/>
    </location>
    <ligand>
        <name>dGTP</name>
        <dbReference type="ChEBI" id="CHEBI:61429"/>
    </ligand>
</feature>
<feature type="binding site" evidence="5 24 32 35">
    <location>
        <position position="192"/>
    </location>
    <ligand>
        <name>Mg(2+)</name>
        <dbReference type="ChEBI" id="CHEBI:18420"/>
        <label>1</label>
    </ligand>
</feature>
<feature type="binding site" evidence="24 32">
    <location>
        <position position="192"/>
    </location>
    <ligand>
        <name>Mg(2+)</name>
        <dbReference type="ChEBI" id="CHEBI:18420"/>
        <label>2</label>
    </ligand>
</feature>
<feature type="binding site" evidence="24 32">
    <location>
        <position position="256"/>
    </location>
    <ligand>
        <name>Mg(2+)</name>
        <dbReference type="ChEBI" id="CHEBI:18420"/>
        <label>2</label>
    </ligand>
</feature>
<feature type="modified residue" description="N6-acetyllysine" evidence="2">
    <location>
        <position position="72"/>
    </location>
</feature>
<feature type="modified residue" description="Omega-N-methylarginine; by PRMT6" evidence="8">
    <location>
        <position position="83"/>
    </location>
</feature>
<feature type="modified residue" description="Omega-N-methylarginine; by PRMT6" evidence="8">
    <location>
        <position position="152"/>
    </location>
</feature>
<feature type="cross-link" description="Glycyl lysine isopeptide (Lys-Gly) (interchain with G-Cter in ubiquitin)" evidence="13 14">
    <location>
        <position position="41"/>
    </location>
</feature>
<feature type="cross-link" description="Glycyl lysine isopeptide (Lys-Gly) (interchain with G-Cter in ubiquitin)" evidence="13 14">
    <location>
        <position position="61"/>
    </location>
</feature>
<feature type="cross-link" description="Glycyl lysine isopeptide (Lys-Gly) (interchain with G-Cter in ubiquitin)" evidence="13 14">
    <location>
        <position position="81"/>
    </location>
</feature>
<feature type="sequence variant" id="VAR_088253" description="Found in a gastric cancer sample; uncertain significance; loss of function in base-excision repair; decreased DNA-directed DNA polymerase activity; loss of 5'-dRP lyase activity; lower affinity for gapped DNA; dbSNP:rs1452231640." evidence="3 10">
    <original>L</original>
    <variation>P</variation>
    <location>
        <position position="22"/>
    </location>
</feature>
<feature type="sequence variant" id="VAR_088254" description="Found in a gastric cancer sample; uncertain significance." evidence="3">
    <original>Y</original>
    <variation>C</variation>
    <location>
        <position position="39"/>
    </location>
</feature>
<feature type="sequence variant" id="VAR_088255" description="Decreased DNA-directed DNA polymerase activity; does not affect secondary structure as shown by circular dichroism; dbSNP:rs764967314." evidence="20">
    <original>G</original>
    <variation>V</variation>
    <location>
        <position position="118"/>
    </location>
</feature>
<feature type="sequence variant" id="VAR_088256" description="Decreased function in base-excision repair; decreased DNA-directed DNA polymerase activity; no effect on 5'-dRP lyase activity; no effect on DNA binding; decreased interaction with PCNA; dbSNP:rs12678588." evidence="12">
    <original>R</original>
    <variation>Q</variation>
    <location>
        <position position="137"/>
    </location>
</feature>
<feature type="sequence variant" id="VAR_088257" description="Decreased DNA-directed DNA polymerase activity; does not affect secondary structure as shown by circular dichroism; dbSNP:rs779188078." evidence="20">
    <original>R</original>
    <variation>I</variation>
    <location>
        <position position="149"/>
    </location>
</feature>
<feature type="sequence variant" id="VAR_088258" description="Found in a gastric cancer sample; uncertain significance." evidence="3">
    <original>D</original>
    <variation>N</variation>
    <location>
        <position position="160"/>
    </location>
</feature>
<feature type="sequence variant" id="VAR_088259" description="Found in a gastric cancer sample; uncertain significance." evidence="3">
    <original>C</original>
    <variation>R</variation>
    <location>
        <position position="239"/>
    </location>
</feature>
<feature type="sequence variant" id="VAR_018881" description="In dbSNP:rs3136797." evidence="28">
    <original>P</original>
    <variation>R</variation>
    <location>
        <position position="242"/>
    </location>
</feature>
<feature type="sequence variant" id="VAR_088260" description="Found in a colon cancer sample; uncertain significance; affects DNA-directed DNA polymerase activity resulting in nucleotide misincorporation in gapped DNA and decreased fidelity during DNA synthesis in base-excision repair; decreased affinity for gapped DNA; due to altered structure of the C-terminal region, the mutant enzyme in complex with DNA and dGTP does not undergo the open to closed conformational change that is necessary to assembly a catalytically competent active site." evidence="6 19">
    <original>K</original>
    <variation>M</variation>
    <location>
        <position position="289"/>
    </location>
</feature>
<feature type="sequence variant" id="VAR_088261" description="Found in a gastric cancer sample; uncertain significance." evidence="3">
    <original>N</original>
    <variation>D</variation>
    <location>
        <position position="294"/>
    </location>
</feature>
<feature type="sequence variant" id="VAR_088262" description="Found in a gastric cancer sample; uncertain significance; dominant negative variant; induces cellular transformation when expressed in mouse cells; results in loss of function in base-excision repair; loss of DNA-directed DNA polymerase activity; retains 5'-dRP lyase activity; does not affect DNA binding." evidence="3 9">
    <original>E</original>
    <variation>K</variation>
    <location>
        <position position="295"/>
    </location>
</feature>
<feature type="mutagenesis site" description="No effect on 5'-dRP lyase activity. Decreased ssDNA binding." evidence="25">
    <original>F</original>
    <variation>W</variation>
    <location>
        <position position="25"/>
    </location>
</feature>
<feature type="mutagenesis site" description="Decreased 5'-dRP lyase activity. Decreased ssDNA binding." evidence="25">
    <original>H</original>
    <variation>G</variation>
    <location>
        <position position="34"/>
    </location>
</feature>
<feature type="mutagenesis site" description="Decreased 5'-dRP lyase activity. Decreased ssDNA binding. Loss of 5'-dRP lyase activity; when associated with A-68 and A-72. Decreased ssDNA binding; when associated with A-68 and A-72. No effect on structure shown by circular dichroism." evidence="25">
    <original>K</original>
    <variation>A</variation>
    <location>
        <position position="35"/>
    </location>
</feature>
<feature type="mutagenesis site" description="Reduces 5'-dRP lyase activity slightly." evidence="26">
    <original>K</original>
    <variation>Q</variation>
    <location>
        <position position="35"/>
    </location>
</feature>
<feature type="mutagenesis site" description="No effect on 5'-dRP lyase activity." evidence="7">
    <original>K</original>
    <variation>R</variation>
    <location>
        <position position="35"/>
    </location>
</feature>
<feature type="mutagenesis site" description="No effect on 5'-dRP lyase activity." evidence="7">
    <original>Y</original>
    <variation>F</variation>
    <location>
        <position position="39"/>
    </location>
</feature>
<feature type="mutagenesis site" description="Abolishes DNA polymerase and 5'-dRP lyase activity." evidence="26">
    <original>Y</original>
    <variation>Q</variation>
    <location>
        <position position="39"/>
    </location>
</feature>
<feature type="mutagenesis site" description="Abolishes ubiquitination; when associated with R-61 and R-81." evidence="13">
    <original>K</original>
    <variation>R</variation>
    <location>
        <position position="41"/>
    </location>
</feature>
<feature type="mutagenesis site" description="Decreased 5'-dRP lyase activity. Decreased ssDNA binding." evidence="25">
    <original>K</original>
    <variation>A</variation>
    <location>
        <position position="60"/>
    </location>
</feature>
<feature type="mutagenesis site" description="Abolishes ubiquitination; when associated with R-41 and R-81." evidence="13">
    <original>K</original>
    <variation>R</variation>
    <location>
        <position position="61"/>
    </location>
</feature>
<feature type="mutagenesis site" description="No effect on 5'-dRP lyase activity. Decreased ssDNA binding. Loss of 5'-dRP lyase activity; when associated with A-35 and A-72. Decreased ssDNA binding; when associated with A-35 and A-72. No effect on structure shown by circular dichroism." evidence="7 25">
    <original>K</original>
    <variation>A</variation>
    <location>
        <position position="68"/>
    </location>
</feature>
<feature type="mutagenesis site" description="Slightly reduces 5'-dRP lyase activity." evidence="7 26">
    <original>K</original>
    <variation>Q</variation>
    <variation>R</variation>
    <location>
        <position position="68"/>
    </location>
</feature>
<feature type="mutagenesis site" description="No effect on 5'-dRP lyase activity. No effect on structure shown by circular dichroism. No effect on ssDNA binding." evidence="25">
    <original>E</original>
    <variation>Q</variation>
    <location>
        <position position="71"/>
    </location>
</feature>
<feature type="mutagenesis site" description="Severely reduced 5'-dRP lyase activity. Does not affect ssDNA binding. Loss of 5'-dRP lyase activity; when associated with A-35 and A-68. Decreased ssDNA binding; when associated with A-35 and A-68. No effect on structure shown by circular dichroism." evidence="7 25">
    <original>K</original>
    <variation>A</variation>
    <location>
        <position position="72"/>
    </location>
</feature>
<feature type="mutagenesis site" description="Abolishes 5'-dRP lyase activity. No effect on DNA polymerase activity." evidence="26">
    <original>K</original>
    <variation>Q</variation>
    <variation>R</variation>
    <location>
        <position position="72"/>
    </location>
</feature>
<feature type="mutagenesis site" description="Slightly decreased 5'-dRP lyase activity. Decreased ssDNA binding. No effect on structure shown by circular dichroism." evidence="25">
    <original>E</original>
    <variation>A</variation>
    <location>
        <position position="75"/>
    </location>
</feature>
<feature type="mutagenesis site" description="Abolishes ubiquitination; when associated with R-41 and R-61." evidence="13">
    <original>K</original>
    <variation>R</variation>
    <location>
        <position position="81"/>
    </location>
</feature>
<feature type="mutagenesis site" description="Slight effect. Abolishes methylation by PRMT6 and impairs the polymerase activity; when associated with K-152." evidence="8">
    <original>R</original>
    <variation>K</variation>
    <location>
        <position position="83"/>
    </location>
</feature>
<feature type="mutagenesis site" description="No effect on structure shown by circular dichroism. No effect on ssDNA binding." evidence="25">
    <original>K</original>
    <variation>A</variation>
    <location>
        <position position="84"/>
    </location>
</feature>
<feature type="mutagenesis site" description="No effect on 5'-dRP lyase activity." evidence="25 26">
    <original>K</original>
    <variation>R</variation>
    <variation>A</variation>
    <location>
        <position position="84"/>
    </location>
</feature>
<feature type="mutagenesis site" description="Severely decreased function in base-excision repair. Severely decreased DNA-directed DNA polymerase activity. No effect on 5'-dRP lyase activity. No effect on DNA binding. No effect on structure shown by circular dichroism. No effect on interaction with APEX1, FEN1 and PCNA." evidence="17">
    <original>R</original>
    <variation>C</variation>
    <location>
        <position position="152"/>
    </location>
</feature>
<feature type="mutagenesis site" description="Slight effect. Abolishes methylation by PRMT6 and impairs the polymerase activity; when associated with K-83." evidence="8">
    <original>R</original>
    <variation>K</variation>
    <location>
        <position position="152"/>
    </location>
</feature>
<feature type="mutagenesis site" description="Affects DNA-directed DNA polymerase activity; contrary to wild-type enzyme, the mutant efficiently extends mispaired termini in gapped DNA. No effect on secondary structure shown by circular dichroism." evidence="11">
    <original>H</original>
    <variation>D</variation>
    <location>
        <position position="285"/>
    </location>
</feature>
<feature type="mutagenesis site" description="Changed DNA-directed DNA polymerase activity; in complex with the DNA template and the incoming dNTP, it assumes a close conformation faster than wild-type POLB and exhibits a slower rate of nucleotide release. Results in decreased fidelity on one-base-gapped DNA and increased mutation frequency at A-T base pairs. No effect on secondary structure shown by circular dichroism. No effect on thermal stability." evidence="15 18">
    <original>E</original>
    <variation>K</variation>
    <location>
        <position position="288"/>
    </location>
</feature>
<feature type="sequence conflict" description="In Ref. 3; AAB60688." evidence="30" ref="3">
    <original>M</original>
    <variation>K</variation>
    <location>
        <position position="18"/>
    </location>
</feature>
<feature type="sequence conflict" description="In Ref. 10; AAA60133." evidence="30" ref="10">
    <original>L</original>
    <variation>R</variation>
    <location>
        <position position="228"/>
    </location>
</feature>
<feature type="sequence conflict" description="In Ref. 10; AAA60133." evidence="30" ref="10">
    <original>I</original>
    <variation>Y</variation>
    <location>
        <position position="260"/>
    </location>
</feature>
<feature type="sequence conflict" description="In Ref. 10; AAA60133." evidence="30" ref="10">
    <original>L</original>
    <variation>K</variation>
    <location>
        <position position="287"/>
    </location>
</feature>
<feature type="helix" evidence="73">
    <location>
        <begin position="9"/>
        <end position="28"/>
    </location>
</feature>
<feature type="helix" evidence="73">
    <location>
        <begin position="33"/>
        <end position="47"/>
    </location>
</feature>
<feature type="strand" evidence="70">
    <location>
        <begin position="48"/>
        <end position="51"/>
    </location>
</feature>
<feature type="helix" evidence="73">
    <location>
        <begin position="56"/>
        <end position="60"/>
    </location>
</feature>
<feature type="strand" evidence="65">
    <location>
        <begin position="62"/>
        <end position="64"/>
    </location>
</feature>
<feature type="helix" evidence="73">
    <location>
        <begin position="67"/>
        <end position="79"/>
    </location>
</feature>
<feature type="helix" evidence="73">
    <location>
        <begin position="83"/>
        <end position="90"/>
    </location>
</feature>
<feature type="helix" evidence="73">
    <location>
        <begin position="92"/>
        <end position="100"/>
    </location>
</feature>
<feature type="turn" evidence="66">
    <location>
        <begin position="101"/>
        <end position="105"/>
    </location>
</feature>
<feature type="helix" evidence="73">
    <location>
        <begin position="108"/>
        <end position="116"/>
    </location>
</feature>
<feature type="helix" evidence="73">
    <location>
        <begin position="122"/>
        <end position="126"/>
    </location>
</feature>
<feature type="helix" evidence="73">
    <location>
        <begin position="127"/>
        <end position="131"/>
    </location>
</feature>
<feature type="helix" evidence="73">
    <location>
        <begin position="134"/>
        <end position="141"/>
    </location>
</feature>
<feature type="helix" evidence="73">
    <location>
        <begin position="143"/>
        <end position="147"/>
    </location>
</feature>
<feature type="helix" evidence="73">
    <location>
        <begin position="152"/>
        <end position="169"/>
    </location>
</feature>
<feature type="strand" evidence="73">
    <location>
        <begin position="174"/>
        <end position="177"/>
    </location>
</feature>
<feature type="helix" evidence="73">
    <location>
        <begin position="179"/>
        <end position="182"/>
    </location>
</feature>
<feature type="strand" evidence="73">
    <location>
        <begin position="186"/>
        <end position="196"/>
    </location>
</feature>
<feature type="strand" evidence="72">
    <location>
        <begin position="198"/>
        <end position="201"/>
    </location>
</feature>
<feature type="strand" evidence="67">
    <location>
        <begin position="202"/>
        <end position="204"/>
    </location>
</feature>
<feature type="strand" evidence="69">
    <location>
        <begin position="207"/>
        <end position="209"/>
    </location>
</feature>
<feature type="helix" evidence="73">
    <location>
        <begin position="210"/>
        <end position="220"/>
    </location>
</feature>
<feature type="strand" evidence="73">
    <location>
        <begin position="224"/>
        <end position="230"/>
    </location>
</feature>
<feature type="strand" evidence="73">
    <location>
        <begin position="232"/>
        <end position="239"/>
    </location>
</feature>
<feature type="strand" evidence="71">
    <location>
        <begin position="245"/>
        <end position="247"/>
    </location>
</feature>
<feature type="strand" evidence="73">
    <location>
        <begin position="253"/>
        <end position="259"/>
    </location>
</feature>
<feature type="helix" evidence="73">
    <location>
        <begin position="262"/>
        <end position="264"/>
    </location>
</feature>
<feature type="helix" evidence="73">
    <location>
        <begin position="265"/>
        <end position="273"/>
    </location>
</feature>
<feature type="helix" evidence="73">
    <location>
        <begin position="276"/>
        <end position="288"/>
    </location>
</feature>
<feature type="strand" evidence="73">
    <location>
        <begin position="291"/>
        <end position="293"/>
    </location>
</feature>
<feature type="strand" evidence="73">
    <location>
        <begin position="298"/>
        <end position="301"/>
    </location>
</feature>
<feature type="strand" evidence="68">
    <location>
        <begin position="303"/>
        <end position="305"/>
    </location>
</feature>
<feature type="helix" evidence="73">
    <location>
        <begin position="316"/>
        <end position="322"/>
    </location>
</feature>
<feature type="helix" evidence="73">
    <location>
        <begin position="330"/>
        <end position="332"/>
    </location>
</feature>
<name>DPOLB_HUMAN</name>
<accession>P06746</accession>
<accession>B2RC78</accession>
<accession>Q3KP48</accession>
<accession>Q6FI34</accession>
<keyword id="KW-0002">3D-structure</keyword>
<keyword id="KW-0007">Acetylation</keyword>
<keyword id="KW-0963">Cytoplasm</keyword>
<keyword id="KW-0227">DNA damage</keyword>
<keyword id="KW-0234">DNA repair</keyword>
<keyword id="KW-0235">DNA replication</keyword>
<keyword id="KW-0237">DNA synthesis</keyword>
<keyword id="KW-0238">DNA-binding</keyword>
<keyword id="KW-0239">DNA-directed DNA polymerase</keyword>
<keyword id="KW-1017">Isopeptide bond</keyword>
<keyword id="KW-0456">Lyase</keyword>
<keyword id="KW-0460">Magnesium</keyword>
<keyword id="KW-0479">Metal-binding</keyword>
<keyword id="KW-0488">Methylation</keyword>
<keyword id="KW-0548">Nucleotidyltransferase</keyword>
<keyword id="KW-0539">Nucleus</keyword>
<keyword id="KW-1267">Proteomics identification</keyword>
<keyword id="KW-1185">Reference proteome</keyword>
<keyword id="KW-0915">Sodium</keyword>
<keyword id="KW-0808">Transferase</keyword>
<keyword id="KW-0832">Ubl conjugation</keyword>
<dbReference type="EC" id="2.7.7.7"/>
<dbReference type="EC" id="4.2.99.-" evidence="26 27"/>
<dbReference type="EC" id="4.2.99.18" evidence="27"/>
<dbReference type="EMBL" id="L11607">
    <property type="protein sequence ID" value="AAB59441.1"/>
    <property type="molecule type" value="mRNA"/>
</dbReference>
<dbReference type="EMBL" id="D29013">
    <property type="protein sequence ID" value="BAA06099.1"/>
    <property type="molecule type" value="mRNA"/>
</dbReference>
<dbReference type="EMBL" id="U10526">
    <property type="protein sequence ID" value="AAB60688.1"/>
    <property type="molecule type" value="Genomic_DNA"/>
</dbReference>
<dbReference type="EMBL" id="U10516">
    <property type="protein sequence ID" value="AAB60688.1"/>
    <property type="status" value="JOINED"/>
    <property type="molecule type" value="Genomic_DNA"/>
</dbReference>
<dbReference type="EMBL" id="U10517">
    <property type="protein sequence ID" value="AAB60688.1"/>
    <property type="status" value="JOINED"/>
    <property type="molecule type" value="Genomic_DNA"/>
</dbReference>
<dbReference type="EMBL" id="U10519">
    <property type="protein sequence ID" value="AAB60688.1"/>
    <property type="status" value="JOINED"/>
    <property type="molecule type" value="Genomic_DNA"/>
</dbReference>
<dbReference type="EMBL" id="U10520">
    <property type="protein sequence ID" value="AAB60688.1"/>
    <property type="status" value="JOINED"/>
    <property type="molecule type" value="Genomic_DNA"/>
</dbReference>
<dbReference type="EMBL" id="U10521">
    <property type="protein sequence ID" value="AAB60688.1"/>
    <property type="status" value="JOINED"/>
    <property type="molecule type" value="Genomic_DNA"/>
</dbReference>
<dbReference type="EMBL" id="U10522">
    <property type="protein sequence ID" value="AAB60688.1"/>
    <property type="status" value="JOINED"/>
    <property type="molecule type" value="Genomic_DNA"/>
</dbReference>
<dbReference type="EMBL" id="U10523">
    <property type="protein sequence ID" value="AAB60688.1"/>
    <property type="status" value="JOINED"/>
    <property type="molecule type" value="Genomic_DNA"/>
</dbReference>
<dbReference type="EMBL" id="U10524">
    <property type="protein sequence ID" value="AAB60688.1"/>
    <property type="status" value="JOINED"/>
    <property type="molecule type" value="Genomic_DNA"/>
</dbReference>
<dbReference type="EMBL" id="U10525">
    <property type="protein sequence ID" value="AAB60688.1"/>
    <property type="status" value="JOINED"/>
    <property type="molecule type" value="Genomic_DNA"/>
</dbReference>
<dbReference type="EMBL" id="AK314976">
    <property type="protein sequence ID" value="BAG37475.1"/>
    <property type="molecule type" value="mRNA"/>
</dbReference>
<dbReference type="EMBL" id="CR536503">
    <property type="protein sequence ID" value="CAG38741.1"/>
    <property type="molecule type" value="mRNA"/>
</dbReference>
<dbReference type="EMBL" id="CR541802">
    <property type="protein sequence ID" value="CAG46601.1"/>
    <property type="molecule type" value="mRNA"/>
</dbReference>
<dbReference type="EMBL" id="AF491812">
    <property type="protein sequence ID" value="AAL91594.1"/>
    <property type="molecule type" value="Genomic_DNA"/>
</dbReference>
<dbReference type="EMBL" id="BC100288">
    <property type="protein sequence ID" value="AAI00289.1"/>
    <property type="molecule type" value="mRNA"/>
</dbReference>
<dbReference type="EMBL" id="BC106909">
    <property type="protein sequence ID" value="AAI06910.1"/>
    <property type="molecule type" value="mRNA"/>
</dbReference>
<dbReference type="EMBL" id="J04201">
    <property type="protein sequence ID" value="AAA60134.1"/>
    <property type="molecule type" value="Genomic_DNA"/>
</dbReference>
<dbReference type="EMBL" id="M13140">
    <property type="protein sequence ID" value="AAA60133.1"/>
    <property type="molecule type" value="mRNA"/>
</dbReference>
<dbReference type="CCDS" id="CCDS6129.1"/>
<dbReference type="PIR" id="I55273">
    <property type="entry name" value="I55273"/>
</dbReference>
<dbReference type="PIR" id="S48061">
    <property type="entry name" value="S48061"/>
</dbReference>
<dbReference type="RefSeq" id="NP_002681.1">
    <property type="nucleotide sequence ID" value="NM_002690.3"/>
</dbReference>
<dbReference type="PDB" id="1BPX">
    <property type="method" value="X-ray"/>
    <property type="resolution" value="2.40 A"/>
    <property type="chains" value="A=1-335"/>
</dbReference>
<dbReference type="PDB" id="1BPY">
    <property type="method" value="X-ray"/>
    <property type="resolution" value="2.20 A"/>
    <property type="chains" value="A=1-335"/>
</dbReference>
<dbReference type="PDB" id="1BPZ">
    <property type="method" value="X-ray"/>
    <property type="resolution" value="2.60 A"/>
    <property type="chains" value="A=1-335"/>
</dbReference>
<dbReference type="PDB" id="1MQ2">
    <property type="method" value="X-ray"/>
    <property type="resolution" value="3.10 A"/>
    <property type="chains" value="A=1-335"/>
</dbReference>
<dbReference type="PDB" id="1MQ3">
    <property type="method" value="X-ray"/>
    <property type="resolution" value="2.80 A"/>
    <property type="chains" value="A=1-335"/>
</dbReference>
<dbReference type="PDB" id="1TV9">
    <property type="method" value="X-ray"/>
    <property type="resolution" value="2.00 A"/>
    <property type="chains" value="A=1-335"/>
</dbReference>
<dbReference type="PDB" id="1TVA">
    <property type="method" value="X-ray"/>
    <property type="resolution" value="2.60 A"/>
    <property type="chains" value="A=1-335"/>
</dbReference>
<dbReference type="PDB" id="1ZJM">
    <property type="method" value="X-ray"/>
    <property type="resolution" value="2.10 A"/>
    <property type="chains" value="A=1-335"/>
</dbReference>
<dbReference type="PDB" id="1ZJN">
    <property type="method" value="X-ray"/>
    <property type="resolution" value="2.61 A"/>
    <property type="chains" value="A=1-335"/>
</dbReference>
<dbReference type="PDB" id="1ZQA">
    <property type="method" value="X-ray"/>
    <property type="resolution" value="3.20 A"/>
    <property type="chains" value="A=1-335"/>
</dbReference>
<dbReference type="PDB" id="1ZQB">
    <property type="method" value="X-ray"/>
    <property type="resolution" value="3.20 A"/>
    <property type="chains" value="A=1-335"/>
</dbReference>
<dbReference type="PDB" id="1ZQC">
    <property type="method" value="X-ray"/>
    <property type="resolution" value="3.20 A"/>
    <property type="chains" value="A=1-335"/>
</dbReference>
<dbReference type="PDB" id="1ZQD">
    <property type="method" value="X-ray"/>
    <property type="resolution" value="3.50 A"/>
    <property type="chains" value="A=1-335"/>
</dbReference>
<dbReference type="PDB" id="1ZQE">
    <property type="method" value="X-ray"/>
    <property type="resolution" value="3.70 A"/>
    <property type="chains" value="A=1-335"/>
</dbReference>
<dbReference type="PDB" id="1ZQF">
    <property type="method" value="X-ray"/>
    <property type="resolution" value="2.90 A"/>
    <property type="chains" value="A=1-335"/>
</dbReference>
<dbReference type="PDB" id="1ZQG">
    <property type="method" value="X-ray"/>
    <property type="resolution" value="3.10 A"/>
    <property type="chains" value="A=1-335"/>
</dbReference>
<dbReference type="PDB" id="1ZQH">
    <property type="method" value="X-ray"/>
    <property type="resolution" value="3.10 A"/>
    <property type="chains" value="A=1-335"/>
</dbReference>
<dbReference type="PDB" id="1ZQI">
    <property type="method" value="X-ray"/>
    <property type="resolution" value="2.70 A"/>
    <property type="chains" value="A=1-335"/>
</dbReference>
<dbReference type="PDB" id="1ZQJ">
    <property type="method" value="X-ray"/>
    <property type="resolution" value="3.30 A"/>
    <property type="chains" value="A=1-335"/>
</dbReference>
<dbReference type="PDB" id="1ZQK">
    <property type="method" value="X-ray"/>
    <property type="resolution" value="3.20 A"/>
    <property type="chains" value="A=1-335"/>
</dbReference>
<dbReference type="PDB" id="1ZQL">
    <property type="method" value="X-ray"/>
    <property type="resolution" value="3.30 A"/>
    <property type="chains" value="A=1-335"/>
</dbReference>
<dbReference type="PDB" id="1ZQM">
    <property type="method" value="X-ray"/>
    <property type="resolution" value="3.20 A"/>
    <property type="chains" value="A=1-335"/>
</dbReference>
<dbReference type="PDB" id="1ZQN">
    <property type="method" value="X-ray"/>
    <property type="resolution" value="3.00 A"/>
    <property type="chains" value="A=1-335"/>
</dbReference>
<dbReference type="PDB" id="1ZQO">
    <property type="method" value="X-ray"/>
    <property type="resolution" value="3.20 A"/>
    <property type="chains" value="A=1-335"/>
</dbReference>
<dbReference type="PDB" id="1ZQP">
    <property type="method" value="X-ray"/>
    <property type="resolution" value="2.80 A"/>
    <property type="chains" value="A=1-335"/>
</dbReference>
<dbReference type="PDB" id="1ZQQ">
    <property type="method" value="X-ray"/>
    <property type="resolution" value="3.30 A"/>
    <property type="chains" value="A=1-335"/>
</dbReference>
<dbReference type="PDB" id="1ZQR">
    <property type="method" value="X-ray"/>
    <property type="resolution" value="3.70 A"/>
    <property type="chains" value="A=1-335"/>
</dbReference>
<dbReference type="PDB" id="1ZQS">
    <property type="method" value="X-ray"/>
    <property type="resolution" value="3.30 A"/>
    <property type="chains" value="A=1-335"/>
</dbReference>
<dbReference type="PDB" id="1ZQT">
    <property type="method" value="X-ray"/>
    <property type="resolution" value="3.40 A"/>
    <property type="chains" value="A=1-335"/>
</dbReference>
<dbReference type="PDB" id="2FMP">
    <property type="method" value="X-ray"/>
    <property type="resolution" value="1.65 A"/>
    <property type="chains" value="A=1-335"/>
</dbReference>
<dbReference type="PDB" id="2FMQ">
    <property type="method" value="X-ray"/>
    <property type="resolution" value="2.20 A"/>
    <property type="chains" value="A=1-335"/>
</dbReference>
<dbReference type="PDB" id="2FMS">
    <property type="method" value="X-ray"/>
    <property type="resolution" value="2.00 A"/>
    <property type="chains" value="A=1-335"/>
</dbReference>
<dbReference type="PDB" id="2I9G">
    <property type="method" value="X-ray"/>
    <property type="resolution" value="2.10 A"/>
    <property type="chains" value="A=1-335"/>
</dbReference>
<dbReference type="PDB" id="2ISO">
    <property type="method" value="X-ray"/>
    <property type="resolution" value="2.10 A"/>
    <property type="chains" value="A=1-335"/>
</dbReference>
<dbReference type="PDB" id="2ISP">
    <property type="method" value="X-ray"/>
    <property type="resolution" value="2.20 A"/>
    <property type="chains" value="A=1-335"/>
</dbReference>
<dbReference type="PDB" id="2P66">
    <property type="method" value="X-ray"/>
    <property type="resolution" value="2.50 A"/>
    <property type="chains" value="A=1-335"/>
</dbReference>
<dbReference type="PDB" id="2PXI">
    <property type="method" value="X-ray"/>
    <property type="resolution" value="2.10 A"/>
    <property type="chains" value="A=1-335"/>
</dbReference>
<dbReference type="PDB" id="3C2K">
    <property type="method" value="X-ray"/>
    <property type="resolution" value="2.40 A"/>
    <property type="chains" value="A=1-335"/>
</dbReference>
<dbReference type="PDB" id="3C2L">
    <property type="method" value="X-ray"/>
    <property type="resolution" value="2.60 A"/>
    <property type="chains" value="A=1-335"/>
</dbReference>
<dbReference type="PDB" id="3C2M">
    <property type="method" value="X-ray"/>
    <property type="resolution" value="2.15 A"/>
    <property type="chains" value="A=1-335"/>
</dbReference>
<dbReference type="PDB" id="3GDX">
    <property type="method" value="X-ray"/>
    <property type="resolution" value="2.20 A"/>
    <property type="chains" value="A=10-335"/>
</dbReference>
<dbReference type="PDB" id="3ISB">
    <property type="method" value="X-ray"/>
    <property type="resolution" value="2.00 A"/>
    <property type="chains" value="A=1-335"/>
</dbReference>
<dbReference type="PDB" id="3ISC">
    <property type="method" value="X-ray"/>
    <property type="resolution" value="2.00 A"/>
    <property type="chains" value="A=1-335"/>
</dbReference>
<dbReference type="PDB" id="3ISD">
    <property type="method" value="X-ray"/>
    <property type="resolution" value="2.60 A"/>
    <property type="chains" value="A=1-335"/>
</dbReference>
<dbReference type="PDB" id="3JPN">
    <property type="method" value="X-ray"/>
    <property type="resolution" value="2.15 A"/>
    <property type="chains" value="A=1-335"/>
</dbReference>
<dbReference type="PDB" id="3JPO">
    <property type="method" value="X-ray"/>
    <property type="resolution" value="2.00 A"/>
    <property type="chains" value="A=1-335"/>
</dbReference>
<dbReference type="PDB" id="3JPP">
    <property type="method" value="X-ray"/>
    <property type="resolution" value="2.10 A"/>
    <property type="chains" value="A=1-335"/>
</dbReference>
<dbReference type="PDB" id="3JPQ">
    <property type="method" value="X-ray"/>
    <property type="resolution" value="1.90 A"/>
    <property type="chains" value="A=1-335"/>
</dbReference>
<dbReference type="PDB" id="3JPR">
    <property type="method" value="X-ray"/>
    <property type="resolution" value="2.10 A"/>
    <property type="chains" value="A=1-335"/>
</dbReference>
<dbReference type="PDB" id="3JPS">
    <property type="method" value="X-ray"/>
    <property type="resolution" value="2.00 A"/>
    <property type="chains" value="A=1-335"/>
</dbReference>
<dbReference type="PDB" id="3JPT">
    <property type="method" value="X-ray"/>
    <property type="resolution" value="2.15 A"/>
    <property type="chains" value="A=1-335"/>
</dbReference>
<dbReference type="PDB" id="3LK9">
    <property type="method" value="X-ray"/>
    <property type="resolution" value="2.50 A"/>
    <property type="chains" value="A=1-335"/>
</dbReference>
<dbReference type="PDB" id="3MBY">
    <property type="method" value="X-ray"/>
    <property type="resolution" value="2.00 A"/>
    <property type="chains" value="A=1-335"/>
</dbReference>
<dbReference type="PDB" id="3OGU">
    <property type="method" value="X-ray"/>
    <property type="resolution" value="1.84 A"/>
    <property type="chains" value="A=1-335"/>
</dbReference>
<dbReference type="PDB" id="3RH4">
    <property type="method" value="X-ray"/>
    <property type="resolution" value="1.92 A"/>
    <property type="chains" value="A=1-335"/>
</dbReference>
<dbReference type="PDB" id="3RH5">
    <property type="method" value="X-ray"/>
    <property type="resolution" value="2.10 A"/>
    <property type="chains" value="A=1-335"/>
</dbReference>
<dbReference type="PDB" id="3RH6">
    <property type="method" value="X-ray"/>
    <property type="resolution" value="2.05 A"/>
    <property type="chains" value="A=1-335"/>
</dbReference>
<dbReference type="PDB" id="3RJE">
    <property type="method" value="X-ray"/>
    <property type="resolution" value="2.10 A"/>
    <property type="chains" value="A=1-335"/>
</dbReference>
<dbReference type="PDB" id="3RJF">
    <property type="method" value="X-ray"/>
    <property type="resolution" value="2.30 A"/>
    <property type="chains" value="A=1-335"/>
</dbReference>
<dbReference type="PDB" id="3RJG">
    <property type="method" value="X-ray"/>
    <property type="resolution" value="2.00 A"/>
    <property type="chains" value="A=1-335"/>
</dbReference>
<dbReference type="PDB" id="3RJH">
    <property type="method" value="X-ray"/>
    <property type="resolution" value="2.20 A"/>
    <property type="chains" value="A=1-335"/>
</dbReference>
<dbReference type="PDB" id="3RJI">
    <property type="method" value="X-ray"/>
    <property type="resolution" value="2.30 A"/>
    <property type="chains" value="A=1-335"/>
</dbReference>
<dbReference type="PDB" id="3RJJ">
    <property type="method" value="X-ray"/>
    <property type="resolution" value="2.00 A"/>
    <property type="chains" value="A=1-335"/>
</dbReference>
<dbReference type="PDB" id="3RJK">
    <property type="method" value="X-ray"/>
    <property type="resolution" value="2.10 A"/>
    <property type="chains" value="A=1-335"/>
</dbReference>
<dbReference type="PDB" id="3TFR">
    <property type="method" value="X-ray"/>
    <property type="resolution" value="2.00 A"/>
    <property type="chains" value="A=1-335"/>
</dbReference>
<dbReference type="PDB" id="3TFS">
    <property type="method" value="X-ray"/>
    <property type="resolution" value="2.00 A"/>
    <property type="chains" value="A=1-335"/>
</dbReference>
<dbReference type="PDB" id="4DO9">
    <property type="method" value="X-ray"/>
    <property type="resolution" value="2.05 A"/>
    <property type="chains" value="A=1-335"/>
</dbReference>
<dbReference type="PDB" id="4DOA">
    <property type="method" value="X-ray"/>
    <property type="resolution" value="2.05 A"/>
    <property type="chains" value="A=1-335"/>
</dbReference>
<dbReference type="PDB" id="4DOB">
    <property type="method" value="X-ray"/>
    <property type="resolution" value="2.05 A"/>
    <property type="chains" value="A=1-335"/>
</dbReference>
<dbReference type="PDB" id="4DOC">
    <property type="method" value="X-ray"/>
    <property type="resolution" value="1.95 A"/>
    <property type="chains" value="A=1-335"/>
</dbReference>
<dbReference type="PDB" id="4F5N">
    <property type="method" value="X-ray"/>
    <property type="resolution" value="1.80 A"/>
    <property type="chains" value="A=1-335"/>
</dbReference>
<dbReference type="PDB" id="4F5O">
    <property type="method" value="X-ray"/>
    <property type="resolution" value="2.00 A"/>
    <property type="chains" value="A=1-335"/>
</dbReference>
<dbReference type="PDB" id="4F5P">
    <property type="method" value="X-ray"/>
    <property type="resolution" value="1.85 A"/>
    <property type="chains" value="A=1-335"/>
</dbReference>
<dbReference type="PDB" id="4F5Q">
    <property type="method" value="X-ray"/>
    <property type="resolution" value="2.25 A"/>
    <property type="chains" value="A=1-335"/>
</dbReference>
<dbReference type="PDB" id="4F5R">
    <property type="method" value="X-ray"/>
    <property type="resolution" value="2.20 A"/>
    <property type="chains" value="A/B=1-335"/>
</dbReference>
<dbReference type="PDB" id="4GXI">
    <property type="method" value="X-ray"/>
    <property type="resolution" value="1.95 A"/>
    <property type="chains" value="A=1-335"/>
</dbReference>
<dbReference type="PDB" id="4GXJ">
    <property type="method" value="X-ray"/>
    <property type="resolution" value="2.20 A"/>
    <property type="chains" value="A=1-335"/>
</dbReference>
<dbReference type="PDB" id="4GXK">
    <property type="method" value="X-ray"/>
    <property type="resolution" value="2.00 A"/>
    <property type="chains" value="A=1-335"/>
</dbReference>
<dbReference type="PDB" id="4JWM">
    <property type="method" value="X-ray"/>
    <property type="resolution" value="2.00 A"/>
    <property type="chains" value="A=1-335"/>
</dbReference>
<dbReference type="PDB" id="4JWN">
    <property type="method" value="X-ray"/>
    <property type="resolution" value="2.39 A"/>
    <property type="chains" value="A=1-335"/>
</dbReference>
<dbReference type="PDB" id="4KLD">
    <property type="method" value="X-ray"/>
    <property type="resolution" value="1.92 A"/>
    <property type="chains" value="A=1-335"/>
</dbReference>
<dbReference type="PDB" id="4KLE">
    <property type="method" value="X-ray"/>
    <property type="resolution" value="1.97 A"/>
    <property type="chains" value="A=1-335"/>
</dbReference>
<dbReference type="PDB" id="4KLF">
    <property type="method" value="X-ray"/>
    <property type="resolution" value="1.85 A"/>
    <property type="chains" value="A=1-335"/>
</dbReference>
<dbReference type="PDB" id="4KLG">
    <property type="method" value="X-ray"/>
    <property type="resolution" value="1.70 A"/>
    <property type="chains" value="A=1-335"/>
</dbReference>
<dbReference type="PDB" id="4KLH">
    <property type="method" value="X-ray"/>
    <property type="resolution" value="1.88 A"/>
    <property type="chains" value="A=1-335"/>
</dbReference>
<dbReference type="PDB" id="4KLI">
    <property type="method" value="X-ray"/>
    <property type="resolution" value="1.60 A"/>
    <property type="chains" value="A=1-335"/>
</dbReference>
<dbReference type="PDB" id="4KLJ">
    <property type="method" value="X-ray"/>
    <property type="resolution" value="1.80 A"/>
    <property type="chains" value="A=1-335"/>
</dbReference>
<dbReference type="PDB" id="4KLL">
    <property type="method" value="X-ray"/>
    <property type="resolution" value="1.84 A"/>
    <property type="chains" value="A=1-335"/>
</dbReference>
<dbReference type="PDB" id="4KLM">
    <property type="method" value="X-ray"/>
    <property type="resolution" value="1.75 A"/>
    <property type="chains" value="A=1-335"/>
</dbReference>
<dbReference type="PDB" id="4KLO">
    <property type="method" value="X-ray"/>
    <property type="resolution" value="1.84 A"/>
    <property type="chains" value="A=1-335"/>
</dbReference>
<dbReference type="PDB" id="4KLQ">
    <property type="method" value="X-ray"/>
    <property type="resolution" value="2.00 A"/>
    <property type="chains" value="A=1-335"/>
</dbReference>
<dbReference type="PDB" id="4KLS">
    <property type="method" value="X-ray"/>
    <property type="resolution" value="1.98 A"/>
    <property type="chains" value="A=1-335"/>
</dbReference>
<dbReference type="PDB" id="4KLT">
    <property type="method" value="X-ray"/>
    <property type="resolution" value="1.98 A"/>
    <property type="chains" value="A=1-335"/>
</dbReference>
<dbReference type="PDB" id="4KLU">
    <property type="method" value="X-ray"/>
    <property type="resolution" value="1.97 A"/>
    <property type="chains" value="A=1-335"/>
</dbReference>
<dbReference type="PDB" id="4LVS">
    <property type="method" value="X-ray"/>
    <property type="resolution" value="2.00 A"/>
    <property type="chains" value="A=1-335"/>
</dbReference>
<dbReference type="PDB" id="4M2Y">
    <property type="method" value="X-ray"/>
    <property type="resolution" value="2.27 A"/>
    <property type="chains" value="A=11-335"/>
</dbReference>
<dbReference type="PDB" id="4M47">
    <property type="method" value="X-ray"/>
    <property type="resolution" value="2.37 A"/>
    <property type="chains" value="A=12-335"/>
</dbReference>
<dbReference type="PDB" id="4M9G">
    <property type="method" value="X-ray"/>
    <property type="resolution" value="2.01 A"/>
    <property type="chains" value="A=1-335"/>
</dbReference>
<dbReference type="PDB" id="4M9H">
    <property type="method" value="X-ray"/>
    <property type="resolution" value="2.39 A"/>
    <property type="chains" value="A=1-335"/>
</dbReference>
<dbReference type="PDB" id="4M9J">
    <property type="method" value="X-ray"/>
    <property type="resolution" value="2.04 A"/>
    <property type="chains" value="A=1-335"/>
</dbReference>
<dbReference type="PDB" id="4M9L">
    <property type="method" value="X-ray"/>
    <property type="resolution" value="2.09 A"/>
    <property type="chains" value="A=1-335"/>
</dbReference>
<dbReference type="PDB" id="4M9N">
    <property type="method" value="X-ray"/>
    <property type="resolution" value="2.28 A"/>
    <property type="chains" value="A=1-335"/>
</dbReference>
<dbReference type="PDB" id="4MF2">
    <property type="method" value="X-ray"/>
    <property type="resolution" value="2.40 A"/>
    <property type="chains" value="A=11-335"/>
</dbReference>
<dbReference type="PDB" id="4MF8">
    <property type="method" value="X-ray"/>
    <property type="resolution" value="2.32 A"/>
    <property type="chains" value="A=7-335"/>
</dbReference>
<dbReference type="PDB" id="4MFA">
    <property type="method" value="X-ray"/>
    <property type="resolution" value="2.27 A"/>
    <property type="chains" value="A=11-335"/>
</dbReference>
<dbReference type="PDB" id="4MFC">
    <property type="method" value="X-ray"/>
    <property type="resolution" value="2.13 A"/>
    <property type="chains" value="A=11-335"/>
</dbReference>
<dbReference type="PDB" id="4MFF">
    <property type="method" value="X-ray"/>
    <property type="resolution" value="2.55 A"/>
    <property type="chains" value="A=11-335"/>
</dbReference>
<dbReference type="PDB" id="4NLK">
    <property type="method" value="X-ray"/>
    <property type="resolution" value="2.49 A"/>
    <property type="chains" value="A=7-335"/>
</dbReference>
<dbReference type="PDB" id="4NLN">
    <property type="method" value="X-ray"/>
    <property type="resolution" value="2.26 A"/>
    <property type="chains" value="A=7-335"/>
</dbReference>
<dbReference type="PDB" id="4NLZ">
    <property type="method" value="X-ray"/>
    <property type="resolution" value="2.68 A"/>
    <property type="chains" value="A=7-335"/>
</dbReference>
<dbReference type="PDB" id="4NM1">
    <property type="method" value="X-ray"/>
    <property type="resolution" value="2.42 A"/>
    <property type="chains" value="A=7-335"/>
</dbReference>
<dbReference type="PDB" id="4NM2">
    <property type="method" value="X-ray"/>
    <property type="resolution" value="2.52 A"/>
    <property type="chains" value="A=7-335"/>
</dbReference>
<dbReference type="PDB" id="4NXZ">
    <property type="method" value="X-ray"/>
    <property type="resolution" value="2.56 A"/>
    <property type="chains" value="A=10-335"/>
</dbReference>
<dbReference type="PDB" id="4NY8">
    <property type="method" value="X-ray"/>
    <property type="resolution" value="2.25 A"/>
    <property type="chains" value="A=10-335"/>
</dbReference>
<dbReference type="PDB" id="4O5C">
    <property type="method" value="X-ray"/>
    <property type="resolution" value="2.36 A"/>
    <property type="chains" value="A=7-335"/>
</dbReference>
<dbReference type="PDB" id="4O5E">
    <property type="method" value="X-ray"/>
    <property type="resolution" value="2.53 A"/>
    <property type="chains" value="A=7-335"/>
</dbReference>
<dbReference type="PDB" id="4O5K">
    <property type="method" value="X-ray"/>
    <property type="resolution" value="2.06 A"/>
    <property type="chains" value="A=10-335"/>
</dbReference>
<dbReference type="PDB" id="4O9M">
    <property type="method" value="X-ray"/>
    <property type="resolution" value="2.30 A"/>
    <property type="chains" value="A=1-335"/>
</dbReference>
<dbReference type="PDB" id="4P2H">
    <property type="method" value="X-ray"/>
    <property type="resolution" value="1.99 A"/>
    <property type="chains" value="A=10-335"/>
</dbReference>
<dbReference type="PDB" id="4PGQ">
    <property type="method" value="X-ray"/>
    <property type="resolution" value="2.30 A"/>
    <property type="chains" value="A=7-335"/>
</dbReference>
<dbReference type="PDB" id="4PGX">
    <property type="method" value="X-ray"/>
    <property type="resolution" value="2.08 A"/>
    <property type="chains" value="A=10-335"/>
</dbReference>
<dbReference type="PDB" id="4PGY">
    <property type="method" value="X-ray"/>
    <property type="resolution" value="2.26 A"/>
    <property type="chains" value="A=7-335"/>
</dbReference>
<dbReference type="PDB" id="4PH5">
    <property type="method" value="X-ray"/>
    <property type="resolution" value="2.55 A"/>
    <property type="chains" value="A=10-335"/>
</dbReference>
<dbReference type="PDB" id="4PHA">
    <property type="method" value="X-ray"/>
    <property type="resolution" value="2.52 A"/>
    <property type="chains" value="A=7-335"/>
</dbReference>
<dbReference type="PDB" id="4PHD">
    <property type="method" value="X-ray"/>
    <property type="resolution" value="2.21 A"/>
    <property type="chains" value="A=7-335"/>
</dbReference>
<dbReference type="PDB" id="4PHE">
    <property type="method" value="X-ray"/>
    <property type="resolution" value="2.15 A"/>
    <property type="chains" value="A=7-335"/>
</dbReference>
<dbReference type="PDB" id="4PHP">
    <property type="method" value="X-ray"/>
    <property type="resolution" value="2.60 A"/>
    <property type="chains" value="A=10-335"/>
</dbReference>
<dbReference type="PDB" id="4PPX">
    <property type="method" value="X-ray"/>
    <property type="resolution" value="2.08 A"/>
    <property type="chains" value="A=1-335"/>
</dbReference>
<dbReference type="PDB" id="4R63">
    <property type="method" value="X-ray"/>
    <property type="resolution" value="1.85 A"/>
    <property type="chains" value="A=1-335"/>
</dbReference>
<dbReference type="PDB" id="4R64">
    <property type="method" value="X-ray"/>
    <property type="resolution" value="2.20 A"/>
    <property type="chains" value="A=1-335"/>
</dbReference>
<dbReference type="PDB" id="4R65">
    <property type="method" value="X-ray"/>
    <property type="resolution" value="1.95 A"/>
    <property type="chains" value="A=1-335"/>
</dbReference>
<dbReference type="PDB" id="4R66">
    <property type="method" value="X-ray"/>
    <property type="resolution" value="2.25 A"/>
    <property type="chains" value="A=1-335"/>
</dbReference>
<dbReference type="PDB" id="4RPX">
    <property type="method" value="X-ray"/>
    <property type="resolution" value="1.90 A"/>
    <property type="chains" value="A=1-335"/>
</dbReference>
<dbReference type="PDB" id="4RPY">
    <property type="method" value="X-ray"/>
    <property type="resolution" value="1.90 A"/>
    <property type="chains" value="A=1-335"/>
</dbReference>
<dbReference type="PDB" id="4RPZ">
    <property type="method" value="X-ray"/>
    <property type="resolution" value="2.19 A"/>
    <property type="chains" value="A=1-335"/>
</dbReference>
<dbReference type="PDB" id="4RQ0">
    <property type="method" value="X-ray"/>
    <property type="resolution" value="2.20 A"/>
    <property type="chains" value="A=1-335"/>
</dbReference>
<dbReference type="PDB" id="4RQ1">
    <property type="method" value="X-ray"/>
    <property type="resolution" value="2.70 A"/>
    <property type="chains" value="A=1-335"/>
</dbReference>
<dbReference type="PDB" id="4RQ2">
    <property type="method" value="X-ray"/>
    <property type="resolution" value="2.20 A"/>
    <property type="chains" value="A=1-335"/>
</dbReference>
<dbReference type="PDB" id="4RQ3">
    <property type="method" value="X-ray"/>
    <property type="resolution" value="2.00 A"/>
    <property type="chains" value="A=1-335"/>
</dbReference>
<dbReference type="PDB" id="4RQ4">
    <property type="method" value="X-ray"/>
    <property type="resolution" value="2.10 A"/>
    <property type="chains" value="A=1-335"/>
</dbReference>
<dbReference type="PDB" id="4RQ5">
    <property type="method" value="X-ray"/>
    <property type="resolution" value="2.32 A"/>
    <property type="chains" value="A=1-335"/>
</dbReference>
<dbReference type="PDB" id="4RQ6">
    <property type="method" value="X-ray"/>
    <property type="resolution" value="2.25 A"/>
    <property type="chains" value="A=1-335"/>
</dbReference>
<dbReference type="PDB" id="4RQ7">
    <property type="method" value="X-ray"/>
    <property type="resolution" value="2.00 A"/>
    <property type="chains" value="A=1-335"/>
</dbReference>
<dbReference type="PDB" id="4RQ8">
    <property type="method" value="X-ray"/>
    <property type="resolution" value="2.00 A"/>
    <property type="chains" value="A=1-335"/>
</dbReference>
<dbReference type="PDB" id="4RT2">
    <property type="method" value="X-ray"/>
    <property type="resolution" value="1.92 A"/>
    <property type="chains" value="A=1-335"/>
</dbReference>
<dbReference type="PDB" id="4RT3">
    <property type="method" value="X-ray"/>
    <property type="resolution" value="1.92 A"/>
    <property type="chains" value="A=1-335"/>
</dbReference>
<dbReference type="PDB" id="4TUP">
    <property type="method" value="X-ray"/>
    <property type="resolution" value="1.80 A"/>
    <property type="chains" value="A=7-335"/>
</dbReference>
<dbReference type="PDB" id="4TUQ">
    <property type="method" value="X-ray"/>
    <property type="resolution" value="2.37 A"/>
    <property type="chains" value="A=10-335"/>
</dbReference>
<dbReference type="PDB" id="4TUR">
    <property type="method" value="X-ray"/>
    <property type="resolution" value="2.17 A"/>
    <property type="chains" value="A=7-335"/>
</dbReference>
<dbReference type="PDB" id="4TUS">
    <property type="method" value="X-ray"/>
    <property type="resolution" value="2.42 A"/>
    <property type="chains" value="A=10-335"/>
</dbReference>
<dbReference type="PDB" id="4UAW">
    <property type="method" value="X-ray"/>
    <property type="resolution" value="1.90 A"/>
    <property type="chains" value="A=1-335"/>
</dbReference>
<dbReference type="PDB" id="4UAY">
    <property type="method" value="X-ray"/>
    <property type="resolution" value="1.98 A"/>
    <property type="chains" value="A=1-335"/>
</dbReference>
<dbReference type="PDB" id="4UAZ">
    <property type="method" value="X-ray"/>
    <property type="resolution" value="1.88 A"/>
    <property type="chains" value="A=1-335"/>
</dbReference>
<dbReference type="PDB" id="4UB1">
    <property type="method" value="X-ray"/>
    <property type="resolution" value="2.34 A"/>
    <property type="chains" value="A=1-335"/>
</dbReference>
<dbReference type="PDB" id="4UB2">
    <property type="method" value="X-ray"/>
    <property type="resolution" value="2.51 A"/>
    <property type="chains" value="A=1-335"/>
</dbReference>
<dbReference type="PDB" id="4UB3">
    <property type="method" value="X-ray"/>
    <property type="resolution" value="2.06 A"/>
    <property type="chains" value="A=1-335"/>
</dbReference>
<dbReference type="PDB" id="4UB4">
    <property type="method" value="X-ray"/>
    <property type="resolution" value="1.95 A"/>
    <property type="chains" value="A=1-335"/>
</dbReference>
<dbReference type="PDB" id="4UB5">
    <property type="method" value="X-ray"/>
    <property type="resolution" value="2.15 A"/>
    <property type="chains" value="A=1-335"/>
</dbReference>
<dbReference type="PDB" id="4UBB">
    <property type="method" value="X-ray"/>
    <property type="resolution" value="1.90 A"/>
    <property type="chains" value="A=1-335"/>
</dbReference>
<dbReference type="PDB" id="4UBC">
    <property type="method" value="X-ray"/>
    <property type="resolution" value="2.00 A"/>
    <property type="chains" value="A=1-335"/>
</dbReference>
<dbReference type="PDB" id="4YMM">
    <property type="method" value="X-ray"/>
    <property type="resolution" value="2.20 A"/>
    <property type="chains" value="A=1-335"/>
</dbReference>
<dbReference type="PDB" id="4YMN">
    <property type="method" value="X-ray"/>
    <property type="resolution" value="2.59 A"/>
    <property type="chains" value="A=1-335"/>
</dbReference>
<dbReference type="PDB" id="4YMO">
    <property type="method" value="X-ray"/>
    <property type="resolution" value="2.15 A"/>
    <property type="chains" value="A=1-335"/>
</dbReference>
<dbReference type="PDB" id="4YN4">
    <property type="method" value="X-ray"/>
    <property type="resolution" value="2.24 A"/>
    <property type="chains" value="A=1-335"/>
</dbReference>
<dbReference type="PDB" id="4Z6C">
    <property type="method" value="X-ray"/>
    <property type="resolution" value="2.68 A"/>
    <property type="chains" value="A=1-335"/>
</dbReference>
<dbReference type="PDB" id="4Z6D">
    <property type="method" value="X-ray"/>
    <property type="resolution" value="2.51 A"/>
    <property type="chains" value="A=1-335"/>
</dbReference>
<dbReference type="PDB" id="4Z6E">
    <property type="method" value="X-ray"/>
    <property type="resolution" value="2.75 A"/>
    <property type="chains" value="A=1-335"/>
</dbReference>
<dbReference type="PDB" id="4Z6F">
    <property type="method" value="X-ray"/>
    <property type="resolution" value="2.44 A"/>
    <property type="chains" value="A=1-335"/>
</dbReference>
<dbReference type="PDB" id="5BOL">
    <property type="method" value="X-ray"/>
    <property type="resolution" value="1.98 A"/>
    <property type="chains" value="A=1-335"/>
</dbReference>
<dbReference type="PDB" id="5BOM">
    <property type="method" value="X-ray"/>
    <property type="resolution" value="2.00 A"/>
    <property type="chains" value="A=1-335"/>
</dbReference>
<dbReference type="PDB" id="5BPC">
    <property type="method" value="X-ray"/>
    <property type="resolution" value="2.00 A"/>
    <property type="chains" value="A=1-335"/>
</dbReference>
<dbReference type="PDB" id="5DB6">
    <property type="method" value="X-ray"/>
    <property type="resolution" value="2.83 A"/>
    <property type="chains" value="A=1-335"/>
</dbReference>
<dbReference type="PDB" id="5DB7">
    <property type="method" value="X-ray"/>
    <property type="resolution" value="2.21 A"/>
    <property type="chains" value="A=1-335"/>
</dbReference>
<dbReference type="PDB" id="5DB8">
    <property type="method" value="X-ray"/>
    <property type="resolution" value="2.55 A"/>
    <property type="chains" value="A=1-335"/>
</dbReference>
<dbReference type="PDB" id="5DB9">
    <property type="method" value="X-ray"/>
    <property type="resolution" value="2.45 A"/>
    <property type="chains" value="A=1-335"/>
</dbReference>
<dbReference type="PDB" id="5DBA">
    <property type="method" value="X-ray"/>
    <property type="resolution" value="1.97 A"/>
    <property type="chains" value="A=1-335"/>
</dbReference>
<dbReference type="PDB" id="5DBB">
    <property type="method" value="X-ray"/>
    <property type="resolution" value="2.25 A"/>
    <property type="chains" value="A=1-335"/>
</dbReference>
<dbReference type="PDB" id="5DBC">
    <property type="method" value="X-ray"/>
    <property type="resolution" value="2.40 A"/>
    <property type="chains" value="A=1-335"/>
</dbReference>
<dbReference type="PDB" id="5EOZ">
    <property type="method" value="X-ray"/>
    <property type="resolution" value="2.09 A"/>
    <property type="chains" value="A=1-335"/>
</dbReference>
<dbReference type="PDB" id="5HHH">
    <property type="method" value="X-ray"/>
    <property type="resolution" value="2.36 A"/>
    <property type="chains" value="A=9-335"/>
</dbReference>
<dbReference type="PDB" id="5HHI">
    <property type="method" value="X-ray"/>
    <property type="resolution" value="2.52 A"/>
    <property type="chains" value="A=7-335"/>
</dbReference>
<dbReference type="PDB" id="5J0O">
    <property type="method" value="X-ray"/>
    <property type="resolution" value="2.00 A"/>
    <property type="chains" value="A=1-335"/>
</dbReference>
<dbReference type="PDB" id="5J0P">
    <property type="method" value="X-ray"/>
    <property type="resolution" value="2.20 A"/>
    <property type="chains" value="A=1-335"/>
</dbReference>
<dbReference type="PDB" id="5J0Q">
    <property type="method" value="X-ray"/>
    <property type="resolution" value="2.00 A"/>
    <property type="chains" value="A=1-335"/>
</dbReference>
<dbReference type="PDB" id="5J0R">
    <property type="method" value="X-ray"/>
    <property type="resolution" value="2.00 A"/>
    <property type="chains" value="A=1-335"/>
</dbReference>
<dbReference type="PDB" id="5J0S">
    <property type="method" value="X-ray"/>
    <property type="resolution" value="2.00 A"/>
    <property type="chains" value="A=1-335"/>
</dbReference>
<dbReference type="PDB" id="5J0T">
    <property type="method" value="X-ray"/>
    <property type="resolution" value="2.00 A"/>
    <property type="chains" value="A=1-335"/>
</dbReference>
<dbReference type="PDB" id="5J0U">
    <property type="method" value="X-ray"/>
    <property type="resolution" value="2.10 A"/>
    <property type="chains" value="A=1-335"/>
</dbReference>
<dbReference type="PDB" id="5J0W">
    <property type="method" value="X-ray"/>
    <property type="resolution" value="2.40 A"/>
    <property type="chains" value="A=1-335"/>
</dbReference>
<dbReference type="PDB" id="5J0X">
    <property type="method" value="X-ray"/>
    <property type="resolution" value="2.00 A"/>
    <property type="chains" value="A=1-335"/>
</dbReference>
<dbReference type="PDB" id="5J0Y">
    <property type="method" value="X-ray"/>
    <property type="resolution" value="2.00 A"/>
    <property type="chains" value="A=1-335"/>
</dbReference>
<dbReference type="PDB" id="5J29">
    <property type="method" value="X-ray"/>
    <property type="resolution" value="2.20 A"/>
    <property type="chains" value="A=1-335"/>
</dbReference>
<dbReference type="PDB" id="5J2A">
    <property type="method" value="X-ray"/>
    <property type="resolution" value="2.50 A"/>
    <property type="chains" value="A=1-335"/>
</dbReference>
<dbReference type="PDB" id="5J2B">
    <property type="method" value="X-ray"/>
    <property type="resolution" value="2.50 A"/>
    <property type="chains" value="A=1-335"/>
</dbReference>
<dbReference type="PDB" id="5J2C">
    <property type="method" value="X-ray"/>
    <property type="resolution" value="2.10 A"/>
    <property type="chains" value="A=1-335"/>
</dbReference>
<dbReference type="PDB" id="5J2D">
    <property type="method" value="X-ray"/>
    <property type="resolution" value="2.10 A"/>
    <property type="chains" value="A=1-335"/>
</dbReference>
<dbReference type="PDB" id="5J2E">
    <property type="method" value="X-ray"/>
    <property type="resolution" value="2.10 A"/>
    <property type="chains" value="A=1-335"/>
</dbReference>
<dbReference type="PDB" id="5J2F">
    <property type="method" value="X-ray"/>
    <property type="resolution" value="2.10 A"/>
    <property type="chains" value="A=1-335"/>
</dbReference>
<dbReference type="PDB" id="5J2G">
    <property type="method" value="X-ray"/>
    <property type="resolution" value="2.10 A"/>
    <property type="chains" value="A=1-335"/>
</dbReference>
<dbReference type="PDB" id="5J2H">
    <property type="method" value="X-ray"/>
    <property type="resolution" value="2.30 A"/>
    <property type="chains" value="A=1-335"/>
</dbReference>
<dbReference type="PDB" id="5J2I">
    <property type="method" value="X-ray"/>
    <property type="resolution" value="2.40 A"/>
    <property type="chains" value="A=1-335"/>
</dbReference>
<dbReference type="PDB" id="5J2J">
    <property type="method" value="X-ray"/>
    <property type="resolution" value="2.20 A"/>
    <property type="chains" value="A=1-335"/>
</dbReference>
<dbReference type="PDB" id="5J2K">
    <property type="method" value="X-ray"/>
    <property type="resolution" value="2.10 A"/>
    <property type="chains" value="A=1-335"/>
</dbReference>
<dbReference type="PDB" id="5TB8">
    <property type="method" value="X-ray"/>
    <property type="resolution" value="2.00 A"/>
    <property type="chains" value="A=1-335"/>
</dbReference>
<dbReference type="PDB" id="5TB9">
    <property type="method" value="X-ray"/>
    <property type="resolution" value="2.49 A"/>
    <property type="chains" value="A=1-335"/>
</dbReference>
<dbReference type="PDB" id="5TBA">
    <property type="method" value="X-ray"/>
    <property type="resolution" value="2.49 A"/>
    <property type="chains" value="A=1-335"/>
</dbReference>
<dbReference type="PDB" id="5TBB">
    <property type="method" value="X-ray"/>
    <property type="resolution" value="2.39 A"/>
    <property type="chains" value="A=1-335"/>
</dbReference>
<dbReference type="PDB" id="5TBC">
    <property type="method" value="X-ray"/>
    <property type="resolution" value="1.85 A"/>
    <property type="chains" value="A=1-335"/>
</dbReference>
<dbReference type="PDB" id="5TZV">
    <property type="method" value="X-ray"/>
    <property type="resolution" value="2.00 A"/>
    <property type="chains" value="A=1-335"/>
</dbReference>
<dbReference type="PDB" id="5U2R">
    <property type="method" value="X-ray"/>
    <property type="resolution" value="1.80 A"/>
    <property type="chains" value="A=1-335"/>
</dbReference>
<dbReference type="PDB" id="5U2S">
    <property type="method" value="X-ray"/>
    <property type="resolution" value="2.30 A"/>
    <property type="chains" value="A=1-335"/>
</dbReference>
<dbReference type="PDB" id="5U2T">
    <property type="method" value="X-ray"/>
    <property type="resolution" value="1.79 A"/>
    <property type="chains" value="A=1-335"/>
</dbReference>
<dbReference type="PDB" id="5U8G">
    <property type="method" value="X-ray"/>
    <property type="resolution" value="2.17 A"/>
    <property type="chains" value="A=1-335"/>
</dbReference>
<dbReference type="PDB" id="5U8H">
    <property type="method" value="X-ray"/>
    <property type="resolution" value="2.15 A"/>
    <property type="chains" value="A=1-335"/>
</dbReference>
<dbReference type="PDB" id="5U8I">
    <property type="method" value="X-ray"/>
    <property type="resolution" value="2.45 A"/>
    <property type="chains" value="A=1-335"/>
</dbReference>
<dbReference type="PDB" id="5U9H">
    <property type="method" value="X-ray"/>
    <property type="resolution" value="1.85 A"/>
    <property type="chains" value="A=1-335"/>
</dbReference>
<dbReference type="PDB" id="5UGN">
    <property type="method" value="X-ray"/>
    <property type="resolution" value="2.00 A"/>
    <property type="chains" value="A=1-335"/>
</dbReference>
<dbReference type="PDB" id="5UGO">
    <property type="method" value="X-ray"/>
    <property type="resolution" value="1.90 A"/>
    <property type="chains" value="A=1-335"/>
</dbReference>
<dbReference type="PDB" id="5UGP">
    <property type="method" value="X-ray"/>
    <property type="resolution" value="1.96 A"/>
    <property type="chains" value="A=1-335"/>
</dbReference>
<dbReference type="PDB" id="5V1F">
    <property type="method" value="X-ray"/>
    <property type="resolution" value="2.18 A"/>
    <property type="chains" value="A=1-335"/>
</dbReference>
<dbReference type="PDB" id="5V1G">
    <property type="method" value="X-ray"/>
    <property type="resolution" value="1.80 A"/>
    <property type="chains" value="A=1-335"/>
</dbReference>
<dbReference type="PDB" id="5V1H">
    <property type="method" value="X-ray"/>
    <property type="resolution" value="1.95 A"/>
    <property type="chains" value="A=1-335"/>
</dbReference>
<dbReference type="PDB" id="5V1I">
    <property type="method" value="X-ray"/>
    <property type="resolution" value="2.04 A"/>
    <property type="chains" value="A=1-335"/>
</dbReference>
<dbReference type="PDB" id="5V1J">
    <property type="method" value="X-ray"/>
    <property type="resolution" value="2.62 A"/>
    <property type="chains" value="A=1-335"/>
</dbReference>
<dbReference type="PDB" id="5V1N">
    <property type="method" value="X-ray"/>
    <property type="resolution" value="2.00 A"/>
    <property type="chains" value="A=1-335"/>
</dbReference>
<dbReference type="PDB" id="5V1O">
    <property type="method" value="X-ray"/>
    <property type="resolution" value="1.80 A"/>
    <property type="chains" value="A=1-335"/>
</dbReference>
<dbReference type="PDB" id="5V1P">
    <property type="method" value="X-ray"/>
    <property type="resolution" value="1.99 A"/>
    <property type="chains" value="A=1-335"/>
</dbReference>
<dbReference type="PDB" id="5V1R">
    <property type="method" value="X-ray"/>
    <property type="resolution" value="2.08 A"/>
    <property type="chains" value="A=1-335"/>
</dbReference>
<dbReference type="PDB" id="5VEZ">
    <property type="method" value="X-ray"/>
    <property type="resolution" value="2.04 A"/>
    <property type="chains" value="A=1-335"/>
</dbReference>
<dbReference type="PDB" id="5VRW">
    <property type="method" value="X-ray"/>
    <property type="resolution" value="2.58 A"/>
    <property type="chains" value="A=1-335"/>
</dbReference>
<dbReference type="PDB" id="5VRX">
    <property type="method" value="X-ray"/>
    <property type="resolution" value="2.20 A"/>
    <property type="chains" value="A=1-335"/>
</dbReference>
<dbReference type="PDB" id="5VRY">
    <property type="method" value="X-ray"/>
    <property type="resolution" value="1.90 A"/>
    <property type="chains" value="A=1-335"/>
</dbReference>
<dbReference type="PDB" id="5VRZ">
    <property type="method" value="X-ray"/>
    <property type="resolution" value="2.05 A"/>
    <property type="chains" value="A=1-335"/>
</dbReference>
<dbReference type="PDB" id="5VS0">
    <property type="method" value="X-ray"/>
    <property type="resolution" value="2.10 A"/>
    <property type="chains" value="A=1-335"/>
</dbReference>
<dbReference type="PDB" id="5VS1">
    <property type="method" value="X-ray"/>
    <property type="resolution" value="2.50 A"/>
    <property type="chains" value="A=1-335"/>
</dbReference>
<dbReference type="PDB" id="5VS2">
    <property type="method" value="X-ray"/>
    <property type="resolution" value="2.33 A"/>
    <property type="chains" value="A=1-335"/>
</dbReference>
<dbReference type="PDB" id="5VS3">
    <property type="method" value="X-ray"/>
    <property type="resolution" value="1.70 A"/>
    <property type="chains" value="A=1-335"/>
</dbReference>
<dbReference type="PDB" id="5VS4">
    <property type="method" value="X-ray"/>
    <property type="resolution" value="1.87 A"/>
    <property type="chains" value="A=1-335"/>
</dbReference>
<dbReference type="PDB" id="5WNX">
    <property type="method" value="X-ray"/>
    <property type="resolution" value="2.55 A"/>
    <property type="chains" value="A=1-335"/>
</dbReference>
<dbReference type="PDB" id="5WNY">
    <property type="method" value="X-ray"/>
    <property type="resolution" value="2.10 A"/>
    <property type="chains" value="A=1-335"/>
</dbReference>
<dbReference type="PDB" id="5WNZ">
    <property type="method" value="X-ray"/>
    <property type="resolution" value="2.20 A"/>
    <property type="chains" value="A=1-335"/>
</dbReference>
<dbReference type="PDB" id="5WO0">
    <property type="method" value="X-ray"/>
    <property type="resolution" value="1.60 A"/>
    <property type="chains" value="A=1-335"/>
</dbReference>
<dbReference type="PDB" id="6BEL">
    <property type="method" value="X-ray"/>
    <property type="resolution" value="1.90 A"/>
    <property type="chains" value="A=1-335"/>
</dbReference>
<dbReference type="PDB" id="6BEM">
    <property type="method" value="X-ray"/>
    <property type="resolution" value="1.88 A"/>
    <property type="chains" value="A=1-335"/>
</dbReference>
<dbReference type="PDB" id="6BTE">
    <property type="method" value="X-ray"/>
    <property type="resolution" value="2.20 A"/>
    <property type="chains" value="A=1-335"/>
</dbReference>
<dbReference type="PDB" id="6BTF">
    <property type="method" value="X-ray"/>
    <property type="resolution" value="1.75 A"/>
    <property type="chains" value="A=1-335"/>
</dbReference>
<dbReference type="PDB" id="6CLY">
    <property type="method" value="X-ray"/>
    <property type="resolution" value="2.19 A"/>
    <property type="chains" value="A=1-335"/>
</dbReference>
<dbReference type="PDB" id="6CPQ">
    <property type="method" value="X-ray"/>
    <property type="resolution" value="1.93 A"/>
    <property type="chains" value="A=1-335"/>
</dbReference>
<dbReference type="PDB" id="6CR3">
    <property type="method" value="X-ray"/>
    <property type="resolution" value="1.95 A"/>
    <property type="chains" value="A=1-335"/>
</dbReference>
<dbReference type="PDB" id="6CR4">
    <property type="method" value="X-ray"/>
    <property type="resolution" value="1.80 A"/>
    <property type="chains" value="A=1-335"/>
</dbReference>
<dbReference type="PDB" id="6CR5">
    <property type="method" value="X-ray"/>
    <property type="resolution" value="1.98 A"/>
    <property type="chains" value="A=1-335"/>
</dbReference>
<dbReference type="PDB" id="6CR6">
    <property type="method" value="X-ray"/>
    <property type="resolution" value="2.10 A"/>
    <property type="chains" value="A=1-335"/>
</dbReference>
<dbReference type="PDB" id="6CR7">
    <property type="method" value="X-ray"/>
    <property type="resolution" value="2.29 A"/>
    <property type="chains" value="A=1-335"/>
</dbReference>
<dbReference type="PDB" id="6CR8">
    <property type="method" value="X-ray"/>
    <property type="resolution" value="2.05 A"/>
    <property type="chains" value="A=1-335"/>
</dbReference>
<dbReference type="PDB" id="6CR9">
    <property type="method" value="X-ray"/>
    <property type="resolution" value="1.96 A"/>
    <property type="chains" value="A=1-335"/>
</dbReference>
<dbReference type="PDB" id="6CRB">
    <property type="method" value="X-ray"/>
    <property type="resolution" value="2.15 A"/>
    <property type="chains" value="A=1-335"/>
</dbReference>
<dbReference type="PDB" id="6CRC">
    <property type="method" value="X-ray"/>
    <property type="resolution" value="2.30 A"/>
    <property type="chains" value="A=1-335"/>
</dbReference>
<dbReference type="PDB" id="6CRH">
    <property type="method" value="X-ray"/>
    <property type="resolution" value="2.33 A"/>
    <property type="chains" value="A=1-335"/>
</dbReference>
<dbReference type="PDB" id="6CTI">
    <property type="method" value="X-ray"/>
    <property type="resolution" value="2.00 A"/>
    <property type="chains" value="A=1-335"/>
</dbReference>
<dbReference type="PDB" id="6CTJ">
    <property type="method" value="X-ray"/>
    <property type="resolution" value="2.10 A"/>
    <property type="chains" value="A=1-335"/>
</dbReference>
<dbReference type="PDB" id="6CTK">
    <property type="method" value="X-ray"/>
    <property type="resolution" value="2.15 A"/>
    <property type="chains" value="A=1-335"/>
</dbReference>
<dbReference type="PDB" id="6CTL">
    <property type="method" value="X-ray"/>
    <property type="resolution" value="2.00 A"/>
    <property type="chains" value="A=1-335"/>
</dbReference>
<dbReference type="PDB" id="6CTM">
    <property type="method" value="X-ray"/>
    <property type="resolution" value="2.10 A"/>
    <property type="chains" value="A=1-335"/>
</dbReference>
<dbReference type="PDB" id="6CTN">
    <property type="method" value="X-ray"/>
    <property type="resolution" value="1.92 A"/>
    <property type="chains" value="A=1-335"/>
</dbReference>
<dbReference type="PDB" id="6CTO">
    <property type="method" value="X-ray"/>
    <property type="resolution" value="2.04 A"/>
    <property type="chains" value="A=1-335"/>
</dbReference>
<dbReference type="PDB" id="6CTP">
    <property type="method" value="X-ray"/>
    <property type="resolution" value="2.20 A"/>
    <property type="chains" value="A=1-335"/>
</dbReference>
<dbReference type="PDB" id="6CTQ">
    <property type="method" value="X-ray"/>
    <property type="resolution" value="1.87 A"/>
    <property type="chains" value="A=1-335"/>
</dbReference>
<dbReference type="PDB" id="6CTR">
    <property type="method" value="X-ray"/>
    <property type="resolution" value="1.85 A"/>
    <property type="chains" value="A=1-335"/>
</dbReference>
<dbReference type="PDB" id="6CTT">
    <property type="method" value="X-ray"/>
    <property type="resolution" value="2.00 A"/>
    <property type="chains" value="A=1-335"/>
</dbReference>
<dbReference type="PDB" id="6CTU">
    <property type="method" value="X-ray"/>
    <property type="resolution" value="1.90 A"/>
    <property type="chains" value="A=1-335"/>
</dbReference>
<dbReference type="PDB" id="6CTV">
    <property type="method" value="X-ray"/>
    <property type="resolution" value="2.02 A"/>
    <property type="chains" value="A=1-335"/>
</dbReference>
<dbReference type="PDB" id="6CTW">
    <property type="method" value="X-ray"/>
    <property type="resolution" value="1.98 A"/>
    <property type="chains" value="A=1-335"/>
</dbReference>
<dbReference type="PDB" id="6CTX">
    <property type="method" value="X-ray"/>
    <property type="resolution" value="2.02 A"/>
    <property type="chains" value="A=1-335"/>
</dbReference>
<dbReference type="PDB" id="6CU9">
    <property type="method" value="X-ray"/>
    <property type="resolution" value="2.04 A"/>
    <property type="chains" value="A=1-335"/>
</dbReference>
<dbReference type="PDB" id="6CUA">
    <property type="method" value="X-ray"/>
    <property type="resolution" value="2.17 A"/>
    <property type="chains" value="A=1-335"/>
</dbReference>
<dbReference type="PDB" id="6CUB">
    <property type="method" value="X-ray"/>
    <property type="resolution" value="2.05 A"/>
    <property type="chains" value="A=1-335"/>
</dbReference>
<dbReference type="PDB" id="6DIA">
    <property type="method" value="X-ray"/>
    <property type="resolution" value="1.97 A"/>
    <property type="chains" value="A=1-335"/>
</dbReference>
<dbReference type="PDB" id="6DIC">
    <property type="method" value="X-ray"/>
    <property type="resolution" value="1.99 A"/>
    <property type="chains" value="A=1-335"/>
</dbReference>
<dbReference type="PDB" id="6E3R">
    <property type="method" value="X-ray"/>
    <property type="resolution" value="2.26 A"/>
    <property type="chains" value="A=1-335"/>
</dbReference>
<dbReference type="PDB" id="6E3V">
    <property type="method" value="X-ray"/>
    <property type="resolution" value="1.96 A"/>
    <property type="chains" value="A=1-335"/>
</dbReference>
<dbReference type="PDB" id="6E3W">
    <property type="method" value="X-ray"/>
    <property type="resolution" value="2.02 A"/>
    <property type="chains" value="A=1-335"/>
</dbReference>
<dbReference type="PDB" id="6E3X">
    <property type="method" value="X-ray"/>
    <property type="resolution" value="2.65 A"/>
    <property type="chains" value="A=1-335"/>
</dbReference>
<dbReference type="PDB" id="6G2Q">
    <property type="method" value="X-ray"/>
    <property type="resolution" value="2.15 A"/>
    <property type="chains" value="A=1-335"/>
</dbReference>
<dbReference type="PDB" id="6MR7">
    <property type="method" value="X-ray"/>
    <property type="resolution" value="2.14 A"/>
    <property type="chains" value="A=1-335"/>
</dbReference>
<dbReference type="PDB" id="6MR8">
    <property type="method" value="X-ray"/>
    <property type="resolution" value="1.90 A"/>
    <property type="chains" value="A=1-335"/>
</dbReference>
<dbReference type="PDB" id="6N2R">
    <property type="method" value="X-ray"/>
    <property type="resolution" value="2.10 A"/>
    <property type="chains" value="A=1-335"/>
</dbReference>
<dbReference type="PDB" id="6N2S">
    <property type="method" value="X-ray"/>
    <property type="resolution" value="2.46 A"/>
    <property type="chains" value="A=1-335"/>
</dbReference>
<dbReference type="PDB" id="6N2T">
    <property type="method" value="X-ray"/>
    <property type="resolution" value="2.60 A"/>
    <property type="chains" value="A=1-335"/>
</dbReference>
<dbReference type="PDB" id="6NKR">
    <property type="method" value="X-ray"/>
    <property type="resolution" value="2.45 A"/>
    <property type="chains" value="A=1-335"/>
</dbReference>
<dbReference type="PDB" id="6NKS">
    <property type="method" value="X-ray"/>
    <property type="resolution" value="2.35 A"/>
    <property type="chains" value="A=1-335"/>
</dbReference>
<dbReference type="PDB" id="6NKT">
    <property type="method" value="X-ray"/>
    <property type="resolution" value="2.60 A"/>
    <property type="chains" value="A=1-335"/>
</dbReference>
<dbReference type="PDB" id="6NKU">
    <property type="method" value="X-ray"/>
    <property type="resolution" value="1.90 A"/>
    <property type="chains" value="A=1-335"/>
</dbReference>
<dbReference type="PDB" id="6NKV">
    <property type="method" value="X-ray"/>
    <property type="resolution" value="1.85 A"/>
    <property type="chains" value="A=1-335"/>
</dbReference>
<dbReference type="PDB" id="6NKW">
    <property type="method" value="X-ray"/>
    <property type="resolution" value="1.98 A"/>
    <property type="chains" value="A=1-335"/>
</dbReference>
<dbReference type="PDB" id="6NKX">
    <property type="method" value="X-ray"/>
    <property type="resolution" value="1.98 A"/>
    <property type="chains" value="A=1-335"/>
</dbReference>
<dbReference type="PDB" id="6NKY">
    <property type="method" value="X-ray"/>
    <property type="resolution" value="2.09 A"/>
    <property type="chains" value="A=1-335"/>
</dbReference>
<dbReference type="PDB" id="6NKZ">
    <property type="method" value="X-ray"/>
    <property type="resolution" value="2.01 A"/>
    <property type="chains" value="A=1-335"/>
</dbReference>
<dbReference type="PDB" id="6NL0">
    <property type="method" value="X-ray"/>
    <property type="resolution" value="1.97 A"/>
    <property type="chains" value="A=1-335"/>
</dbReference>
<dbReference type="PDB" id="6PH5">
    <property type="method" value="X-ray"/>
    <property type="resolution" value="2.60 A"/>
    <property type="chains" value="A=1-335"/>
</dbReference>
<dbReference type="PDB" id="6PH6">
    <property type="method" value="X-ray"/>
    <property type="resolution" value="2.60 A"/>
    <property type="chains" value="A=1-335"/>
</dbReference>
<dbReference type="PDB" id="6PKZ">
    <property type="method" value="X-ray"/>
    <property type="resolution" value="2.74 A"/>
    <property type="chains" value="A=1-335"/>
</dbReference>
<dbReference type="PDB" id="6U2O">
    <property type="method" value="X-ray"/>
    <property type="resolution" value="2.30 A"/>
    <property type="chains" value="A=1-335"/>
</dbReference>
<dbReference type="PDB" id="6U6B">
    <property type="method" value="X-ray"/>
    <property type="resolution" value="3.11 A"/>
    <property type="chains" value="A=1-335"/>
</dbReference>
<dbReference type="PDB" id="6UOK">
    <property type="method" value="X-ray"/>
    <property type="resolution" value="2.55 A"/>
    <property type="chains" value="A/F=1-335"/>
</dbReference>
<dbReference type="PDB" id="6UOL">
    <property type="method" value="X-ray"/>
    <property type="resolution" value="1.94 A"/>
    <property type="chains" value="A=1-335"/>
</dbReference>
<dbReference type="PDB" id="6UOM">
    <property type="method" value="X-ray"/>
    <property type="resolution" value="2.05 A"/>
    <property type="chains" value="A=1-335"/>
</dbReference>
<dbReference type="PDB" id="6W2M">
    <property type="method" value="X-ray"/>
    <property type="resolution" value="2.00 A"/>
    <property type="chains" value="A=1-335"/>
</dbReference>
<dbReference type="PDB" id="7ICE">
    <property type="method" value="X-ray"/>
    <property type="resolution" value="2.80 A"/>
    <property type="chains" value="A=1-335"/>
</dbReference>
<dbReference type="PDB" id="7ICF">
    <property type="method" value="X-ray"/>
    <property type="resolution" value="3.10 A"/>
    <property type="chains" value="A=1-335"/>
</dbReference>
<dbReference type="PDB" id="7ICG">
    <property type="method" value="X-ray"/>
    <property type="resolution" value="3.00 A"/>
    <property type="chains" value="A=1-335"/>
</dbReference>
<dbReference type="PDB" id="7ICH">
    <property type="method" value="X-ray"/>
    <property type="resolution" value="2.90 A"/>
    <property type="chains" value="A=1-335"/>
</dbReference>
<dbReference type="PDB" id="7ICI">
    <property type="method" value="X-ray"/>
    <property type="resolution" value="2.80 A"/>
    <property type="chains" value="A=1-335"/>
</dbReference>
<dbReference type="PDB" id="7ICJ">
    <property type="method" value="X-ray"/>
    <property type="resolution" value="3.50 A"/>
    <property type="chains" value="A=1-335"/>
</dbReference>
<dbReference type="PDB" id="7ICK">
    <property type="method" value="X-ray"/>
    <property type="resolution" value="2.90 A"/>
    <property type="chains" value="A=1-335"/>
</dbReference>
<dbReference type="PDB" id="7ICL">
    <property type="method" value="X-ray"/>
    <property type="resolution" value="3.10 A"/>
    <property type="chains" value="A=1-335"/>
</dbReference>
<dbReference type="PDB" id="7ICM">
    <property type="method" value="X-ray"/>
    <property type="resolution" value="3.00 A"/>
    <property type="chains" value="A=1-335"/>
</dbReference>
<dbReference type="PDB" id="7ICN">
    <property type="method" value="X-ray"/>
    <property type="resolution" value="2.80 A"/>
    <property type="chains" value="A=1-335"/>
</dbReference>
<dbReference type="PDB" id="7ICO">
    <property type="method" value="X-ray"/>
    <property type="resolution" value="3.30 A"/>
    <property type="chains" value="A=1-335"/>
</dbReference>
<dbReference type="PDB" id="7ICP">
    <property type="method" value="X-ray"/>
    <property type="resolution" value="3.00 A"/>
    <property type="chains" value="A=1-335"/>
</dbReference>
<dbReference type="PDB" id="7ICQ">
    <property type="method" value="X-ray"/>
    <property type="resolution" value="2.90 A"/>
    <property type="chains" value="A=1-335"/>
</dbReference>
<dbReference type="PDB" id="7ICR">
    <property type="method" value="X-ray"/>
    <property type="resolution" value="3.00 A"/>
    <property type="chains" value="A=1-335"/>
</dbReference>
<dbReference type="PDB" id="7ICS">
    <property type="method" value="X-ray"/>
    <property type="resolution" value="2.80 A"/>
    <property type="chains" value="A=1-335"/>
</dbReference>
<dbReference type="PDB" id="7ICT">
    <property type="method" value="X-ray"/>
    <property type="resolution" value="2.80 A"/>
    <property type="chains" value="A=1-335"/>
</dbReference>
<dbReference type="PDB" id="7ICU">
    <property type="method" value="X-ray"/>
    <property type="resolution" value="3.30 A"/>
    <property type="chains" value="A=1-335"/>
</dbReference>
<dbReference type="PDB" id="7ICV">
    <property type="method" value="X-ray"/>
    <property type="resolution" value="2.80 A"/>
    <property type="chains" value="A=1-335"/>
</dbReference>
<dbReference type="PDB" id="7K96">
    <property type="method" value="X-ray"/>
    <property type="resolution" value="2.10 A"/>
    <property type="chains" value="A=1-335"/>
</dbReference>
<dbReference type="PDB" id="7K97">
    <property type="method" value="X-ray"/>
    <property type="resolution" value="2.40 A"/>
    <property type="chains" value="A=10-335"/>
</dbReference>
<dbReference type="PDB" id="7MZ0">
    <property type="method" value="X-ray"/>
    <property type="resolution" value="2.02 A"/>
    <property type="chains" value="A=7-335"/>
</dbReference>
<dbReference type="PDB" id="7MZ1">
    <property type="method" value="X-ray"/>
    <property type="resolution" value="2.17 A"/>
    <property type="chains" value="A=10-335"/>
</dbReference>
<dbReference type="PDB" id="7MZ2">
    <property type="method" value="X-ray"/>
    <property type="resolution" value="2.09 A"/>
    <property type="chains" value="A=10-335"/>
</dbReference>
<dbReference type="PDB" id="7MZ3">
    <property type="method" value="X-ray"/>
    <property type="resolution" value="2.42 A"/>
    <property type="chains" value="A=7-335"/>
</dbReference>
<dbReference type="PDB" id="7MZ4">
    <property type="method" value="X-ray"/>
    <property type="resolution" value="2.08 A"/>
    <property type="chains" value="A=7-335"/>
</dbReference>
<dbReference type="PDB" id="7MZ8">
    <property type="method" value="X-ray"/>
    <property type="resolution" value="2.60 A"/>
    <property type="chains" value="A=7-335"/>
</dbReference>
<dbReference type="PDB" id="7RBE">
    <property type="method" value="X-ray"/>
    <property type="resolution" value="1.89 A"/>
    <property type="chains" value="A=1-335"/>
</dbReference>
<dbReference type="PDB" id="7RBF">
    <property type="method" value="X-ray"/>
    <property type="resolution" value="1.84 A"/>
    <property type="chains" value="A=1-335"/>
</dbReference>
<dbReference type="PDB" id="7RBG">
    <property type="method" value="X-ray"/>
    <property type="resolution" value="1.90 A"/>
    <property type="chains" value="A=1-335"/>
</dbReference>
<dbReference type="PDB" id="7RBH">
    <property type="method" value="X-ray"/>
    <property type="resolution" value="1.75 A"/>
    <property type="chains" value="A=1-335"/>
</dbReference>
<dbReference type="PDB" id="7RBI">
    <property type="method" value="X-ray"/>
    <property type="resolution" value="1.93 A"/>
    <property type="chains" value="A=1-335"/>
</dbReference>
<dbReference type="PDB" id="7RBJ">
    <property type="method" value="X-ray"/>
    <property type="resolution" value="1.91 A"/>
    <property type="chains" value="A=1-335"/>
</dbReference>
<dbReference type="PDB" id="7RBK">
    <property type="method" value="X-ray"/>
    <property type="resolution" value="2.20 A"/>
    <property type="chains" value="A=1-335"/>
</dbReference>
<dbReference type="PDB" id="7RBL">
    <property type="method" value="X-ray"/>
    <property type="resolution" value="1.98 A"/>
    <property type="chains" value="A=1-335"/>
</dbReference>
<dbReference type="PDB" id="7RBM">
    <property type="method" value="X-ray"/>
    <property type="resolution" value="2.21 A"/>
    <property type="chains" value="A=1-335"/>
</dbReference>
<dbReference type="PDB" id="7RBN">
    <property type="method" value="X-ray"/>
    <property type="resolution" value="2.90 A"/>
    <property type="chains" value="A=1-335"/>
</dbReference>
<dbReference type="PDB" id="7RBO">
    <property type="method" value="X-ray"/>
    <property type="resolution" value="2.96 A"/>
    <property type="chains" value="A=1-335"/>
</dbReference>
<dbReference type="PDB" id="7S9J">
    <property type="method" value="X-ray"/>
    <property type="resolution" value="1.91 A"/>
    <property type="chains" value="A=1-335"/>
</dbReference>
<dbReference type="PDB" id="7S9K">
    <property type="method" value="X-ray"/>
    <property type="resolution" value="1.97 A"/>
    <property type="chains" value="A=1-335"/>
</dbReference>
<dbReference type="PDB" id="7S9L">
    <property type="method" value="X-ray"/>
    <property type="resolution" value="2.05 A"/>
    <property type="chains" value="A=1-335"/>
</dbReference>
<dbReference type="PDB" id="7S9M">
    <property type="method" value="X-ray"/>
    <property type="resolution" value="2.31 A"/>
    <property type="chains" value="A=1-335"/>
</dbReference>
<dbReference type="PDB" id="7S9N">
    <property type="method" value="X-ray"/>
    <property type="resolution" value="1.71 A"/>
    <property type="chains" value="A=1-335"/>
</dbReference>
<dbReference type="PDB" id="7S9O">
    <property type="method" value="X-ray"/>
    <property type="resolution" value="2.23 A"/>
    <property type="chains" value="A=1-335"/>
</dbReference>
<dbReference type="PDB" id="7S9P">
    <property type="method" value="X-ray"/>
    <property type="resolution" value="1.86 A"/>
    <property type="chains" value="A=1-335"/>
</dbReference>
<dbReference type="PDB" id="7S9Q">
    <property type="method" value="X-ray"/>
    <property type="resolution" value="1.90 A"/>
    <property type="chains" value="A=1-335"/>
</dbReference>
<dbReference type="PDB" id="8ICA">
    <property type="method" value="X-ray"/>
    <property type="resolution" value="3.00 A"/>
    <property type="chains" value="A=1-335"/>
</dbReference>
<dbReference type="PDB" id="8ICB">
    <property type="method" value="X-ray"/>
    <property type="resolution" value="3.10 A"/>
    <property type="chains" value="A=1-335"/>
</dbReference>
<dbReference type="PDB" id="8ICC">
    <property type="method" value="X-ray"/>
    <property type="resolution" value="2.80 A"/>
    <property type="chains" value="A=1-335"/>
</dbReference>
<dbReference type="PDB" id="8ICE">
    <property type="method" value="X-ray"/>
    <property type="resolution" value="3.20 A"/>
    <property type="chains" value="A=1-335"/>
</dbReference>
<dbReference type="PDB" id="8ICF">
    <property type="method" value="X-ray"/>
    <property type="resolution" value="2.90 A"/>
    <property type="chains" value="A=1-335"/>
</dbReference>
<dbReference type="PDB" id="8ICG">
    <property type="method" value="X-ray"/>
    <property type="resolution" value="3.30 A"/>
    <property type="chains" value="A=1-335"/>
</dbReference>
<dbReference type="PDB" id="8ICH">
    <property type="method" value="X-ray"/>
    <property type="resolution" value="3.30 A"/>
    <property type="chains" value="A=1-335"/>
</dbReference>
<dbReference type="PDB" id="8ICI">
    <property type="method" value="X-ray"/>
    <property type="resolution" value="2.80 A"/>
    <property type="chains" value="A=1-335"/>
</dbReference>
<dbReference type="PDB" id="8ICJ">
    <property type="method" value="X-ray"/>
    <property type="resolution" value="3.20 A"/>
    <property type="chains" value="A=1-335"/>
</dbReference>
<dbReference type="PDB" id="8ICK">
    <property type="method" value="X-ray"/>
    <property type="resolution" value="2.70 A"/>
    <property type="chains" value="A=1-335"/>
</dbReference>
<dbReference type="PDB" id="8ICL">
    <property type="method" value="X-ray"/>
    <property type="resolution" value="3.10 A"/>
    <property type="chains" value="A=1-335"/>
</dbReference>
<dbReference type="PDB" id="8ICM">
    <property type="method" value="X-ray"/>
    <property type="resolution" value="2.90 A"/>
    <property type="chains" value="A=1-335"/>
</dbReference>
<dbReference type="PDB" id="8ICN">
    <property type="method" value="X-ray"/>
    <property type="resolution" value="2.80 A"/>
    <property type="chains" value="A=1-335"/>
</dbReference>
<dbReference type="PDB" id="8ICO">
    <property type="method" value="X-ray"/>
    <property type="resolution" value="2.70 A"/>
    <property type="chains" value="A=1-335"/>
</dbReference>
<dbReference type="PDB" id="8ICP">
    <property type="method" value="X-ray"/>
    <property type="resolution" value="2.90 A"/>
    <property type="chains" value="A=1-335"/>
</dbReference>
<dbReference type="PDB" id="8ICQ">
    <property type="method" value="X-ray"/>
    <property type="resolution" value="3.00 A"/>
    <property type="chains" value="A=1-335"/>
</dbReference>
<dbReference type="PDB" id="8ICR">
    <property type="method" value="X-ray"/>
    <property type="resolution" value="2.90 A"/>
    <property type="chains" value="A=1-335"/>
</dbReference>
<dbReference type="PDB" id="8ICS">
    <property type="method" value="X-ray"/>
    <property type="resolution" value="2.90 A"/>
    <property type="chains" value="A=1-335"/>
</dbReference>
<dbReference type="PDB" id="8ICT">
    <property type="method" value="X-ray"/>
    <property type="resolution" value="3.10 A"/>
    <property type="chains" value="A=1-335"/>
</dbReference>
<dbReference type="PDB" id="8ICU">
    <property type="method" value="X-ray"/>
    <property type="resolution" value="3.00 A"/>
    <property type="chains" value="A=1-335"/>
</dbReference>
<dbReference type="PDB" id="8ICV">
    <property type="method" value="X-ray"/>
    <property type="resolution" value="3.20 A"/>
    <property type="chains" value="A=1-335"/>
</dbReference>
<dbReference type="PDB" id="8ICW">
    <property type="method" value="X-ray"/>
    <property type="resolution" value="3.30 A"/>
    <property type="chains" value="A=1-335"/>
</dbReference>
<dbReference type="PDB" id="8ICX">
    <property type="method" value="X-ray"/>
    <property type="resolution" value="3.00 A"/>
    <property type="chains" value="A=1-335"/>
</dbReference>
<dbReference type="PDB" id="8ICY">
    <property type="method" value="X-ray"/>
    <property type="resolution" value="3.10 A"/>
    <property type="chains" value="A=1-335"/>
</dbReference>
<dbReference type="PDB" id="8ICZ">
    <property type="method" value="X-ray"/>
    <property type="resolution" value="3.10 A"/>
    <property type="chains" value="A=1-335"/>
</dbReference>
<dbReference type="PDB" id="8VF8">
    <property type="method" value="X-ray"/>
    <property type="resolution" value="1.98 A"/>
    <property type="chains" value="A=1-335"/>
</dbReference>
<dbReference type="PDB" id="8VF9">
    <property type="method" value="X-ray"/>
    <property type="resolution" value="1.90 A"/>
    <property type="chains" value="A=1-335"/>
</dbReference>
<dbReference type="PDB" id="8VFA">
    <property type="method" value="X-ray"/>
    <property type="resolution" value="2.05 A"/>
    <property type="chains" value="A=1-335"/>
</dbReference>
<dbReference type="PDB" id="8VFB">
    <property type="method" value="X-ray"/>
    <property type="resolution" value="2.64 A"/>
    <property type="chains" value="A=1-335"/>
</dbReference>
<dbReference type="PDB" id="8VFC">
    <property type="method" value="X-ray"/>
    <property type="resolution" value="2.48 A"/>
    <property type="chains" value="A=1-335"/>
</dbReference>
<dbReference type="PDB" id="8VFD">
    <property type="method" value="X-ray"/>
    <property type="resolution" value="2.10 A"/>
    <property type="chains" value="A=1-335"/>
</dbReference>
<dbReference type="PDB" id="8VFE">
    <property type="method" value="X-ray"/>
    <property type="resolution" value="2.09 A"/>
    <property type="chains" value="A=1-335"/>
</dbReference>
<dbReference type="PDB" id="8VFF">
    <property type="method" value="X-ray"/>
    <property type="resolution" value="1.69 A"/>
    <property type="chains" value="A=1-335"/>
</dbReference>
<dbReference type="PDB" id="8VFG">
    <property type="method" value="X-ray"/>
    <property type="resolution" value="1.54 A"/>
    <property type="chains" value="A=1-335"/>
</dbReference>
<dbReference type="PDB" id="8VFH">
    <property type="method" value="X-ray"/>
    <property type="resolution" value="2.01 A"/>
    <property type="chains" value="A=1-335"/>
</dbReference>
<dbReference type="PDB" id="8VFI">
    <property type="method" value="X-ray"/>
    <property type="resolution" value="1.77 A"/>
    <property type="chains" value="A=1-335"/>
</dbReference>
<dbReference type="PDB" id="8VFJ">
    <property type="method" value="X-ray"/>
    <property type="resolution" value="2.14 A"/>
    <property type="chains" value="A=1-335"/>
</dbReference>
<dbReference type="PDB" id="9DWG">
    <property type="method" value="EM"/>
    <property type="resolution" value="3.30 A"/>
    <property type="chains" value="L=1-335"/>
</dbReference>
<dbReference type="PDB" id="9DWH">
    <property type="method" value="EM"/>
    <property type="resolution" value="3.30 A"/>
    <property type="chains" value="L=1-335"/>
</dbReference>
<dbReference type="PDB" id="9DWI">
    <property type="method" value="EM"/>
    <property type="resolution" value="3.30 A"/>
    <property type="chains" value="L=1-335"/>
</dbReference>
<dbReference type="PDB" id="9DWK">
    <property type="method" value="EM"/>
    <property type="resolution" value="4.30 A"/>
    <property type="chains" value="L=1-335"/>
</dbReference>
<dbReference type="PDB" id="9DWM">
    <property type="method" value="EM"/>
    <property type="resolution" value="4.20 A"/>
    <property type="chains" value="L=1-335"/>
</dbReference>
<dbReference type="PDB" id="9ICA">
    <property type="method" value="X-ray"/>
    <property type="resolution" value="3.00 A"/>
    <property type="chains" value="A=1-335"/>
</dbReference>
<dbReference type="PDB" id="9ICB">
    <property type="method" value="X-ray"/>
    <property type="resolution" value="3.20 A"/>
    <property type="chains" value="A=1-335"/>
</dbReference>
<dbReference type="PDB" id="9ICC">
    <property type="method" value="X-ray"/>
    <property type="resolution" value="3.10 A"/>
    <property type="chains" value="A=1-335"/>
</dbReference>
<dbReference type="PDB" id="9ICE">
    <property type="method" value="X-ray"/>
    <property type="resolution" value="3.30 A"/>
    <property type="chains" value="A=1-335"/>
</dbReference>
<dbReference type="PDB" id="9ICF">
    <property type="method" value="X-ray"/>
    <property type="resolution" value="3.00 A"/>
    <property type="chains" value="A=1-335"/>
</dbReference>
<dbReference type="PDB" id="9ICG">
    <property type="method" value="X-ray"/>
    <property type="resolution" value="3.00 A"/>
    <property type="chains" value="A=1-335"/>
</dbReference>
<dbReference type="PDB" id="9ICH">
    <property type="method" value="X-ray"/>
    <property type="resolution" value="2.90 A"/>
    <property type="chains" value="A=1-335"/>
</dbReference>
<dbReference type="PDB" id="9ICI">
    <property type="method" value="X-ray"/>
    <property type="resolution" value="3.10 A"/>
    <property type="chains" value="A=1-335"/>
</dbReference>
<dbReference type="PDB" id="9ICJ">
    <property type="method" value="X-ray"/>
    <property type="resolution" value="3.10 A"/>
    <property type="chains" value="A=1-335"/>
</dbReference>
<dbReference type="PDB" id="9ICK">
    <property type="method" value="X-ray"/>
    <property type="resolution" value="2.70 A"/>
    <property type="chains" value="A=1-335"/>
</dbReference>
<dbReference type="PDB" id="9ICL">
    <property type="method" value="X-ray"/>
    <property type="resolution" value="2.80 A"/>
    <property type="chains" value="A=1-335"/>
</dbReference>
<dbReference type="PDB" id="9ICM">
    <property type="method" value="X-ray"/>
    <property type="resolution" value="2.90 A"/>
    <property type="chains" value="A=1-335"/>
</dbReference>
<dbReference type="PDB" id="9ICN">
    <property type="method" value="X-ray"/>
    <property type="resolution" value="3.00 A"/>
    <property type="chains" value="A=1-335"/>
</dbReference>
<dbReference type="PDB" id="9ICO">
    <property type="method" value="X-ray"/>
    <property type="resolution" value="2.90 A"/>
    <property type="chains" value="A=1-335"/>
</dbReference>
<dbReference type="PDB" id="9ICP">
    <property type="method" value="X-ray"/>
    <property type="resolution" value="3.10 A"/>
    <property type="chains" value="A=1-335"/>
</dbReference>
<dbReference type="PDB" id="9ICQ">
    <property type="method" value="X-ray"/>
    <property type="resolution" value="2.90 A"/>
    <property type="chains" value="A=1-335"/>
</dbReference>
<dbReference type="PDB" id="9ICR">
    <property type="method" value="X-ray"/>
    <property type="resolution" value="3.00 A"/>
    <property type="chains" value="A=1-335"/>
</dbReference>
<dbReference type="PDB" id="9ICS">
    <property type="method" value="X-ray"/>
    <property type="resolution" value="2.90 A"/>
    <property type="chains" value="A=1-335"/>
</dbReference>
<dbReference type="PDB" id="9ICT">
    <property type="method" value="X-ray"/>
    <property type="resolution" value="3.00 A"/>
    <property type="chains" value="A=1-335"/>
</dbReference>
<dbReference type="PDB" id="9ICU">
    <property type="method" value="X-ray"/>
    <property type="resolution" value="2.90 A"/>
    <property type="chains" value="A=1-335"/>
</dbReference>
<dbReference type="PDB" id="9ICV">
    <property type="method" value="X-ray"/>
    <property type="resolution" value="2.70 A"/>
    <property type="chains" value="A=1-335"/>
</dbReference>
<dbReference type="PDB" id="9ICW">
    <property type="method" value="X-ray"/>
    <property type="resolution" value="2.60 A"/>
    <property type="chains" value="A=1-335"/>
</dbReference>
<dbReference type="PDB" id="9ICX">
    <property type="method" value="X-ray"/>
    <property type="resolution" value="2.60 A"/>
    <property type="chains" value="A=1-335"/>
</dbReference>
<dbReference type="PDB" id="9ICY">
    <property type="method" value="X-ray"/>
    <property type="resolution" value="3.00 A"/>
    <property type="chains" value="A=1-335"/>
</dbReference>
<dbReference type="PDBsum" id="1BPX"/>
<dbReference type="PDBsum" id="1BPY"/>
<dbReference type="PDBsum" id="1BPZ"/>
<dbReference type="PDBsum" id="1MQ2"/>
<dbReference type="PDBsum" id="1MQ3"/>
<dbReference type="PDBsum" id="1TV9"/>
<dbReference type="PDBsum" id="1TVA"/>
<dbReference type="PDBsum" id="1ZJM"/>
<dbReference type="PDBsum" id="1ZJN"/>
<dbReference type="PDBsum" id="1ZQA"/>
<dbReference type="PDBsum" id="1ZQB"/>
<dbReference type="PDBsum" id="1ZQC"/>
<dbReference type="PDBsum" id="1ZQD"/>
<dbReference type="PDBsum" id="1ZQE"/>
<dbReference type="PDBsum" id="1ZQF"/>
<dbReference type="PDBsum" id="1ZQG"/>
<dbReference type="PDBsum" id="1ZQH"/>
<dbReference type="PDBsum" id="1ZQI"/>
<dbReference type="PDBsum" id="1ZQJ"/>
<dbReference type="PDBsum" id="1ZQK"/>
<dbReference type="PDBsum" id="1ZQL"/>
<dbReference type="PDBsum" id="1ZQM"/>
<dbReference type="PDBsum" id="1ZQN"/>
<dbReference type="PDBsum" id="1ZQO"/>
<dbReference type="PDBsum" id="1ZQP"/>
<dbReference type="PDBsum" id="1ZQQ"/>
<dbReference type="PDBsum" id="1ZQR"/>
<dbReference type="PDBsum" id="1ZQS"/>
<dbReference type="PDBsum" id="1ZQT"/>
<dbReference type="PDBsum" id="2FMP"/>
<dbReference type="PDBsum" id="2FMQ"/>
<dbReference type="PDBsum" id="2FMS"/>
<dbReference type="PDBsum" id="2I9G"/>
<dbReference type="PDBsum" id="2ISO"/>
<dbReference type="PDBsum" id="2ISP"/>
<dbReference type="PDBsum" id="2P66"/>
<dbReference type="PDBsum" id="2PXI"/>
<dbReference type="PDBsum" id="3C2K"/>
<dbReference type="PDBsum" id="3C2L"/>
<dbReference type="PDBsum" id="3C2M"/>
<dbReference type="PDBsum" id="3GDX"/>
<dbReference type="PDBsum" id="3ISB"/>
<dbReference type="PDBsum" id="3ISC"/>
<dbReference type="PDBsum" id="3ISD"/>
<dbReference type="PDBsum" id="3JPN"/>
<dbReference type="PDBsum" id="3JPO"/>
<dbReference type="PDBsum" id="3JPP"/>
<dbReference type="PDBsum" id="3JPQ"/>
<dbReference type="PDBsum" id="3JPR"/>
<dbReference type="PDBsum" id="3JPS"/>
<dbReference type="PDBsum" id="3JPT"/>
<dbReference type="PDBsum" id="3LK9"/>
<dbReference type="PDBsum" id="3MBY"/>
<dbReference type="PDBsum" id="3OGU"/>
<dbReference type="PDBsum" id="3RH4"/>
<dbReference type="PDBsum" id="3RH5"/>
<dbReference type="PDBsum" id="3RH6"/>
<dbReference type="PDBsum" id="3RJE"/>
<dbReference type="PDBsum" id="3RJF"/>
<dbReference type="PDBsum" id="3RJG"/>
<dbReference type="PDBsum" id="3RJH"/>
<dbReference type="PDBsum" id="3RJI"/>
<dbReference type="PDBsum" id="3RJJ"/>
<dbReference type="PDBsum" id="3RJK"/>
<dbReference type="PDBsum" id="3TFR"/>
<dbReference type="PDBsum" id="3TFS"/>
<dbReference type="PDBsum" id="4DO9"/>
<dbReference type="PDBsum" id="4DOA"/>
<dbReference type="PDBsum" id="4DOB"/>
<dbReference type="PDBsum" id="4DOC"/>
<dbReference type="PDBsum" id="4F5N"/>
<dbReference type="PDBsum" id="4F5O"/>
<dbReference type="PDBsum" id="4F5P"/>
<dbReference type="PDBsum" id="4F5Q"/>
<dbReference type="PDBsum" id="4F5R"/>
<dbReference type="PDBsum" id="4GXI"/>
<dbReference type="PDBsum" id="4GXJ"/>
<dbReference type="PDBsum" id="4GXK"/>
<dbReference type="PDBsum" id="4JWM"/>
<dbReference type="PDBsum" id="4JWN"/>
<dbReference type="PDBsum" id="4KLD"/>
<dbReference type="PDBsum" id="4KLE"/>
<dbReference type="PDBsum" id="4KLF"/>
<dbReference type="PDBsum" id="4KLG"/>
<dbReference type="PDBsum" id="4KLH"/>
<dbReference type="PDBsum" id="4KLI"/>
<dbReference type="PDBsum" id="4KLJ"/>
<dbReference type="PDBsum" id="4KLL"/>
<dbReference type="PDBsum" id="4KLM"/>
<dbReference type="PDBsum" id="4KLO"/>
<dbReference type="PDBsum" id="4KLQ"/>
<dbReference type="PDBsum" id="4KLS"/>
<dbReference type="PDBsum" id="4KLT"/>
<dbReference type="PDBsum" id="4KLU"/>
<dbReference type="PDBsum" id="4LVS"/>
<dbReference type="PDBsum" id="4M2Y"/>
<dbReference type="PDBsum" id="4M47"/>
<dbReference type="PDBsum" id="4M9G"/>
<dbReference type="PDBsum" id="4M9H"/>
<dbReference type="PDBsum" id="4M9J"/>
<dbReference type="PDBsum" id="4M9L"/>
<dbReference type="PDBsum" id="4M9N"/>
<dbReference type="PDBsum" id="4MF2"/>
<dbReference type="PDBsum" id="4MF8"/>
<dbReference type="PDBsum" id="4MFA"/>
<dbReference type="PDBsum" id="4MFC"/>
<dbReference type="PDBsum" id="4MFF"/>
<dbReference type="PDBsum" id="4NLK"/>
<dbReference type="PDBsum" id="4NLN"/>
<dbReference type="PDBsum" id="4NLZ"/>
<dbReference type="PDBsum" id="4NM1"/>
<dbReference type="PDBsum" id="4NM2"/>
<dbReference type="PDBsum" id="4NXZ"/>
<dbReference type="PDBsum" id="4NY8"/>
<dbReference type="PDBsum" id="4O5C"/>
<dbReference type="PDBsum" id="4O5E"/>
<dbReference type="PDBsum" id="4O5K"/>
<dbReference type="PDBsum" id="4O9M"/>
<dbReference type="PDBsum" id="4P2H"/>
<dbReference type="PDBsum" id="4PGQ"/>
<dbReference type="PDBsum" id="4PGX"/>
<dbReference type="PDBsum" id="4PGY"/>
<dbReference type="PDBsum" id="4PH5"/>
<dbReference type="PDBsum" id="4PHA"/>
<dbReference type="PDBsum" id="4PHD"/>
<dbReference type="PDBsum" id="4PHE"/>
<dbReference type="PDBsum" id="4PHP"/>
<dbReference type="PDBsum" id="4PPX"/>
<dbReference type="PDBsum" id="4R63"/>
<dbReference type="PDBsum" id="4R64"/>
<dbReference type="PDBsum" id="4R65"/>
<dbReference type="PDBsum" id="4R66"/>
<dbReference type="PDBsum" id="4RPX"/>
<dbReference type="PDBsum" id="4RPY"/>
<dbReference type="PDBsum" id="4RPZ"/>
<dbReference type="PDBsum" id="4RQ0"/>
<dbReference type="PDBsum" id="4RQ1"/>
<dbReference type="PDBsum" id="4RQ2"/>
<dbReference type="PDBsum" id="4RQ3"/>
<dbReference type="PDBsum" id="4RQ4"/>
<dbReference type="PDBsum" id="4RQ5"/>
<dbReference type="PDBsum" id="4RQ6"/>
<dbReference type="PDBsum" id="4RQ7"/>
<dbReference type="PDBsum" id="4RQ8"/>
<dbReference type="PDBsum" id="4RT2"/>
<dbReference type="PDBsum" id="4RT3"/>
<dbReference type="PDBsum" id="4TUP"/>
<dbReference type="PDBsum" id="4TUQ"/>
<dbReference type="PDBsum" id="4TUR"/>
<dbReference type="PDBsum" id="4TUS"/>
<dbReference type="PDBsum" id="4UAW"/>
<dbReference type="PDBsum" id="4UAY"/>
<dbReference type="PDBsum" id="4UAZ"/>
<dbReference type="PDBsum" id="4UB1"/>
<dbReference type="PDBsum" id="4UB2"/>
<dbReference type="PDBsum" id="4UB3"/>
<dbReference type="PDBsum" id="4UB4"/>
<dbReference type="PDBsum" id="4UB5"/>
<dbReference type="PDBsum" id="4UBB"/>
<dbReference type="PDBsum" id="4UBC"/>
<dbReference type="PDBsum" id="4YMM"/>
<dbReference type="PDBsum" id="4YMN"/>
<dbReference type="PDBsum" id="4YMO"/>
<dbReference type="PDBsum" id="4YN4"/>
<dbReference type="PDBsum" id="4Z6C"/>
<dbReference type="PDBsum" id="4Z6D"/>
<dbReference type="PDBsum" id="4Z6E"/>
<dbReference type="PDBsum" id="4Z6F"/>
<dbReference type="PDBsum" id="5BOL"/>
<dbReference type="PDBsum" id="5BOM"/>
<dbReference type="PDBsum" id="5BPC"/>
<dbReference type="PDBsum" id="5DB6"/>
<dbReference type="PDBsum" id="5DB7"/>
<dbReference type="PDBsum" id="5DB8"/>
<dbReference type="PDBsum" id="5DB9"/>
<dbReference type="PDBsum" id="5DBA"/>
<dbReference type="PDBsum" id="5DBB"/>
<dbReference type="PDBsum" id="5DBC"/>
<dbReference type="PDBsum" id="5EOZ"/>
<dbReference type="PDBsum" id="5HHH"/>
<dbReference type="PDBsum" id="5HHI"/>
<dbReference type="PDBsum" id="5J0O"/>
<dbReference type="PDBsum" id="5J0P"/>
<dbReference type="PDBsum" id="5J0Q"/>
<dbReference type="PDBsum" id="5J0R"/>
<dbReference type="PDBsum" id="5J0S"/>
<dbReference type="PDBsum" id="5J0T"/>
<dbReference type="PDBsum" id="5J0U"/>
<dbReference type="PDBsum" id="5J0W"/>
<dbReference type="PDBsum" id="5J0X"/>
<dbReference type="PDBsum" id="5J0Y"/>
<dbReference type="PDBsum" id="5J29"/>
<dbReference type="PDBsum" id="5J2A"/>
<dbReference type="PDBsum" id="5J2B"/>
<dbReference type="PDBsum" id="5J2C"/>
<dbReference type="PDBsum" id="5J2D"/>
<dbReference type="PDBsum" id="5J2E"/>
<dbReference type="PDBsum" id="5J2F"/>
<dbReference type="PDBsum" id="5J2G"/>
<dbReference type="PDBsum" id="5J2H"/>
<dbReference type="PDBsum" id="5J2I"/>
<dbReference type="PDBsum" id="5J2J"/>
<dbReference type="PDBsum" id="5J2K"/>
<dbReference type="PDBsum" id="5TB8"/>
<dbReference type="PDBsum" id="5TB9"/>
<dbReference type="PDBsum" id="5TBA"/>
<dbReference type="PDBsum" id="5TBB"/>
<dbReference type="PDBsum" id="5TBC"/>
<dbReference type="PDBsum" id="5TZV"/>
<dbReference type="PDBsum" id="5U2R"/>
<dbReference type="PDBsum" id="5U2S"/>
<dbReference type="PDBsum" id="5U2T"/>
<dbReference type="PDBsum" id="5U8G"/>
<dbReference type="PDBsum" id="5U8H"/>
<dbReference type="PDBsum" id="5U8I"/>
<dbReference type="PDBsum" id="5U9H"/>
<dbReference type="PDBsum" id="5UGN"/>
<dbReference type="PDBsum" id="5UGO"/>
<dbReference type="PDBsum" id="5UGP"/>
<dbReference type="PDBsum" id="5V1F"/>
<dbReference type="PDBsum" id="5V1G"/>
<dbReference type="PDBsum" id="5V1H"/>
<dbReference type="PDBsum" id="5V1I"/>
<dbReference type="PDBsum" id="5V1J"/>
<dbReference type="PDBsum" id="5V1N"/>
<dbReference type="PDBsum" id="5V1O"/>
<dbReference type="PDBsum" id="5V1P"/>
<dbReference type="PDBsum" id="5V1R"/>
<dbReference type="PDBsum" id="5VEZ"/>
<dbReference type="PDBsum" id="5VRW"/>
<dbReference type="PDBsum" id="5VRX"/>
<dbReference type="PDBsum" id="5VRY"/>
<dbReference type="PDBsum" id="5VRZ"/>
<dbReference type="PDBsum" id="5VS0"/>
<dbReference type="PDBsum" id="5VS1"/>
<dbReference type="PDBsum" id="5VS2"/>
<dbReference type="PDBsum" id="5VS3"/>
<dbReference type="PDBsum" id="5VS4"/>
<dbReference type="PDBsum" id="5WNX"/>
<dbReference type="PDBsum" id="5WNY"/>
<dbReference type="PDBsum" id="5WNZ"/>
<dbReference type="PDBsum" id="5WO0"/>
<dbReference type="PDBsum" id="6BEL"/>
<dbReference type="PDBsum" id="6BEM"/>
<dbReference type="PDBsum" id="6BTE"/>
<dbReference type="PDBsum" id="6BTF"/>
<dbReference type="PDBsum" id="6CLY"/>
<dbReference type="PDBsum" id="6CPQ"/>
<dbReference type="PDBsum" id="6CR3"/>
<dbReference type="PDBsum" id="6CR4"/>
<dbReference type="PDBsum" id="6CR5"/>
<dbReference type="PDBsum" id="6CR6"/>
<dbReference type="PDBsum" id="6CR7"/>
<dbReference type="PDBsum" id="6CR8"/>
<dbReference type="PDBsum" id="6CR9"/>
<dbReference type="PDBsum" id="6CRB"/>
<dbReference type="PDBsum" id="6CRC"/>
<dbReference type="PDBsum" id="6CRH"/>
<dbReference type="PDBsum" id="6CTI"/>
<dbReference type="PDBsum" id="6CTJ"/>
<dbReference type="PDBsum" id="6CTK"/>
<dbReference type="PDBsum" id="6CTL"/>
<dbReference type="PDBsum" id="6CTM"/>
<dbReference type="PDBsum" id="6CTN"/>
<dbReference type="PDBsum" id="6CTO"/>
<dbReference type="PDBsum" id="6CTP"/>
<dbReference type="PDBsum" id="6CTQ"/>
<dbReference type="PDBsum" id="6CTR"/>
<dbReference type="PDBsum" id="6CTT"/>
<dbReference type="PDBsum" id="6CTU"/>
<dbReference type="PDBsum" id="6CTV"/>
<dbReference type="PDBsum" id="6CTW"/>
<dbReference type="PDBsum" id="6CTX"/>
<dbReference type="PDBsum" id="6CU9"/>
<dbReference type="PDBsum" id="6CUA"/>
<dbReference type="PDBsum" id="6CUB"/>
<dbReference type="PDBsum" id="6DIA"/>
<dbReference type="PDBsum" id="6DIC"/>
<dbReference type="PDBsum" id="6E3R"/>
<dbReference type="PDBsum" id="6E3V"/>
<dbReference type="PDBsum" id="6E3W"/>
<dbReference type="PDBsum" id="6E3X"/>
<dbReference type="PDBsum" id="6G2Q"/>
<dbReference type="PDBsum" id="6MR7"/>
<dbReference type="PDBsum" id="6MR8"/>
<dbReference type="PDBsum" id="6N2R"/>
<dbReference type="PDBsum" id="6N2S"/>
<dbReference type="PDBsum" id="6N2T"/>
<dbReference type="PDBsum" id="6NKR"/>
<dbReference type="PDBsum" id="6NKS"/>
<dbReference type="PDBsum" id="6NKT"/>
<dbReference type="PDBsum" id="6NKU"/>
<dbReference type="PDBsum" id="6NKV"/>
<dbReference type="PDBsum" id="6NKW"/>
<dbReference type="PDBsum" id="6NKX"/>
<dbReference type="PDBsum" id="6NKY"/>
<dbReference type="PDBsum" id="6NKZ"/>
<dbReference type="PDBsum" id="6NL0"/>
<dbReference type="PDBsum" id="6PH5"/>
<dbReference type="PDBsum" id="6PH6"/>
<dbReference type="PDBsum" id="6PKZ"/>
<dbReference type="PDBsum" id="6U2O"/>
<dbReference type="PDBsum" id="6U6B"/>
<dbReference type="PDBsum" id="6UOK"/>
<dbReference type="PDBsum" id="6UOL"/>
<dbReference type="PDBsum" id="6UOM"/>
<dbReference type="PDBsum" id="6W2M"/>
<dbReference type="PDBsum" id="7ICE"/>
<dbReference type="PDBsum" id="7ICF"/>
<dbReference type="PDBsum" id="7ICG"/>
<dbReference type="PDBsum" id="7ICH"/>
<dbReference type="PDBsum" id="7ICI"/>
<dbReference type="PDBsum" id="7ICJ"/>
<dbReference type="PDBsum" id="7ICK"/>
<dbReference type="PDBsum" id="7ICL"/>
<dbReference type="PDBsum" id="7ICM"/>
<dbReference type="PDBsum" id="7ICN"/>
<dbReference type="PDBsum" id="7ICO"/>
<dbReference type="PDBsum" id="7ICP"/>
<dbReference type="PDBsum" id="7ICQ"/>
<dbReference type="PDBsum" id="7ICR"/>
<dbReference type="PDBsum" id="7ICS"/>
<dbReference type="PDBsum" id="7ICT"/>
<dbReference type="PDBsum" id="7ICU"/>
<dbReference type="PDBsum" id="7ICV"/>
<dbReference type="PDBsum" id="7K96"/>
<dbReference type="PDBsum" id="7K97"/>
<dbReference type="PDBsum" id="7MZ0"/>
<dbReference type="PDBsum" id="7MZ1"/>
<dbReference type="PDBsum" id="7MZ2"/>
<dbReference type="PDBsum" id="7MZ3"/>
<dbReference type="PDBsum" id="7MZ4"/>
<dbReference type="PDBsum" id="7MZ8"/>
<dbReference type="PDBsum" id="7RBE"/>
<dbReference type="PDBsum" id="7RBF"/>
<dbReference type="PDBsum" id="7RBG"/>
<dbReference type="PDBsum" id="7RBH"/>
<dbReference type="PDBsum" id="7RBI"/>
<dbReference type="PDBsum" id="7RBJ"/>
<dbReference type="PDBsum" id="7RBK"/>
<dbReference type="PDBsum" id="7RBL"/>
<dbReference type="PDBsum" id="7RBM"/>
<dbReference type="PDBsum" id="7RBN"/>
<dbReference type="PDBsum" id="7RBO"/>
<dbReference type="PDBsum" id="7S9J"/>
<dbReference type="PDBsum" id="7S9K"/>
<dbReference type="PDBsum" id="7S9L"/>
<dbReference type="PDBsum" id="7S9M"/>
<dbReference type="PDBsum" id="7S9N"/>
<dbReference type="PDBsum" id="7S9O"/>
<dbReference type="PDBsum" id="7S9P"/>
<dbReference type="PDBsum" id="7S9Q"/>
<dbReference type="PDBsum" id="8ICA"/>
<dbReference type="PDBsum" id="8ICB"/>
<dbReference type="PDBsum" id="8ICC"/>
<dbReference type="PDBsum" id="8ICE"/>
<dbReference type="PDBsum" id="8ICF"/>
<dbReference type="PDBsum" id="8ICG"/>
<dbReference type="PDBsum" id="8ICH"/>
<dbReference type="PDBsum" id="8ICI"/>
<dbReference type="PDBsum" id="8ICJ"/>
<dbReference type="PDBsum" id="8ICK"/>
<dbReference type="PDBsum" id="8ICL"/>
<dbReference type="PDBsum" id="8ICM"/>
<dbReference type="PDBsum" id="8ICN"/>
<dbReference type="PDBsum" id="8ICO"/>
<dbReference type="PDBsum" id="8ICP"/>
<dbReference type="PDBsum" id="8ICQ"/>
<dbReference type="PDBsum" id="8ICR"/>
<dbReference type="PDBsum" id="8ICS"/>
<dbReference type="PDBsum" id="8ICT"/>
<dbReference type="PDBsum" id="8ICU"/>
<dbReference type="PDBsum" id="8ICV"/>
<dbReference type="PDBsum" id="8ICW"/>
<dbReference type="PDBsum" id="8ICX"/>
<dbReference type="PDBsum" id="8ICY"/>
<dbReference type="PDBsum" id="8ICZ"/>
<dbReference type="PDBsum" id="8VF8"/>
<dbReference type="PDBsum" id="8VF9"/>
<dbReference type="PDBsum" id="8VFA"/>
<dbReference type="PDBsum" id="8VFB"/>
<dbReference type="PDBsum" id="8VFC"/>
<dbReference type="PDBsum" id="8VFD"/>
<dbReference type="PDBsum" id="8VFE"/>
<dbReference type="PDBsum" id="8VFF"/>
<dbReference type="PDBsum" id="8VFG"/>
<dbReference type="PDBsum" id="8VFH"/>
<dbReference type="PDBsum" id="8VFI"/>
<dbReference type="PDBsum" id="8VFJ"/>
<dbReference type="PDBsum" id="9DWG"/>
<dbReference type="PDBsum" id="9DWH"/>
<dbReference type="PDBsum" id="9DWI"/>
<dbReference type="PDBsum" id="9DWK"/>
<dbReference type="PDBsum" id="9DWM"/>
<dbReference type="PDBsum" id="9ICA"/>
<dbReference type="PDBsum" id="9ICB"/>
<dbReference type="PDBsum" id="9ICC"/>
<dbReference type="PDBsum" id="9ICE"/>
<dbReference type="PDBsum" id="9ICF"/>
<dbReference type="PDBsum" id="9ICG"/>
<dbReference type="PDBsum" id="9ICH"/>
<dbReference type="PDBsum" id="9ICI"/>
<dbReference type="PDBsum" id="9ICJ"/>
<dbReference type="PDBsum" id="9ICK"/>
<dbReference type="PDBsum" id="9ICL"/>
<dbReference type="PDBsum" id="9ICM"/>
<dbReference type="PDBsum" id="9ICN"/>
<dbReference type="PDBsum" id="9ICO"/>
<dbReference type="PDBsum" id="9ICP"/>
<dbReference type="PDBsum" id="9ICQ"/>
<dbReference type="PDBsum" id="9ICR"/>
<dbReference type="PDBsum" id="9ICS"/>
<dbReference type="PDBsum" id="9ICT"/>
<dbReference type="PDBsum" id="9ICU"/>
<dbReference type="PDBsum" id="9ICV"/>
<dbReference type="PDBsum" id="9ICW"/>
<dbReference type="PDBsum" id="9ICX"/>
<dbReference type="PDBsum" id="9ICY"/>
<dbReference type="BMRB" id="P06746"/>
<dbReference type="EMDB" id="EMD-47243"/>
<dbReference type="EMDB" id="EMD-47246"/>
<dbReference type="EMDB" id="EMD-47249"/>
<dbReference type="EMDB" id="EMD-47253"/>
<dbReference type="EMDB" id="EMD-47255"/>
<dbReference type="SMR" id="P06746"/>
<dbReference type="BioGRID" id="111419">
    <property type="interactions" value="68"/>
</dbReference>
<dbReference type="ComplexPortal" id="CPX-793">
    <property type="entry name" value="XRCC1 DNA repair complex"/>
</dbReference>
<dbReference type="CORUM" id="P06746"/>
<dbReference type="FunCoup" id="P06746">
    <property type="interactions" value="1306"/>
</dbReference>
<dbReference type="IntAct" id="P06746">
    <property type="interactions" value="43"/>
</dbReference>
<dbReference type="MINT" id="P06746"/>
<dbReference type="STRING" id="9606.ENSP00000265421"/>
<dbReference type="BindingDB" id="P06746"/>
<dbReference type="ChEMBL" id="CHEMBL2392"/>
<dbReference type="DrugBank" id="DB07479">
    <property type="generic name" value="(1S)-1,2,3,4-TETRAHYDRO-BENZO[C]PHENANTHRENE-2,3,4-TRIOL"/>
</dbReference>
<dbReference type="DrugBank" id="DB16071">
    <property type="generic name" value="4'-Thio-fac"/>
</dbReference>
<dbReference type="DrugBank" id="DB12151">
    <property type="generic name" value="Brincidofovir"/>
</dbReference>
<dbReference type="DrugBank" id="DB00987">
    <property type="generic name" value="Cytarabine"/>
</dbReference>
<dbReference type="DrugBank" id="DB03222">
    <property type="generic name" value="dATP"/>
</dbReference>
<dbReference type="DrugBank" id="DB14490">
    <property type="generic name" value="Ferrous ascorbate"/>
</dbReference>
<dbReference type="DrugBank" id="DB14491">
    <property type="generic name" value="Ferrous fumarate"/>
</dbReference>
<dbReference type="DrugBank" id="DB14488">
    <property type="generic name" value="Ferrous gluconate"/>
</dbReference>
<dbReference type="DrugBank" id="DB14501">
    <property type="generic name" value="Ferrous glycine sulfate"/>
</dbReference>
<dbReference type="DrugBank" id="DB14489">
    <property type="generic name" value="Ferrous succinate"/>
</dbReference>
<dbReference type="DrugBank" id="DB01592">
    <property type="generic name" value="Iron"/>
</dbReference>
<dbReference type="DrugCentral" id="P06746"/>
<dbReference type="GuidetoPHARMACOLOGY" id="3231"/>
<dbReference type="GlyGen" id="P06746">
    <property type="glycosylation" value="1 site, 1 O-linked glycan (1 site)"/>
</dbReference>
<dbReference type="iPTMnet" id="P06746"/>
<dbReference type="PhosphoSitePlus" id="P06746"/>
<dbReference type="BioMuta" id="POLB"/>
<dbReference type="DMDM" id="544186"/>
<dbReference type="jPOST" id="P06746"/>
<dbReference type="MassIVE" id="P06746"/>
<dbReference type="PaxDb" id="9606-ENSP00000265421"/>
<dbReference type="PeptideAtlas" id="P06746"/>
<dbReference type="ProteomicsDB" id="51926"/>
<dbReference type="Pumba" id="P06746"/>
<dbReference type="Antibodypedia" id="3175">
    <property type="antibodies" value="406 antibodies from 35 providers"/>
</dbReference>
<dbReference type="CPTC" id="P06746">
    <property type="antibodies" value="1 antibody"/>
</dbReference>
<dbReference type="DNASU" id="5423"/>
<dbReference type="Ensembl" id="ENST00000265421.9">
    <property type="protein sequence ID" value="ENSP00000265421.4"/>
    <property type="gene ID" value="ENSG00000070501.12"/>
</dbReference>
<dbReference type="GeneID" id="5423"/>
<dbReference type="KEGG" id="hsa:5423"/>
<dbReference type="MANE-Select" id="ENST00000265421.9">
    <property type="protein sequence ID" value="ENSP00000265421.4"/>
    <property type="RefSeq nucleotide sequence ID" value="NM_002690.3"/>
    <property type="RefSeq protein sequence ID" value="NP_002681.1"/>
</dbReference>
<dbReference type="UCSC" id="uc003xoz.3">
    <property type="organism name" value="human"/>
</dbReference>
<dbReference type="AGR" id="HGNC:9174"/>
<dbReference type="CTD" id="5423"/>
<dbReference type="DisGeNET" id="5423"/>
<dbReference type="GeneCards" id="POLB"/>
<dbReference type="HGNC" id="HGNC:9174">
    <property type="gene designation" value="POLB"/>
</dbReference>
<dbReference type="HPA" id="ENSG00000070501">
    <property type="expression patterns" value="Tissue enhanced (brain)"/>
</dbReference>
<dbReference type="MIM" id="174760">
    <property type="type" value="gene"/>
</dbReference>
<dbReference type="neXtProt" id="NX_P06746"/>
<dbReference type="OpenTargets" id="ENSG00000070501"/>
<dbReference type="PharmGKB" id="PA276"/>
<dbReference type="VEuPathDB" id="HostDB:ENSG00000070501"/>
<dbReference type="eggNOG" id="KOG2534">
    <property type="taxonomic scope" value="Eukaryota"/>
</dbReference>
<dbReference type="GeneTree" id="ENSGT00940000156918"/>
<dbReference type="HOGENOM" id="CLU_008698_1_0_1"/>
<dbReference type="InParanoid" id="P06746"/>
<dbReference type="OMA" id="ERDVFDW"/>
<dbReference type="OrthoDB" id="205514at2759"/>
<dbReference type="PAN-GO" id="P06746">
    <property type="GO annotations" value="4 GO annotations based on evolutionary models"/>
</dbReference>
<dbReference type="PhylomeDB" id="P06746"/>
<dbReference type="TreeFam" id="TF103002"/>
<dbReference type="BRENDA" id="2.7.7.7">
    <property type="organism ID" value="2681"/>
</dbReference>
<dbReference type="BRENDA" id="4.2.99.B1">
    <property type="organism ID" value="2681"/>
</dbReference>
<dbReference type="PathwayCommons" id="P06746"/>
<dbReference type="Reactome" id="R-HSA-110362">
    <property type="pathway name" value="POLB-Dependent Long Patch Base Excision Repair"/>
</dbReference>
<dbReference type="Reactome" id="R-HSA-110373">
    <property type="pathway name" value="Resolution of AP sites via the multiple-nucleotide patch replacement pathway"/>
</dbReference>
<dbReference type="Reactome" id="R-HSA-110381">
    <property type="pathway name" value="Resolution of AP sites via the single-nucleotide replacement pathway"/>
</dbReference>
<dbReference type="Reactome" id="R-HSA-5649702">
    <property type="pathway name" value="APEX1-Independent Resolution of AP Sites via the Single Nucleotide Replacement Pathway"/>
</dbReference>
<dbReference type="Reactome" id="R-HSA-5651801">
    <property type="pathway name" value="PCNA-Dependent Long Patch Base Excision Repair"/>
</dbReference>
<dbReference type="Reactome" id="R-HSA-5689880">
    <property type="pathway name" value="Ub-specific processing proteases"/>
</dbReference>
<dbReference type="Reactome" id="R-HSA-73930">
    <property type="pathway name" value="Abasic sugar-phosphate removal via the single-nucleotide replacement pathway"/>
</dbReference>
<dbReference type="SignaLink" id="P06746"/>
<dbReference type="SIGNOR" id="P06746"/>
<dbReference type="BioGRID-ORCS" id="5423">
    <property type="hits" value="11 hits in 1165 CRISPR screens"/>
</dbReference>
<dbReference type="ChiTaRS" id="POLB">
    <property type="organism name" value="human"/>
</dbReference>
<dbReference type="EvolutionaryTrace" id="P06746"/>
<dbReference type="GeneWiki" id="DNA_polymerase_beta"/>
<dbReference type="GenomeRNAi" id="5423"/>
<dbReference type="Pharos" id="P06746">
    <property type="development level" value="Tchem"/>
</dbReference>
<dbReference type="PRO" id="PR:P06746"/>
<dbReference type="Proteomes" id="UP000005640">
    <property type="component" value="Chromosome 8"/>
</dbReference>
<dbReference type="RNAct" id="P06746">
    <property type="molecule type" value="protein"/>
</dbReference>
<dbReference type="Bgee" id="ENSG00000070501">
    <property type="expression patterns" value="Expressed in oocyte and 197 other cell types or tissues"/>
</dbReference>
<dbReference type="ExpressionAtlas" id="P06746">
    <property type="expression patterns" value="baseline and differential"/>
</dbReference>
<dbReference type="GO" id="GO:0005737">
    <property type="term" value="C:cytoplasm"/>
    <property type="evidence" value="ECO:0000314"/>
    <property type="project" value="UniProtKB"/>
</dbReference>
<dbReference type="GO" id="GO:0005874">
    <property type="term" value="C:microtubule"/>
    <property type="evidence" value="ECO:0000314"/>
    <property type="project" value="MGI"/>
</dbReference>
<dbReference type="GO" id="GO:0005654">
    <property type="term" value="C:nucleoplasm"/>
    <property type="evidence" value="ECO:0000304"/>
    <property type="project" value="Reactome"/>
</dbReference>
<dbReference type="GO" id="GO:0005634">
    <property type="term" value="C:nucleus"/>
    <property type="evidence" value="ECO:0000314"/>
    <property type="project" value="UniProtKB"/>
</dbReference>
<dbReference type="GO" id="GO:0032991">
    <property type="term" value="C:protein-containing complex"/>
    <property type="evidence" value="ECO:0000314"/>
    <property type="project" value="MGI"/>
</dbReference>
<dbReference type="GO" id="GO:0005876">
    <property type="term" value="C:spindle microtubule"/>
    <property type="evidence" value="ECO:0000314"/>
    <property type="project" value="MGI"/>
</dbReference>
<dbReference type="GO" id="GO:0051575">
    <property type="term" value="F:5'-deoxyribose-5-phosphate lyase activity"/>
    <property type="evidence" value="ECO:0000314"/>
    <property type="project" value="UniProtKB"/>
</dbReference>
<dbReference type="GO" id="GO:0140078">
    <property type="term" value="F:class I DNA-(apurinic or apyrimidinic site) endonuclease activity"/>
    <property type="evidence" value="ECO:0000314"/>
    <property type="project" value="UniProtKB"/>
</dbReference>
<dbReference type="GO" id="GO:0003684">
    <property type="term" value="F:damaged DNA binding"/>
    <property type="evidence" value="ECO:0007669"/>
    <property type="project" value="Ensembl"/>
</dbReference>
<dbReference type="GO" id="GO:0003906">
    <property type="term" value="F:DNA-(apurinic or apyrimidinic site) endonuclease activity"/>
    <property type="evidence" value="ECO:0000304"/>
    <property type="project" value="Reactome"/>
</dbReference>
<dbReference type="GO" id="GO:0003887">
    <property type="term" value="F:DNA-directed DNA polymerase activity"/>
    <property type="evidence" value="ECO:0000314"/>
    <property type="project" value="UniProtKB"/>
</dbReference>
<dbReference type="GO" id="GO:0019899">
    <property type="term" value="F:enzyme binding"/>
    <property type="evidence" value="ECO:0000353"/>
    <property type="project" value="UniProtKB"/>
</dbReference>
<dbReference type="GO" id="GO:0016829">
    <property type="term" value="F:lyase activity"/>
    <property type="evidence" value="ECO:0000314"/>
    <property type="project" value="UniProtKB"/>
</dbReference>
<dbReference type="GO" id="GO:0046872">
    <property type="term" value="F:metal ion binding"/>
    <property type="evidence" value="ECO:0007669"/>
    <property type="project" value="UniProtKB-KW"/>
</dbReference>
<dbReference type="GO" id="GO:0008017">
    <property type="term" value="F:microtubule binding"/>
    <property type="evidence" value="ECO:0000314"/>
    <property type="project" value="MGI"/>
</dbReference>
<dbReference type="GO" id="GO:0006284">
    <property type="term" value="P:base-excision repair"/>
    <property type="evidence" value="ECO:0000314"/>
    <property type="project" value="UniProtKB"/>
</dbReference>
<dbReference type="GO" id="GO:0006287">
    <property type="term" value="P:base-excision repair, gap-filling"/>
    <property type="evidence" value="ECO:0000304"/>
    <property type="project" value="Reactome"/>
</dbReference>
<dbReference type="GO" id="GO:0006974">
    <property type="term" value="P:DNA damage response"/>
    <property type="evidence" value="ECO:0000315"/>
    <property type="project" value="UniProtKB"/>
</dbReference>
<dbReference type="GO" id="GO:0006281">
    <property type="term" value="P:DNA repair"/>
    <property type="evidence" value="ECO:0000304"/>
    <property type="project" value="ProtInc"/>
</dbReference>
<dbReference type="GO" id="GO:0006261">
    <property type="term" value="P:DNA-templated DNA replication"/>
    <property type="evidence" value="ECO:0000304"/>
    <property type="project" value="ProtInc"/>
</dbReference>
<dbReference type="GO" id="GO:0006303">
    <property type="term" value="P:double-strand break repair via nonhomologous end joining"/>
    <property type="evidence" value="ECO:0000318"/>
    <property type="project" value="GO_Central"/>
</dbReference>
<dbReference type="GO" id="GO:0048872">
    <property type="term" value="P:homeostasis of number of cells"/>
    <property type="evidence" value="ECO:0007669"/>
    <property type="project" value="Ensembl"/>
</dbReference>
<dbReference type="GO" id="GO:0071707">
    <property type="term" value="P:immunoglobulin heavy chain V-D-J recombination"/>
    <property type="evidence" value="ECO:0007669"/>
    <property type="project" value="Ensembl"/>
</dbReference>
<dbReference type="GO" id="GO:0001701">
    <property type="term" value="P:in utero embryonic development"/>
    <property type="evidence" value="ECO:0007669"/>
    <property type="project" value="Ensembl"/>
</dbReference>
<dbReference type="GO" id="GO:0006954">
    <property type="term" value="P:inflammatory response"/>
    <property type="evidence" value="ECO:0007669"/>
    <property type="project" value="Ensembl"/>
</dbReference>
<dbReference type="GO" id="GO:0008630">
    <property type="term" value="P:intrinsic apoptotic signaling pathway in response to DNA damage"/>
    <property type="evidence" value="ECO:0007669"/>
    <property type="project" value="Ensembl"/>
</dbReference>
<dbReference type="GO" id="GO:0048535">
    <property type="term" value="P:lymph node development"/>
    <property type="evidence" value="ECO:0007669"/>
    <property type="project" value="Ensembl"/>
</dbReference>
<dbReference type="GO" id="GO:0051402">
    <property type="term" value="P:neuron apoptotic process"/>
    <property type="evidence" value="ECO:0007669"/>
    <property type="project" value="Ensembl"/>
</dbReference>
<dbReference type="GO" id="GO:0006290">
    <property type="term" value="P:pyrimidine dimer repair"/>
    <property type="evidence" value="ECO:0007669"/>
    <property type="project" value="Ensembl"/>
</dbReference>
<dbReference type="GO" id="GO:0045471">
    <property type="term" value="P:response to ethanol"/>
    <property type="evidence" value="ECO:0007669"/>
    <property type="project" value="Ensembl"/>
</dbReference>
<dbReference type="GO" id="GO:0010332">
    <property type="term" value="P:response to gamma radiation"/>
    <property type="evidence" value="ECO:0007669"/>
    <property type="project" value="Ensembl"/>
</dbReference>
<dbReference type="GO" id="GO:0055093">
    <property type="term" value="P:response to hyperoxia"/>
    <property type="evidence" value="ECO:0007669"/>
    <property type="project" value="Ensembl"/>
</dbReference>
<dbReference type="GO" id="GO:0007435">
    <property type="term" value="P:salivary gland morphogenesis"/>
    <property type="evidence" value="ECO:0007669"/>
    <property type="project" value="Ensembl"/>
</dbReference>
<dbReference type="GO" id="GO:0016446">
    <property type="term" value="P:somatic hypermutation of immunoglobulin genes"/>
    <property type="evidence" value="ECO:0007669"/>
    <property type="project" value="Ensembl"/>
</dbReference>
<dbReference type="GO" id="GO:0048536">
    <property type="term" value="P:spleen development"/>
    <property type="evidence" value="ECO:0007669"/>
    <property type="project" value="Ensembl"/>
</dbReference>
<dbReference type="CDD" id="cd00141">
    <property type="entry name" value="NT_POLXc"/>
    <property type="match status" value="1"/>
</dbReference>
<dbReference type="FunFam" id="1.10.150.110:FF:000002">
    <property type="entry name" value="DNA polymerase beta"/>
    <property type="match status" value="1"/>
</dbReference>
<dbReference type="FunFam" id="1.10.150.20:FF:000026">
    <property type="entry name" value="DNA polymerase beta"/>
    <property type="match status" value="1"/>
</dbReference>
<dbReference type="FunFam" id="3.30.210.10:FF:000008">
    <property type="entry name" value="DNA polymerase beta"/>
    <property type="match status" value="1"/>
</dbReference>
<dbReference type="FunFam" id="3.30.460.10:FF:000021">
    <property type="entry name" value="DNA polymerase beta"/>
    <property type="match status" value="1"/>
</dbReference>
<dbReference type="Gene3D" id="1.10.150.20">
    <property type="entry name" value="5' to 3' exonuclease, C-terminal subdomain"/>
    <property type="match status" value="1"/>
</dbReference>
<dbReference type="Gene3D" id="3.30.460.10">
    <property type="entry name" value="Beta Polymerase, domain 2"/>
    <property type="match status" value="1"/>
</dbReference>
<dbReference type="Gene3D" id="1.10.150.110">
    <property type="entry name" value="DNA polymerase beta, N-terminal domain-like"/>
    <property type="match status" value="1"/>
</dbReference>
<dbReference type="Gene3D" id="3.30.210.10">
    <property type="entry name" value="DNA polymerase, thumb domain"/>
    <property type="match status" value="1"/>
</dbReference>
<dbReference type="InterPro" id="IPR002054">
    <property type="entry name" value="DNA-dir_DNA_pol_X"/>
</dbReference>
<dbReference type="InterPro" id="IPR019843">
    <property type="entry name" value="DNA_pol-X_BS"/>
</dbReference>
<dbReference type="InterPro" id="IPR010996">
    <property type="entry name" value="DNA_pol_b-like_N"/>
</dbReference>
<dbReference type="InterPro" id="IPR028207">
    <property type="entry name" value="DNA_pol_B_palm_palm"/>
</dbReference>
<dbReference type="InterPro" id="IPR018944">
    <property type="entry name" value="DNA_pol_lambd_fingers_domain"/>
</dbReference>
<dbReference type="InterPro" id="IPR027421">
    <property type="entry name" value="DNA_pol_lamdba_lyase_dom_sf"/>
</dbReference>
<dbReference type="InterPro" id="IPR037160">
    <property type="entry name" value="DNA_Pol_thumb_sf"/>
</dbReference>
<dbReference type="InterPro" id="IPR022312">
    <property type="entry name" value="DNA_pol_X"/>
</dbReference>
<dbReference type="InterPro" id="IPR002008">
    <property type="entry name" value="DNA_pol_X_beta-like"/>
</dbReference>
<dbReference type="InterPro" id="IPR003583">
    <property type="entry name" value="Hlx-hairpin-Hlx_DNA-bd_motif"/>
</dbReference>
<dbReference type="InterPro" id="IPR043519">
    <property type="entry name" value="NT_sf"/>
</dbReference>
<dbReference type="InterPro" id="IPR029398">
    <property type="entry name" value="PolB_thumb"/>
</dbReference>
<dbReference type="PANTHER" id="PTHR11276:SF42">
    <property type="entry name" value="DNA POLYMERASE BETA"/>
    <property type="match status" value="1"/>
</dbReference>
<dbReference type="PANTHER" id="PTHR11276">
    <property type="entry name" value="DNA POLYMERASE TYPE-X FAMILY MEMBER"/>
    <property type="match status" value="1"/>
</dbReference>
<dbReference type="Pfam" id="PF14792">
    <property type="entry name" value="DNA_pol_B_palm"/>
    <property type="match status" value="1"/>
</dbReference>
<dbReference type="Pfam" id="PF14791">
    <property type="entry name" value="DNA_pol_B_thumb"/>
    <property type="match status" value="1"/>
</dbReference>
<dbReference type="Pfam" id="PF10391">
    <property type="entry name" value="DNA_pol_lambd_f"/>
    <property type="match status" value="1"/>
</dbReference>
<dbReference type="Pfam" id="PF14716">
    <property type="entry name" value="HHH_8"/>
    <property type="match status" value="1"/>
</dbReference>
<dbReference type="PRINTS" id="PR00869">
    <property type="entry name" value="DNAPOLX"/>
</dbReference>
<dbReference type="PRINTS" id="PR00870">
    <property type="entry name" value="DNAPOLXBETA"/>
</dbReference>
<dbReference type="SMART" id="SM00278">
    <property type="entry name" value="HhH1"/>
    <property type="match status" value="2"/>
</dbReference>
<dbReference type="SMART" id="SM00483">
    <property type="entry name" value="POLXc"/>
    <property type="match status" value="1"/>
</dbReference>
<dbReference type="SUPFAM" id="SSF47802">
    <property type="entry name" value="DNA polymerase beta, N-terminal domain-like"/>
    <property type="match status" value="1"/>
</dbReference>
<dbReference type="SUPFAM" id="SSF81301">
    <property type="entry name" value="Nucleotidyltransferase"/>
    <property type="match status" value="1"/>
</dbReference>
<dbReference type="SUPFAM" id="SSF81585">
    <property type="entry name" value="PsbU/PolX domain-like"/>
    <property type="match status" value="1"/>
</dbReference>
<dbReference type="PROSITE" id="PS00522">
    <property type="entry name" value="DNA_POLYMERASE_X"/>
    <property type="match status" value="1"/>
</dbReference>